<keyword id="KW-0150">Chloroplast</keyword>
<keyword id="KW-0934">Plastid</keyword>
<keyword id="KW-1185">Reference proteome</keyword>
<keyword id="KW-0687">Ribonucleoprotein</keyword>
<keyword id="KW-0689">Ribosomal protein</keyword>
<name>RK32_WHEAT</name>
<accession>Q95H45</accession>
<organism>
    <name type="scientific">Triticum aestivum</name>
    <name type="common">Wheat</name>
    <dbReference type="NCBI Taxonomy" id="4565"/>
    <lineage>
        <taxon>Eukaryota</taxon>
        <taxon>Viridiplantae</taxon>
        <taxon>Streptophyta</taxon>
        <taxon>Embryophyta</taxon>
        <taxon>Tracheophyta</taxon>
        <taxon>Spermatophyta</taxon>
        <taxon>Magnoliopsida</taxon>
        <taxon>Liliopsida</taxon>
        <taxon>Poales</taxon>
        <taxon>Poaceae</taxon>
        <taxon>BOP clade</taxon>
        <taxon>Pooideae</taxon>
        <taxon>Triticodae</taxon>
        <taxon>Triticeae</taxon>
        <taxon>Triticinae</taxon>
        <taxon>Triticum</taxon>
    </lineage>
</organism>
<gene>
    <name evidence="1" type="primary">rpl32</name>
</gene>
<feature type="chain" id="PRO_0000172483" description="Large ribosomal subunit protein bL32c">
    <location>
        <begin position="1"/>
        <end position="63"/>
    </location>
</feature>
<feature type="region of interest" description="Disordered" evidence="2">
    <location>
        <begin position="39"/>
        <end position="63"/>
    </location>
</feature>
<feature type="compositionally biased region" description="Polar residues" evidence="2">
    <location>
        <begin position="53"/>
        <end position="63"/>
    </location>
</feature>
<evidence type="ECO:0000255" key="1">
    <source>
        <dbReference type="HAMAP-Rule" id="MF_00340"/>
    </source>
</evidence>
<evidence type="ECO:0000256" key="2">
    <source>
        <dbReference type="SAM" id="MobiDB-lite"/>
    </source>
</evidence>
<evidence type="ECO:0000305" key="3"/>
<comment type="subcellular location">
    <subcellularLocation>
        <location>Plastid</location>
        <location>Chloroplast</location>
    </subcellularLocation>
</comment>
<comment type="similarity">
    <text evidence="1">Belongs to the bacterial ribosomal protein bL32 family.</text>
</comment>
<dbReference type="EMBL" id="AB042240">
    <property type="protein sequence ID" value="BAB47083.1"/>
    <property type="molecule type" value="Genomic_DNA"/>
</dbReference>
<dbReference type="RefSeq" id="NP_114306.1">
    <property type="nucleotide sequence ID" value="NC_002762.1"/>
</dbReference>
<dbReference type="SMR" id="Q95H45"/>
<dbReference type="STRING" id="4565.Q95H45"/>
<dbReference type="PaxDb" id="4565-EPlTAEP00000010017"/>
<dbReference type="EnsemblPlants" id="TraesARI5B03G02923560.1">
    <property type="protein sequence ID" value="TraesARI5B03G02923560.1.CDS1"/>
    <property type="gene ID" value="TraesARI5B03G02923560"/>
</dbReference>
<dbReference type="EnsemblPlants" id="TraesCAD_scaffold_244212_01G000200.1">
    <property type="protein sequence ID" value="TraesCAD_scaffold_244212_01G000200.1"/>
    <property type="gene ID" value="TraesCAD_scaffold_244212_01G000200"/>
</dbReference>
<dbReference type="EnsemblPlants" id="TraesCS3B02G188600.1">
    <property type="protein sequence ID" value="TraesCS3B02G188600.1.cds1"/>
    <property type="gene ID" value="TraesCS3B02G188600"/>
</dbReference>
<dbReference type="EnsemblPlants" id="TraesCS3B03G0454000.1">
    <property type="protein sequence ID" value="TraesCS3B03G0454000.1.CDS1"/>
    <property type="gene ID" value="TraesCS3B03G0454000"/>
</dbReference>
<dbReference type="EnsemblPlants" id="TraesJAG7B03G04074710.1">
    <property type="protein sequence ID" value="TraesJAG7B03G04074710.1.CDS1"/>
    <property type="gene ID" value="TraesJAG7B03G04074710"/>
</dbReference>
<dbReference type="EnsemblPlants" id="TraesJUL1B03G00215620.1">
    <property type="protein sequence ID" value="TraesJUL1B03G00215620.1.CDS1"/>
    <property type="gene ID" value="TraesJUL1B03G00215620"/>
</dbReference>
<dbReference type="EnsemblPlants" id="TraesJUL7B03G04129920.1">
    <property type="protein sequence ID" value="TraesJUL7B03G04129920.1.CDS1"/>
    <property type="gene ID" value="TraesJUL7B03G04129920"/>
</dbReference>
<dbReference type="EnsemblPlants" id="TraesKAR4A01G0000250.1">
    <property type="protein sequence ID" value="cds.TraesKAR4A01G0000250.1"/>
    <property type="gene ID" value="TraesKAR4A01G0000250"/>
</dbReference>
<dbReference type="EnsemblPlants" id="TraesKAR6B01G0219060.1">
    <property type="protein sequence ID" value="cds.TraesKAR6B01G0219060.1"/>
    <property type="gene ID" value="TraesKAR6B01G0219060"/>
</dbReference>
<dbReference type="EnsemblPlants" id="TraesKAR6B01G0220030.1">
    <property type="protein sequence ID" value="cds.TraesKAR6B01G0220030.1"/>
    <property type="gene ID" value="TraesKAR6B01G0220030"/>
</dbReference>
<dbReference type="EnsemblPlants" id="TraesKAR7B01G0098620.1">
    <property type="protein sequence ID" value="cds.TraesKAR7B01G0098620.1"/>
    <property type="gene ID" value="TraesKAR7B01G0098620"/>
</dbReference>
<dbReference type="EnsemblPlants" id="TraesKARUn01G0025850.1">
    <property type="protein sequence ID" value="cds.TraesKARUn01G0025850.1"/>
    <property type="gene ID" value="TraesKARUn01G0025850"/>
</dbReference>
<dbReference type="EnsemblPlants" id="TraesKARUn01G0025890.1">
    <property type="protein sequence ID" value="cds.TraesKARUn01G0025890.1"/>
    <property type="gene ID" value="TraesKARUn01G0025890"/>
</dbReference>
<dbReference type="EnsemblPlants" id="TraesKARUn01G0025970.1">
    <property type="protein sequence ID" value="cds.TraesKARUn01G0025970.1"/>
    <property type="gene ID" value="TraesKARUn01G0025970"/>
</dbReference>
<dbReference type="EnsemblPlants" id="TraesKARUn01G0026090.1">
    <property type="protein sequence ID" value="cds.TraesKARUn01G0026090.1"/>
    <property type="gene ID" value="TraesKARUn01G0026090"/>
</dbReference>
<dbReference type="EnsemblPlants" id="TraesKARUn01G0026280.1">
    <property type="protein sequence ID" value="cds.TraesKARUn01G0026280.1"/>
    <property type="gene ID" value="TraesKARUn01G0026280"/>
</dbReference>
<dbReference type="EnsemblPlants" id="TraesKARUn01G0026400.1">
    <property type="protein sequence ID" value="cds.TraesKARUn01G0026400.1"/>
    <property type="gene ID" value="TraesKARUn01G0026400"/>
</dbReference>
<dbReference type="EnsemblPlants" id="TraesKARUn01G0027580.1">
    <property type="protein sequence ID" value="cds.TraesKARUn01G0027580.1"/>
    <property type="gene ID" value="TraesKARUn01G0027580"/>
</dbReference>
<dbReference type="EnsemblPlants" id="TraesKARUn01G0027790.1">
    <property type="protein sequence ID" value="cds.TraesKARUn01G0027790.1"/>
    <property type="gene ID" value="TraesKARUn01G0027790"/>
</dbReference>
<dbReference type="EnsemblPlants" id="TraesKARUn01G0027950.1">
    <property type="protein sequence ID" value="cds.TraesKARUn01G0027950.1"/>
    <property type="gene ID" value="TraesKARUn01G0027950"/>
</dbReference>
<dbReference type="EnsemblPlants" id="TraesKARUn01G0028280.1">
    <property type="protein sequence ID" value="cds.TraesKARUn01G0028280.1"/>
    <property type="gene ID" value="TraesKARUn01G0028280"/>
</dbReference>
<dbReference type="EnsemblPlants" id="TraesKARUn01G0028560.1">
    <property type="protein sequence ID" value="cds.TraesKARUn01G0028560.1"/>
    <property type="gene ID" value="TraesKARUn01G0028560"/>
</dbReference>
<dbReference type="EnsemblPlants" id="TraesKARUn01G0028660.1">
    <property type="protein sequence ID" value="cds.TraesKARUn01G0028660.1"/>
    <property type="gene ID" value="TraesKARUn01G0028660"/>
</dbReference>
<dbReference type="EnsemblPlants" id="TraesKARUn01G0029160.1">
    <property type="protein sequence ID" value="cds.TraesKARUn01G0029160.1"/>
    <property type="gene ID" value="TraesKARUn01G0029160"/>
</dbReference>
<dbReference type="EnsemblPlants" id="TraesKARUn01G0029390.1">
    <property type="protein sequence ID" value="cds.TraesKARUn01G0029390.1"/>
    <property type="gene ID" value="TraesKARUn01G0029390"/>
</dbReference>
<dbReference type="EnsemblPlants" id="TraesKARUn01G0029420.1">
    <property type="protein sequence ID" value="cds.TraesKARUn01G0029420.1"/>
    <property type="gene ID" value="TraesKARUn01G0029420"/>
</dbReference>
<dbReference type="EnsemblPlants" id="TraesKARUn01G0030070.1">
    <property type="protein sequence ID" value="cds.TraesKARUn01G0030070.1"/>
    <property type="gene ID" value="TraesKARUn01G0030070"/>
</dbReference>
<dbReference type="EnsemblPlants" id="TraesKARUn01G0030280.1">
    <property type="protein sequence ID" value="cds.TraesKARUn01G0030280.1"/>
    <property type="gene ID" value="TraesKARUn01G0030280"/>
</dbReference>
<dbReference type="EnsemblPlants" id="TraesKARUn01G0030580.1">
    <property type="protein sequence ID" value="cds.TraesKARUn01G0030580.1"/>
    <property type="gene ID" value="TraesKARUn01G0030580"/>
</dbReference>
<dbReference type="EnsemblPlants" id="TraesKARUn01G0030700.1">
    <property type="protein sequence ID" value="cds.TraesKARUn01G0030700.1"/>
    <property type="gene ID" value="TraesKARUn01G0030700"/>
</dbReference>
<dbReference type="EnsemblPlants" id="TraesKARUn01G0031000.1">
    <property type="protein sequence ID" value="cds.TraesKARUn01G0031000.1"/>
    <property type="gene ID" value="TraesKARUn01G0031000"/>
</dbReference>
<dbReference type="EnsemblPlants" id="TraesKARUn01G0031140.1">
    <property type="protein sequence ID" value="cds.TraesKARUn01G0031140.1"/>
    <property type="gene ID" value="TraesKARUn01G0031140"/>
</dbReference>
<dbReference type="EnsemblPlants" id="TraesKARUn01G0031940.1">
    <property type="protein sequence ID" value="cds.TraesKARUn01G0031940.1"/>
    <property type="gene ID" value="TraesKARUn01G0031940"/>
</dbReference>
<dbReference type="EnsemblPlants" id="TraesKARUn01G0032130.1">
    <property type="protein sequence ID" value="cds.TraesKARUn01G0032130.1"/>
    <property type="gene ID" value="TraesKARUn01G0032130"/>
</dbReference>
<dbReference type="EnsemblPlants" id="TraesKARUn01G0032170.1">
    <property type="protein sequence ID" value="cds.TraesKARUn01G0032170.1"/>
    <property type="gene ID" value="TraesKARUn01G0032170"/>
</dbReference>
<dbReference type="EnsemblPlants" id="TraesKARUn01G0032860.1">
    <property type="protein sequence ID" value="cds.TraesKARUn01G0032860.1"/>
    <property type="gene ID" value="TraesKARUn01G0032860"/>
</dbReference>
<dbReference type="EnsemblPlants" id="TraesKARUn01G0033060.1">
    <property type="protein sequence ID" value="cds.TraesKARUn01G0033060.1"/>
    <property type="gene ID" value="TraesKARUn01G0033060"/>
</dbReference>
<dbReference type="EnsemblPlants" id="TraesKARUn01G0033200.1">
    <property type="protein sequence ID" value="cds.TraesKARUn01G0033200.1"/>
    <property type="gene ID" value="TraesKARUn01G0033200"/>
</dbReference>
<dbReference type="EnsemblPlants" id="TraesKARUn01G0033240.1">
    <property type="protein sequence ID" value="cds.TraesKARUn01G0033240.1"/>
    <property type="gene ID" value="TraesKARUn01G0033240"/>
</dbReference>
<dbReference type="EnsemblPlants" id="TraesKARUn01G0033390.1">
    <property type="protein sequence ID" value="cds.TraesKARUn01G0033390.1"/>
    <property type="gene ID" value="TraesKARUn01G0033390"/>
</dbReference>
<dbReference type="EnsemblPlants" id="TraesKARUn01G0033920.1">
    <property type="protein sequence ID" value="cds.TraesKARUn01G0033920.1"/>
    <property type="gene ID" value="TraesKARUn01G0033920"/>
</dbReference>
<dbReference type="EnsemblPlants" id="TraesKARUn01G0034060.1">
    <property type="protein sequence ID" value="cds.TraesKARUn01G0034060.1"/>
    <property type="gene ID" value="TraesKARUn01G0034060"/>
</dbReference>
<dbReference type="EnsemblPlants" id="TraesKARUn01G0034280.1">
    <property type="protein sequence ID" value="cds.TraesKARUn01G0034280.1"/>
    <property type="gene ID" value="TraesKARUn01G0034280"/>
</dbReference>
<dbReference type="EnsemblPlants" id="TraesKARUn01G0034520.1">
    <property type="protein sequence ID" value="cds.TraesKARUn01G0034520.1"/>
    <property type="gene ID" value="TraesKARUn01G0034520"/>
</dbReference>
<dbReference type="EnsemblPlants" id="TraesKARUn01G0034600.1">
    <property type="protein sequence ID" value="cds.TraesKARUn01G0034600.1"/>
    <property type="gene ID" value="TraesKARUn01G0034600"/>
</dbReference>
<dbReference type="EnsemblPlants" id="TraesKARUn01G0034800.1">
    <property type="protein sequence ID" value="cds.TraesKARUn01G0034800.1"/>
    <property type="gene ID" value="TraesKARUn01G0034800"/>
</dbReference>
<dbReference type="EnsemblPlants" id="TraesKARUn01G0034950.1">
    <property type="protein sequence ID" value="cds.TraesKARUn01G0034950.1"/>
    <property type="gene ID" value="TraesKARUn01G0034950"/>
</dbReference>
<dbReference type="EnsemblPlants" id="TraesKARUn01G0035090.1">
    <property type="protein sequence ID" value="cds.TraesKARUn01G0035090.1"/>
    <property type="gene ID" value="TraesKARUn01G0035090"/>
</dbReference>
<dbReference type="EnsemblPlants" id="TraesKARUn01G0035260.1">
    <property type="protein sequence ID" value="cds.TraesKARUn01G0035260.1"/>
    <property type="gene ID" value="TraesKARUn01G0035260"/>
</dbReference>
<dbReference type="EnsemblPlants" id="TraesKARUn01G0035450.1">
    <property type="protein sequence ID" value="cds.TraesKARUn01G0035450.1"/>
    <property type="gene ID" value="TraesKARUn01G0035450"/>
</dbReference>
<dbReference type="EnsemblPlants" id="TraesKARUn01G0035640.1">
    <property type="protein sequence ID" value="cds.TraesKARUn01G0035640.1"/>
    <property type="gene ID" value="TraesKARUn01G0035640"/>
</dbReference>
<dbReference type="EnsemblPlants" id="TraesKARUn01G0035740.1">
    <property type="protein sequence ID" value="cds.TraesKARUn01G0035740.1"/>
    <property type="gene ID" value="TraesKARUn01G0035740"/>
</dbReference>
<dbReference type="EnsemblPlants" id="TraesKARUn01G0035940.1">
    <property type="protein sequence ID" value="cds.TraesKARUn01G0035940.1"/>
    <property type="gene ID" value="TraesKARUn01G0035940"/>
</dbReference>
<dbReference type="EnsemblPlants" id="TraesKARUn01G0036050.1">
    <property type="protein sequence ID" value="cds.TraesKARUn01G0036050.1"/>
    <property type="gene ID" value="TraesKARUn01G0036050"/>
</dbReference>
<dbReference type="EnsemblPlants" id="TraesKARUn01G0036180.1">
    <property type="protein sequence ID" value="cds.TraesKARUn01G0036180.1"/>
    <property type="gene ID" value="TraesKARUn01G0036180"/>
</dbReference>
<dbReference type="EnsemblPlants" id="TraesKARUn01G0036470.1">
    <property type="protein sequence ID" value="cds.TraesKARUn01G0036470.1"/>
    <property type="gene ID" value="TraesKARUn01G0036470"/>
</dbReference>
<dbReference type="EnsemblPlants" id="TraesKARUn01G0036540.1">
    <property type="protein sequence ID" value="cds.TraesKARUn01G0036540.1"/>
    <property type="gene ID" value="TraesKARUn01G0036540"/>
</dbReference>
<dbReference type="EnsemblPlants" id="TraesKARUn01G0036810.1">
    <property type="protein sequence ID" value="cds.TraesKARUn01G0036810.1"/>
    <property type="gene ID" value="TraesKARUn01G0036810"/>
</dbReference>
<dbReference type="EnsemblPlants" id="TraesKARUn01G0036930.1">
    <property type="protein sequence ID" value="cds.TraesKARUn01G0036930.1"/>
    <property type="gene ID" value="TraesKARUn01G0036930"/>
</dbReference>
<dbReference type="EnsemblPlants" id="TraesKARUn01G0037260.1">
    <property type="protein sequence ID" value="cds.TraesKARUn01G0037260.1"/>
    <property type="gene ID" value="TraesKARUn01G0037260"/>
</dbReference>
<dbReference type="EnsemblPlants" id="TraesKARUn01G0048000.1">
    <property type="protein sequence ID" value="cds.TraesKARUn01G0048000.1"/>
    <property type="gene ID" value="TraesKARUn01G0048000"/>
</dbReference>
<dbReference type="EnsemblPlants" id="TraesKARUn01G0057930.1">
    <property type="protein sequence ID" value="cds.TraesKARUn01G0057930.1"/>
    <property type="gene ID" value="TraesKARUn01G0057930"/>
</dbReference>
<dbReference type="EnsemblPlants" id="TraesKARUn01G0060510.1">
    <property type="protein sequence ID" value="cds.TraesKARUn01G0060510.1"/>
    <property type="gene ID" value="TraesKARUn01G0060510"/>
</dbReference>
<dbReference type="EnsemblPlants" id="TraesKARUn01G0061670.1">
    <property type="protein sequence ID" value="cds.TraesKARUn01G0061670.1"/>
    <property type="gene ID" value="TraesKARUn01G0061670"/>
</dbReference>
<dbReference type="EnsemblPlants" id="TraesKARUn01G0061690.1">
    <property type="protein sequence ID" value="cds.TraesKARUn01G0061690.1"/>
    <property type="gene ID" value="TraesKARUn01G0061690"/>
</dbReference>
<dbReference type="EnsemblPlants" id="TraesKARUn01G0061980.1">
    <property type="protein sequence ID" value="cds.TraesKARUn01G0061980.1"/>
    <property type="gene ID" value="TraesKARUn01G0061980"/>
</dbReference>
<dbReference type="EnsemblPlants" id="TraesKARUn01G0062080.1">
    <property type="protein sequence ID" value="cds.TraesKARUn01G0062080.1"/>
    <property type="gene ID" value="TraesKARUn01G0062080"/>
</dbReference>
<dbReference type="EnsemblPlants" id="TraesKARUn01G0062220.1">
    <property type="protein sequence ID" value="cds.TraesKARUn01G0062220.1"/>
    <property type="gene ID" value="TraesKARUn01G0062220"/>
</dbReference>
<dbReference type="EnsemblPlants" id="TraesKARUn01G0062440.1">
    <property type="protein sequence ID" value="cds.TraesKARUn01G0062440.1"/>
    <property type="gene ID" value="TraesKARUn01G0062440"/>
</dbReference>
<dbReference type="EnsemblPlants" id="TraesKARUn01G0062580.1">
    <property type="protein sequence ID" value="cds.TraesKARUn01G0062580.1"/>
    <property type="gene ID" value="TraesKARUn01G0062580"/>
</dbReference>
<dbReference type="EnsemblPlants" id="TraesKARUn01G0064220.1">
    <property type="protein sequence ID" value="cds.TraesKARUn01G0064220.1"/>
    <property type="gene ID" value="TraesKARUn01G0064220"/>
</dbReference>
<dbReference type="EnsemblPlants" id="TraesKARUn01G0064320.1">
    <property type="protein sequence ID" value="cds.TraesKARUn01G0064320.1"/>
    <property type="gene ID" value="TraesKARUn01G0064320"/>
</dbReference>
<dbReference type="EnsemblPlants" id="TraesKARUn01G0064530.1">
    <property type="protein sequence ID" value="cds.TraesKARUn01G0064530.1"/>
    <property type="gene ID" value="TraesKARUn01G0064530"/>
</dbReference>
<dbReference type="EnsemblPlants" id="TraesKARUn01G0064680.1">
    <property type="protein sequence ID" value="cds.TraesKARUn01G0064680.1"/>
    <property type="gene ID" value="TraesKARUn01G0064680"/>
</dbReference>
<dbReference type="EnsemblPlants" id="TraesKARUn01G0065270.1">
    <property type="protein sequence ID" value="cds.TraesKARUn01G0065270.1"/>
    <property type="gene ID" value="TraesKARUn01G0065270"/>
</dbReference>
<dbReference type="EnsemblPlants" id="TraesKARUn01G0065350.1">
    <property type="protein sequence ID" value="cds.TraesKARUn01G0065350.1"/>
    <property type="gene ID" value="TraesKARUn01G0065350"/>
</dbReference>
<dbReference type="EnsemblPlants" id="TraesKARUn01G0065450.1">
    <property type="protein sequence ID" value="cds.TraesKARUn01G0065450.1"/>
    <property type="gene ID" value="TraesKARUn01G0065450"/>
</dbReference>
<dbReference type="EnsemblPlants" id="TraesKARUn01G0066150.1">
    <property type="protein sequence ID" value="cds.TraesKARUn01G0066150.1"/>
    <property type="gene ID" value="TraesKARUn01G0066150"/>
</dbReference>
<dbReference type="EnsemblPlants" id="TraesKARUn01G0066450.1">
    <property type="protein sequence ID" value="cds.TraesKARUn01G0066450.1"/>
    <property type="gene ID" value="TraesKARUn01G0066450"/>
</dbReference>
<dbReference type="EnsemblPlants" id="TraesKARUn01G0067050.1">
    <property type="protein sequence ID" value="cds.TraesKARUn01G0067050.1"/>
    <property type="gene ID" value="TraesKARUn01G0067050"/>
</dbReference>
<dbReference type="EnsemblPlants" id="TraesKARUn01G0067370.1">
    <property type="protein sequence ID" value="cds.TraesKARUn01G0067370.1"/>
    <property type="gene ID" value="TraesKARUn01G0067370"/>
</dbReference>
<dbReference type="EnsemblPlants" id="TraesKARUn01G0067420.1">
    <property type="protein sequence ID" value="cds.TraesKARUn01G0067420.1"/>
    <property type="gene ID" value="TraesKARUn01G0067420"/>
</dbReference>
<dbReference type="EnsemblPlants" id="TraesKARUn01G0067510.1">
    <property type="protein sequence ID" value="cds.TraesKARUn01G0067510.1"/>
    <property type="gene ID" value="TraesKARUn01G0067510"/>
</dbReference>
<dbReference type="EnsemblPlants" id="TraesKARUn01G0067530.1">
    <property type="protein sequence ID" value="cds.TraesKARUn01G0067530.1"/>
    <property type="gene ID" value="TraesKARUn01G0067530"/>
</dbReference>
<dbReference type="EnsemblPlants" id="TraesKARUn01G0067760.1">
    <property type="protein sequence ID" value="cds.TraesKARUn01G0067760.1"/>
    <property type="gene ID" value="TraesKARUn01G0067760"/>
</dbReference>
<dbReference type="EnsemblPlants" id="TraesKARUn01G0067970.1">
    <property type="protein sequence ID" value="cds.TraesKARUn01G0067970.1"/>
    <property type="gene ID" value="TraesKARUn01G0067970"/>
</dbReference>
<dbReference type="EnsemblPlants" id="TraesKARUn01G0068460.1">
    <property type="protein sequence ID" value="cds.TraesKARUn01G0068460.1"/>
    <property type="gene ID" value="TraesKARUn01G0068460"/>
</dbReference>
<dbReference type="EnsemblPlants" id="TraesKARUn01G0068580.1">
    <property type="protein sequence ID" value="cds.TraesKARUn01G0068580.1"/>
    <property type="gene ID" value="TraesKARUn01G0068580"/>
</dbReference>
<dbReference type="EnsemblPlants" id="TraesKARUn01G0068910.1">
    <property type="protein sequence ID" value="cds.TraesKARUn01G0068910.1"/>
    <property type="gene ID" value="TraesKARUn01G0068910"/>
</dbReference>
<dbReference type="EnsemblPlants" id="TraesKARUn01G0070050.1">
    <property type="protein sequence ID" value="cds.TraesKARUn01G0070050.1"/>
    <property type="gene ID" value="TraesKARUn01G0070050"/>
</dbReference>
<dbReference type="EnsemblPlants" id="TraesKARUn01G0070070.1">
    <property type="protein sequence ID" value="cds.TraesKARUn01G0070070.1"/>
    <property type="gene ID" value="TraesKARUn01G0070070"/>
</dbReference>
<dbReference type="EnsemblPlants" id="TraesKARUn01G0070270.1">
    <property type="protein sequence ID" value="cds.TraesKARUn01G0070270.1"/>
    <property type="gene ID" value="TraesKARUn01G0070270"/>
</dbReference>
<dbReference type="EnsemblPlants" id="TraesKARUn01G0070440.1">
    <property type="protein sequence ID" value="cds.TraesKARUn01G0070440.1"/>
    <property type="gene ID" value="TraesKARUn01G0070440"/>
</dbReference>
<dbReference type="EnsemblPlants" id="TraesKARUn01G0070790.1">
    <property type="protein sequence ID" value="cds.TraesKARUn01G0070790.1"/>
    <property type="gene ID" value="TraesKARUn01G0070790"/>
</dbReference>
<dbReference type="EnsemblPlants" id="TraesKARUn01G0071220.1">
    <property type="protein sequence ID" value="cds.TraesKARUn01G0071220.1"/>
    <property type="gene ID" value="TraesKARUn01G0071220"/>
</dbReference>
<dbReference type="EnsemblPlants" id="TraesKARUn01G0071910.1">
    <property type="protein sequence ID" value="cds.TraesKARUn01G0071910.1"/>
    <property type="gene ID" value="TraesKARUn01G0071910"/>
</dbReference>
<dbReference type="EnsemblPlants" id="TraesKARUn01G0072180.1">
    <property type="protein sequence ID" value="cds.TraesKARUn01G0072180.1"/>
    <property type="gene ID" value="TraesKARUn01G0072180"/>
</dbReference>
<dbReference type="EnsemblPlants" id="TraesKARUn01G0072410.1">
    <property type="protein sequence ID" value="cds.TraesKARUn01G0072410.1"/>
    <property type="gene ID" value="TraesKARUn01G0072410"/>
</dbReference>
<dbReference type="EnsemblPlants" id="TraesKARUn01G0072820.1">
    <property type="protein sequence ID" value="cds.TraesKARUn01G0072820.1"/>
    <property type="gene ID" value="TraesKARUn01G0072820"/>
</dbReference>
<dbReference type="EnsemblPlants" id="TraesKARUn01G0072950.1">
    <property type="protein sequence ID" value="cds.TraesKARUn01G0072950.1"/>
    <property type="gene ID" value="TraesKARUn01G0072950"/>
</dbReference>
<dbReference type="EnsemblPlants" id="TraesKARUn01G0073120.1">
    <property type="protein sequence ID" value="cds.TraesKARUn01G0073120.1"/>
    <property type="gene ID" value="TraesKARUn01G0073120"/>
</dbReference>
<dbReference type="EnsemblPlants" id="TraesKARUn01G0073350.1">
    <property type="protein sequence ID" value="cds.TraesKARUn01G0073350.1"/>
    <property type="gene ID" value="TraesKARUn01G0073350"/>
</dbReference>
<dbReference type="EnsemblPlants" id="TraesKARUn01G0073760.1">
    <property type="protein sequence ID" value="cds.TraesKARUn01G0073760.1"/>
    <property type="gene ID" value="TraesKARUn01G0073760"/>
</dbReference>
<dbReference type="EnsemblPlants" id="TraesKARUn01G0073780.1">
    <property type="protein sequence ID" value="cds.TraesKARUn01G0073780.1"/>
    <property type="gene ID" value="TraesKARUn01G0073780"/>
</dbReference>
<dbReference type="EnsemblPlants" id="TraesKARUn01G0073900.1">
    <property type="protein sequence ID" value="cds.TraesKARUn01G0073900.1"/>
    <property type="gene ID" value="TraesKARUn01G0073900"/>
</dbReference>
<dbReference type="EnsemblPlants" id="TraesKARUn01G0073980.1">
    <property type="protein sequence ID" value="cds.TraesKARUn01G0073980.1"/>
    <property type="gene ID" value="TraesKARUn01G0073980"/>
</dbReference>
<dbReference type="EnsemblPlants" id="TraesKARUn01G0074470.1">
    <property type="protein sequence ID" value="cds.TraesKARUn01G0074470.1"/>
    <property type="gene ID" value="TraesKARUn01G0074470"/>
</dbReference>
<dbReference type="EnsemblPlants" id="TraesKARUn01G0074640.1">
    <property type="protein sequence ID" value="cds.TraesKARUn01G0074640.1"/>
    <property type="gene ID" value="TraesKARUn01G0074640"/>
</dbReference>
<dbReference type="EnsemblPlants" id="TraesKARUn01G0074760.1">
    <property type="protein sequence ID" value="cds.TraesKARUn01G0074760.1"/>
    <property type="gene ID" value="TraesKARUn01G0074760"/>
</dbReference>
<dbReference type="EnsemblPlants" id="TraesKARUn01G0075030.1">
    <property type="protein sequence ID" value="cds.TraesKARUn01G0075030.1"/>
    <property type="gene ID" value="TraesKARUn01G0075030"/>
</dbReference>
<dbReference type="EnsemblPlants" id="TraesKARUn01G0075140.1">
    <property type="protein sequence ID" value="cds.TraesKARUn01G0075140.1"/>
    <property type="gene ID" value="TraesKARUn01G0075140"/>
</dbReference>
<dbReference type="EnsemblPlants" id="TraesKARUn01G0075360.1">
    <property type="protein sequence ID" value="cds.TraesKARUn01G0075360.1"/>
    <property type="gene ID" value="TraesKARUn01G0075360"/>
</dbReference>
<dbReference type="EnsemblPlants" id="TraesKARUn01G0075760.1">
    <property type="protein sequence ID" value="cds.TraesKARUn01G0075760.1"/>
    <property type="gene ID" value="TraesKARUn01G0075760"/>
</dbReference>
<dbReference type="EnsemblPlants" id="TraesKARUn01G0075960.1">
    <property type="protein sequence ID" value="cds.TraesKARUn01G0075960.1"/>
    <property type="gene ID" value="TraesKARUn01G0075960"/>
</dbReference>
<dbReference type="EnsemblPlants" id="TraesKARUn01G0076200.1">
    <property type="protein sequence ID" value="cds.TraesKARUn01G0076200.1"/>
    <property type="gene ID" value="TraesKARUn01G0076200"/>
</dbReference>
<dbReference type="EnsemblPlants" id="TraesKARUn01G0076400.1">
    <property type="protein sequence ID" value="cds.TraesKARUn01G0076400.1"/>
    <property type="gene ID" value="TraesKARUn01G0076400"/>
</dbReference>
<dbReference type="EnsemblPlants" id="TraesKARUn01G0076610.1">
    <property type="protein sequence ID" value="cds.TraesKARUn01G0076610.1"/>
    <property type="gene ID" value="TraesKARUn01G0076610"/>
</dbReference>
<dbReference type="EnsemblPlants" id="TraesKARUn01G0076760.1">
    <property type="protein sequence ID" value="cds.TraesKARUn01G0076760.1"/>
    <property type="gene ID" value="TraesKARUn01G0076760"/>
</dbReference>
<dbReference type="EnsemblPlants" id="TraesKARUn01G0076840.1">
    <property type="protein sequence ID" value="cds.TraesKARUn01G0076840.1"/>
    <property type="gene ID" value="TraesKARUn01G0076840"/>
</dbReference>
<dbReference type="EnsemblPlants" id="TraesKARUn01G0077280.1">
    <property type="protein sequence ID" value="cds.TraesKARUn01G0077280.1"/>
    <property type="gene ID" value="TraesKARUn01G0077280"/>
</dbReference>
<dbReference type="EnsemblPlants" id="TraesKARUn01G0077460.1">
    <property type="protein sequence ID" value="cds.TraesKARUn01G0077460.1"/>
    <property type="gene ID" value="TraesKARUn01G0077460"/>
</dbReference>
<dbReference type="EnsemblPlants" id="TraesKARUn01G0077720.1">
    <property type="protein sequence ID" value="cds.TraesKARUn01G0077720.1"/>
    <property type="gene ID" value="TraesKARUn01G0077720"/>
</dbReference>
<dbReference type="EnsemblPlants" id="TraesKARUn01G0077810.1">
    <property type="protein sequence ID" value="cds.TraesKARUn01G0077810.1"/>
    <property type="gene ID" value="TraesKARUn01G0077810"/>
</dbReference>
<dbReference type="EnsemblPlants" id="TraesKARUn01G0078600.1">
    <property type="protein sequence ID" value="cds.TraesKARUn01G0078600.1"/>
    <property type="gene ID" value="TraesKARUn01G0078600"/>
</dbReference>
<dbReference type="EnsemblPlants" id="TraesKARUn01G0078730.1">
    <property type="protein sequence ID" value="cds.TraesKARUn01G0078730.1"/>
    <property type="gene ID" value="TraesKARUn01G0078730"/>
</dbReference>
<dbReference type="EnsemblPlants" id="TraesKARUn01G0078780.1">
    <property type="protein sequence ID" value="cds.TraesKARUn01G0078780.1"/>
    <property type="gene ID" value="TraesKARUn01G0078780"/>
</dbReference>
<dbReference type="EnsemblPlants" id="TraesKARUn01G0079050.1">
    <property type="protein sequence ID" value="cds.TraesKARUn01G0079050.1"/>
    <property type="gene ID" value="TraesKARUn01G0079050"/>
</dbReference>
<dbReference type="EnsemblPlants" id="TraesKARUn01G0079170.1">
    <property type="protein sequence ID" value="cds.TraesKARUn01G0079170.1"/>
    <property type="gene ID" value="TraesKARUn01G0079170"/>
</dbReference>
<dbReference type="EnsemblPlants" id="TraesKARUn01G0079530.1">
    <property type="protein sequence ID" value="cds.TraesKARUn01G0079530.1"/>
    <property type="gene ID" value="TraesKARUn01G0079530"/>
</dbReference>
<dbReference type="EnsemblPlants" id="TraesKARUn01G0079780.1">
    <property type="protein sequence ID" value="cds.TraesKARUn01G0079780.1"/>
    <property type="gene ID" value="TraesKARUn01G0079780"/>
</dbReference>
<dbReference type="EnsemblPlants" id="TraesKARUn01G0079910.1">
    <property type="protein sequence ID" value="cds.TraesKARUn01G0079910.1"/>
    <property type="gene ID" value="TraesKARUn01G0079910"/>
</dbReference>
<dbReference type="EnsemblPlants" id="TraesKARUn01G0080160.1">
    <property type="protein sequence ID" value="cds.TraesKARUn01G0080160.1"/>
    <property type="gene ID" value="TraesKARUn01G0080160"/>
</dbReference>
<dbReference type="EnsemblPlants" id="TraesKARUn01G0080290.1">
    <property type="protein sequence ID" value="cds.TraesKARUn01G0080290.1"/>
    <property type="gene ID" value="TraesKARUn01G0080290"/>
</dbReference>
<dbReference type="EnsemblPlants" id="TraesKARUn01G0080320.1">
    <property type="protein sequence ID" value="cds.TraesKARUn01G0080320.1"/>
    <property type="gene ID" value="TraesKARUn01G0080320"/>
</dbReference>
<dbReference type="EnsemblPlants" id="TraesKARUn01G0080470.1">
    <property type="protein sequence ID" value="cds.TraesKARUn01G0080470.1"/>
    <property type="gene ID" value="TraesKARUn01G0080470"/>
</dbReference>
<dbReference type="EnsemblPlants" id="TraesKARUn01G0080600.1">
    <property type="protein sequence ID" value="cds.TraesKARUn01G0080600.1"/>
    <property type="gene ID" value="TraesKARUn01G0080600"/>
</dbReference>
<dbReference type="EnsemblPlants" id="TraesKARUn01G0080870.1">
    <property type="protein sequence ID" value="cds.TraesKARUn01G0080870.1"/>
    <property type="gene ID" value="TraesKARUn01G0080870"/>
</dbReference>
<dbReference type="EnsemblPlants" id="TraesKARUn01G0081000.1">
    <property type="protein sequence ID" value="cds.TraesKARUn01G0081000.1"/>
    <property type="gene ID" value="TraesKARUn01G0081000"/>
</dbReference>
<dbReference type="EnsemblPlants" id="TraesKARUn01G0081290.1">
    <property type="protein sequence ID" value="cds.TraesKARUn01G0081290.1"/>
    <property type="gene ID" value="TraesKARUn01G0081290"/>
</dbReference>
<dbReference type="EnsemblPlants" id="TraesKARUn01G0081490.1">
    <property type="protein sequence ID" value="cds.TraesKARUn01G0081490.1"/>
    <property type="gene ID" value="TraesKARUn01G0081490"/>
</dbReference>
<dbReference type="EnsemblPlants" id="TraesKARUn01G0081650.1">
    <property type="protein sequence ID" value="cds.TraesKARUn01G0081650.1"/>
    <property type="gene ID" value="TraesKARUn01G0081650"/>
</dbReference>
<dbReference type="EnsemblPlants" id="TraesKARUn01G0081850.1">
    <property type="protein sequence ID" value="cds.TraesKARUn01G0081850.1"/>
    <property type="gene ID" value="TraesKARUn01G0081850"/>
</dbReference>
<dbReference type="EnsemblPlants" id="TraesKARUn01G0081990.1">
    <property type="protein sequence ID" value="cds.TraesKARUn01G0081990.1"/>
    <property type="gene ID" value="TraesKARUn01G0081990"/>
</dbReference>
<dbReference type="EnsemblPlants" id="TraesKARUn01G0082110.1">
    <property type="protein sequence ID" value="cds.TraesKARUn01G0082110.1"/>
    <property type="gene ID" value="TraesKARUn01G0082110"/>
</dbReference>
<dbReference type="EnsemblPlants" id="TraesKARUn01G0082320.1">
    <property type="protein sequence ID" value="cds.TraesKARUn01G0082320.1"/>
    <property type="gene ID" value="TraesKARUn01G0082320"/>
</dbReference>
<dbReference type="EnsemblPlants" id="TraesKARUn01G0082450.1">
    <property type="protein sequence ID" value="cds.TraesKARUn01G0082450.1"/>
    <property type="gene ID" value="TraesKARUn01G0082450"/>
</dbReference>
<dbReference type="EnsemblPlants" id="TraesKARUn01G0082550.1">
    <property type="protein sequence ID" value="cds.TraesKARUn01G0082550.1"/>
    <property type="gene ID" value="TraesKARUn01G0082550"/>
</dbReference>
<dbReference type="EnsemblPlants" id="TraesKARUn01G0082720.1">
    <property type="protein sequence ID" value="cds.TraesKARUn01G0082720.1"/>
    <property type="gene ID" value="TraesKARUn01G0082720"/>
</dbReference>
<dbReference type="EnsemblPlants" id="TraesKARUn01G0082830.1">
    <property type="protein sequence ID" value="cds.TraesKARUn01G0082830.1"/>
    <property type="gene ID" value="TraesKARUn01G0082830"/>
</dbReference>
<dbReference type="EnsemblPlants" id="TraesKARUn01G0082860.1">
    <property type="protein sequence ID" value="cds.TraesKARUn01G0082860.1"/>
    <property type="gene ID" value="TraesKARUn01G0082860"/>
</dbReference>
<dbReference type="EnsemblPlants" id="TraesKARUn01G0083310.1">
    <property type="protein sequence ID" value="cds.TraesKARUn01G0083310.1"/>
    <property type="gene ID" value="TraesKARUn01G0083310"/>
</dbReference>
<dbReference type="EnsemblPlants" id="TraesKARUn01G0083530.1">
    <property type="protein sequence ID" value="cds.TraesKARUn01G0083530.1"/>
    <property type="gene ID" value="TraesKARUn01G0083530"/>
</dbReference>
<dbReference type="EnsemblPlants" id="TraesKARUn01G0083600.1">
    <property type="protein sequence ID" value="cds.TraesKARUn01G0083600.1"/>
    <property type="gene ID" value="TraesKARUn01G0083600"/>
</dbReference>
<dbReference type="EnsemblPlants" id="TraesKARUn01G0083690.1">
    <property type="protein sequence ID" value="cds.TraesKARUn01G0083690.1"/>
    <property type="gene ID" value="TraesKARUn01G0083690"/>
</dbReference>
<dbReference type="EnsemblPlants" id="TraesKARUn01G0083870.1">
    <property type="protein sequence ID" value="cds.TraesKARUn01G0083870.1"/>
    <property type="gene ID" value="TraesKARUn01G0083870"/>
</dbReference>
<dbReference type="EnsemblPlants" id="TraesKARUn01G0084000.1">
    <property type="protein sequence ID" value="cds.TraesKARUn01G0084000.1"/>
    <property type="gene ID" value="TraesKARUn01G0084000"/>
</dbReference>
<dbReference type="EnsemblPlants" id="TraesKARUn01G0084100.1">
    <property type="protein sequence ID" value="cds.TraesKARUn01G0084100.1"/>
    <property type="gene ID" value="TraesKARUn01G0084100"/>
</dbReference>
<dbReference type="EnsemblPlants" id="TraesKARUn01G0084260.1">
    <property type="protein sequence ID" value="cds.TraesKARUn01G0084260.1"/>
    <property type="gene ID" value="TraesKARUn01G0084260"/>
</dbReference>
<dbReference type="EnsemblPlants" id="TraesKARUn01G0084400.1">
    <property type="protein sequence ID" value="cds.TraesKARUn01G0084400.1"/>
    <property type="gene ID" value="TraesKARUn01G0084400"/>
</dbReference>
<dbReference type="EnsemblPlants" id="TraesKARUn01G0084610.1">
    <property type="protein sequence ID" value="cds.TraesKARUn01G0084610.1"/>
    <property type="gene ID" value="TraesKARUn01G0084610"/>
</dbReference>
<dbReference type="EnsemblPlants" id="TraesKARUn01G0084770.1">
    <property type="protein sequence ID" value="cds.TraesKARUn01G0084770.1"/>
    <property type="gene ID" value="TraesKARUn01G0084770"/>
</dbReference>
<dbReference type="EnsemblPlants" id="TraesKARUn01G0084880.1">
    <property type="protein sequence ID" value="cds.TraesKARUn01G0084880.1"/>
    <property type="gene ID" value="TraesKARUn01G0084880"/>
</dbReference>
<dbReference type="EnsemblPlants" id="TraesKARUn01G0085050.1">
    <property type="protein sequence ID" value="cds.TraesKARUn01G0085050.1"/>
    <property type="gene ID" value="TraesKARUn01G0085050"/>
</dbReference>
<dbReference type="EnsemblPlants" id="TraesKARUn01G0085200.1">
    <property type="protein sequence ID" value="cds.TraesKARUn01G0085200.1"/>
    <property type="gene ID" value="TraesKARUn01G0085200"/>
</dbReference>
<dbReference type="EnsemblPlants" id="TraesKARUn01G0085220.1">
    <property type="protein sequence ID" value="cds.TraesKARUn01G0085220.1"/>
    <property type="gene ID" value="TraesKARUn01G0085220"/>
</dbReference>
<dbReference type="EnsemblPlants" id="TraesKARUn01G0085380.1">
    <property type="protein sequence ID" value="cds.TraesKARUn01G0085380.1"/>
    <property type="gene ID" value="TraesKARUn01G0085380"/>
</dbReference>
<dbReference type="EnsemblPlants" id="TraesKARUn01G0085540.1">
    <property type="protein sequence ID" value="cds.TraesKARUn01G0085540.1"/>
    <property type="gene ID" value="TraesKARUn01G0085540"/>
</dbReference>
<dbReference type="EnsemblPlants" id="TraesKARUn01G0085660.1">
    <property type="protein sequence ID" value="cds.TraesKARUn01G0085660.1"/>
    <property type="gene ID" value="TraesKARUn01G0085660"/>
</dbReference>
<dbReference type="EnsemblPlants" id="TraesKARUn01G0085780.1">
    <property type="protein sequence ID" value="cds.TraesKARUn01G0085780.1"/>
    <property type="gene ID" value="TraesKARUn01G0085780"/>
</dbReference>
<dbReference type="EnsemblPlants" id="TraesKARUn01G0085880.1">
    <property type="protein sequence ID" value="cds.TraesKARUn01G0085880.1"/>
    <property type="gene ID" value="TraesKARUn01G0085880"/>
</dbReference>
<dbReference type="EnsemblPlants" id="TraesKARUn01G0085960.1">
    <property type="protein sequence ID" value="cds.TraesKARUn01G0085960.1"/>
    <property type="gene ID" value="TraesKARUn01G0085960"/>
</dbReference>
<dbReference type="EnsemblPlants" id="TraesKARUn01G0086160.1">
    <property type="protein sequence ID" value="cds.TraesKARUn01G0086160.1"/>
    <property type="gene ID" value="TraesKARUn01G0086160"/>
</dbReference>
<dbReference type="EnsemblPlants" id="TraesKARUn01G0086340.1">
    <property type="protein sequence ID" value="cds.TraesKARUn01G0086340.1"/>
    <property type="gene ID" value="TraesKARUn01G0086340"/>
</dbReference>
<dbReference type="EnsemblPlants" id="TraesKARUn01G0086550.1">
    <property type="protein sequence ID" value="cds.TraesKARUn01G0086550.1"/>
    <property type="gene ID" value="TraesKARUn01G0086550"/>
</dbReference>
<dbReference type="EnsemblPlants" id="TraesKARUn01G0086630.1">
    <property type="protein sequence ID" value="cds.TraesKARUn01G0086630.1"/>
    <property type="gene ID" value="TraesKARUn01G0086630"/>
</dbReference>
<dbReference type="EnsemblPlants" id="TraesKARUn01G0086880.1">
    <property type="protein sequence ID" value="cds.TraesKARUn01G0086880.1"/>
    <property type="gene ID" value="TraesKARUn01G0086880"/>
</dbReference>
<dbReference type="EnsemblPlants" id="TraesKARUn01G0087060.1">
    <property type="protein sequence ID" value="cds.TraesKARUn01G0087060.1"/>
    <property type="gene ID" value="TraesKARUn01G0087060"/>
</dbReference>
<dbReference type="EnsemblPlants" id="TraesKARUn01G0087750.1">
    <property type="protein sequence ID" value="cds.TraesKARUn01G0087750.1"/>
    <property type="gene ID" value="TraesKARUn01G0087750"/>
</dbReference>
<dbReference type="EnsemblPlants" id="TraesKARUn01G0088000.1">
    <property type="protein sequence ID" value="cds.TraesKARUn01G0088000.1"/>
    <property type="gene ID" value="TraesKARUn01G0088000"/>
</dbReference>
<dbReference type="EnsemblPlants" id="TraesKARUn01G0088130.1">
    <property type="protein sequence ID" value="cds.TraesKARUn01G0088130.1"/>
    <property type="gene ID" value="TraesKARUn01G0088130"/>
</dbReference>
<dbReference type="EnsemblPlants" id="TraesKARUn01G0088300.1">
    <property type="protein sequence ID" value="cds.TraesKARUn01G0088300.1"/>
    <property type="gene ID" value="TraesKARUn01G0088300"/>
</dbReference>
<dbReference type="EnsemblPlants" id="TraesKARUn01G0088570.1">
    <property type="protein sequence ID" value="cds.TraesKARUn01G0088570.1"/>
    <property type="gene ID" value="TraesKARUn01G0088570"/>
</dbReference>
<dbReference type="EnsemblPlants" id="TraesKARUn01G0088810.1">
    <property type="protein sequence ID" value="cds.TraesKARUn01G0088810.1"/>
    <property type="gene ID" value="TraesKARUn01G0088810"/>
</dbReference>
<dbReference type="EnsemblPlants" id="TraesKARUn01G0088980.1">
    <property type="protein sequence ID" value="cds.TraesKARUn01G0088980.1"/>
    <property type="gene ID" value="TraesKARUn01G0088980"/>
</dbReference>
<dbReference type="EnsemblPlants" id="TraesKARUn01G0089480.1">
    <property type="protein sequence ID" value="cds.TraesKARUn01G0089480.1"/>
    <property type="gene ID" value="TraesKARUn01G0089480"/>
</dbReference>
<dbReference type="EnsemblPlants" id="TraesKARUn01G0089530.1">
    <property type="protein sequence ID" value="cds.TraesKARUn01G0089530.1"/>
    <property type="gene ID" value="TraesKARUn01G0089530"/>
</dbReference>
<dbReference type="EnsemblPlants" id="TraesKARUn01G0089700.1">
    <property type="protein sequence ID" value="cds.TraesKARUn01G0089700.1"/>
    <property type="gene ID" value="TraesKARUn01G0089700"/>
</dbReference>
<dbReference type="EnsemblPlants" id="TraesKARUn01G0090030.1">
    <property type="protein sequence ID" value="cds.TraesKARUn01G0090030.1"/>
    <property type="gene ID" value="TraesKARUn01G0090030"/>
</dbReference>
<dbReference type="EnsemblPlants" id="TraesKARUn01G0090220.1">
    <property type="protein sequence ID" value="cds.TraesKARUn01G0090220.1"/>
    <property type="gene ID" value="TraesKARUn01G0090220"/>
</dbReference>
<dbReference type="EnsemblPlants" id="TraesKARUn01G0090410.1">
    <property type="protein sequence ID" value="cds.TraesKARUn01G0090410.1"/>
    <property type="gene ID" value="TraesKARUn01G0090410"/>
</dbReference>
<dbReference type="EnsemblPlants" id="TraesKARUn01G0090510.1">
    <property type="protein sequence ID" value="cds.TraesKARUn01G0090510.1"/>
    <property type="gene ID" value="TraesKARUn01G0090510"/>
</dbReference>
<dbReference type="EnsemblPlants" id="TraesKARUn01G0090700.1">
    <property type="protein sequence ID" value="cds.TraesKARUn01G0090700.1"/>
    <property type="gene ID" value="TraesKARUn01G0090700"/>
</dbReference>
<dbReference type="EnsemblPlants" id="TraesKARUn01G0090950.1">
    <property type="protein sequence ID" value="cds.TraesKARUn01G0090950.1"/>
    <property type="gene ID" value="TraesKARUn01G0090950"/>
</dbReference>
<dbReference type="EnsemblPlants" id="TraesKARUn01G0091290.1">
    <property type="protein sequence ID" value="cds.TraesKARUn01G0091290.1"/>
    <property type="gene ID" value="TraesKARUn01G0091290"/>
</dbReference>
<dbReference type="EnsemblPlants" id="TraesKARUn01G0091380.1">
    <property type="protein sequence ID" value="cds.TraesKARUn01G0091380.1"/>
    <property type="gene ID" value="TraesKARUn01G0091380"/>
</dbReference>
<dbReference type="EnsemblPlants" id="TraesKARUn01G0091530.1">
    <property type="protein sequence ID" value="cds.TraesKARUn01G0091530.1"/>
    <property type="gene ID" value="TraesKARUn01G0091530"/>
</dbReference>
<dbReference type="EnsemblPlants" id="TraesKARUn01G0091760.1">
    <property type="protein sequence ID" value="cds.TraesKARUn01G0091760.1"/>
    <property type="gene ID" value="TraesKARUn01G0091760"/>
</dbReference>
<dbReference type="EnsemblPlants" id="TraesKARUn01G0091910.1">
    <property type="protein sequence ID" value="cds.TraesKARUn01G0091910.1"/>
    <property type="gene ID" value="TraesKARUn01G0091910"/>
</dbReference>
<dbReference type="EnsemblPlants" id="TraesKARUn01G0091950.1">
    <property type="protein sequence ID" value="cds.TraesKARUn01G0091950.1"/>
    <property type="gene ID" value="TraesKARUn01G0091950"/>
</dbReference>
<dbReference type="EnsemblPlants" id="TraesKARUn01G0092260.1">
    <property type="protein sequence ID" value="cds.TraesKARUn01G0092260.1"/>
    <property type="gene ID" value="TraesKARUn01G0092260"/>
</dbReference>
<dbReference type="EnsemblPlants" id="TraesKARUn01G0092320.1">
    <property type="protein sequence ID" value="cds.TraesKARUn01G0092320.1"/>
    <property type="gene ID" value="TraesKARUn01G0092320"/>
</dbReference>
<dbReference type="EnsemblPlants" id="TraesKARUn01G0092470.1">
    <property type="protein sequence ID" value="cds.TraesKARUn01G0092470.1"/>
    <property type="gene ID" value="TraesKARUn01G0092470"/>
</dbReference>
<dbReference type="EnsemblPlants" id="TraesKARUn01G0092550.1">
    <property type="protein sequence ID" value="cds.TraesKARUn01G0092550.1"/>
    <property type="gene ID" value="TraesKARUn01G0092550"/>
</dbReference>
<dbReference type="EnsemblPlants" id="TraesKARUn01G0092610.1">
    <property type="protein sequence ID" value="cds.TraesKARUn01G0092610.1"/>
    <property type="gene ID" value="TraesKARUn01G0092610"/>
</dbReference>
<dbReference type="EnsemblPlants" id="TraesKARUn01G0092800.1">
    <property type="protein sequence ID" value="cds.TraesKARUn01G0092800.1"/>
    <property type="gene ID" value="TraesKARUn01G0092800"/>
</dbReference>
<dbReference type="EnsemblPlants" id="TraesKARUn01G0092810.1">
    <property type="protein sequence ID" value="cds.TraesKARUn01G0092810.1"/>
    <property type="gene ID" value="TraesKARUn01G0092810"/>
</dbReference>
<dbReference type="EnsemblPlants" id="TraesKARUn01G0092870.1">
    <property type="protein sequence ID" value="cds.TraesKARUn01G0092870.1"/>
    <property type="gene ID" value="TraesKARUn01G0092870"/>
</dbReference>
<dbReference type="EnsemblPlants" id="TraesKARUn01G0093020.1">
    <property type="protein sequence ID" value="cds.TraesKARUn01G0093020.1"/>
    <property type="gene ID" value="TraesKARUn01G0093020"/>
</dbReference>
<dbReference type="EnsemblPlants" id="TraesKARUn01G0093150.1">
    <property type="protein sequence ID" value="cds.TraesKARUn01G0093150.1"/>
    <property type="gene ID" value="TraesKARUn01G0093150"/>
</dbReference>
<dbReference type="EnsemblPlants" id="TraesKARUn01G0093180.1">
    <property type="protein sequence ID" value="cds.TraesKARUn01G0093180.1"/>
    <property type="gene ID" value="TraesKARUn01G0093180"/>
</dbReference>
<dbReference type="EnsemblPlants" id="TraesKARUn01G0093300.1">
    <property type="protein sequence ID" value="cds.TraesKARUn01G0093300.1"/>
    <property type="gene ID" value="TraesKARUn01G0093300"/>
</dbReference>
<dbReference type="EnsemblPlants" id="TraesKARUn01G0093330.1">
    <property type="protein sequence ID" value="cds.TraesKARUn01G0093330.1"/>
    <property type="gene ID" value="TraesKARUn01G0093330"/>
</dbReference>
<dbReference type="EnsemblPlants" id="TraesKARUn01G0093560.1">
    <property type="protein sequence ID" value="cds.TraesKARUn01G0093560.1"/>
    <property type="gene ID" value="TraesKARUn01G0093560"/>
</dbReference>
<dbReference type="EnsemblPlants" id="TraesKARUn01G0093670.1">
    <property type="protein sequence ID" value="cds.TraesKARUn01G0093670.1"/>
    <property type="gene ID" value="TraesKARUn01G0093670"/>
</dbReference>
<dbReference type="EnsemblPlants" id="TraesKARUn01G0093680.1">
    <property type="protein sequence ID" value="cds.TraesKARUn01G0093680.1"/>
    <property type="gene ID" value="TraesKARUn01G0093680"/>
</dbReference>
<dbReference type="EnsemblPlants" id="TraesKARUn01G0093840.1">
    <property type="protein sequence ID" value="cds.TraesKARUn01G0093840.1"/>
    <property type="gene ID" value="TraesKARUn01G0093840"/>
</dbReference>
<dbReference type="EnsemblPlants" id="TraesKARUn01G0094200.1">
    <property type="protein sequence ID" value="cds.TraesKARUn01G0094200.1"/>
    <property type="gene ID" value="TraesKARUn01G0094200"/>
</dbReference>
<dbReference type="EnsemblPlants" id="TraesKARUn01G0094540.1">
    <property type="protein sequence ID" value="cds.TraesKARUn01G0094540.1"/>
    <property type="gene ID" value="TraesKARUn01G0094540"/>
</dbReference>
<dbReference type="EnsemblPlants" id="TraesKARUn01G0094610.1">
    <property type="protein sequence ID" value="cds.TraesKARUn01G0094610.1"/>
    <property type="gene ID" value="TraesKARUn01G0094610"/>
</dbReference>
<dbReference type="EnsemblPlants" id="TraesKARUn01G0094690.1">
    <property type="protein sequence ID" value="cds.TraesKARUn01G0094690.1"/>
    <property type="gene ID" value="TraesKARUn01G0094690"/>
</dbReference>
<dbReference type="EnsemblPlants" id="TraesKARUn01G0094800.1">
    <property type="protein sequence ID" value="cds.TraesKARUn01G0094800.1"/>
    <property type="gene ID" value="TraesKARUn01G0094800"/>
</dbReference>
<dbReference type="EnsemblPlants" id="TraesKARUn01G0094920.1">
    <property type="protein sequence ID" value="cds.TraesKARUn01G0094920.1"/>
    <property type="gene ID" value="TraesKARUn01G0094920"/>
</dbReference>
<dbReference type="EnsemblPlants" id="TraesKARUn01G0095140.1">
    <property type="protein sequence ID" value="cds.TraesKARUn01G0095140.1"/>
    <property type="gene ID" value="TraesKARUn01G0095140"/>
</dbReference>
<dbReference type="EnsemblPlants" id="TraesKARUn01G0095200.1">
    <property type="protein sequence ID" value="cds.TraesKARUn01G0095200.1"/>
    <property type="gene ID" value="TraesKARUn01G0095200"/>
</dbReference>
<dbReference type="EnsemblPlants" id="TraesKARUn01G0095420.1">
    <property type="protein sequence ID" value="cds.TraesKARUn01G0095420.1"/>
    <property type="gene ID" value="TraesKARUn01G0095420"/>
</dbReference>
<dbReference type="EnsemblPlants" id="TraesKARUn01G0096840.1">
    <property type="protein sequence ID" value="cds.TraesKARUn01G0096840.1"/>
    <property type="gene ID" value="TraesKARUn01G0096840"/>
</dbReference>
<dbReference type="EnsemblPlants" id="TraesKARUn01G0097280.1">
    <property type="protein sequence ID" value="cds.TraesKARUn01G0097280.1"/>
    <property type="gene ID" value="TraesKARUn01G0097280"/>
</dbReference>
<dbReference type="EnsemblPlants" id="TraesKARUn01G0097340.1">
    <property type="protein sequence ID" value="cds.TraesKARUn01G0097340.1"/>
    <property type="gene ID" value="TraesKARUn01G0097340"/>
</dbReference>
<dbReference type="EnsemblPlants" id="TraesKARUn01G0097610.1">
    <property type="protein sequence ID" value="cds.TraesKARUn01G0097610.1"/>
    <property type="gene ID" value="TraesKARUn01G0097610"/>
</dbReference>
<dbReference type="EnsemblPlants" id="TraesKARUn01G0097940.1">
    <property type="protein sequence ID" value="cds.TraesKARUn01G0097940.1"/>
    <property type="gene ID" value="TraesKARUn01G0097940"/>
</dbReference>
<dbReference type="EnsemblPlants" id="TraesKARUn01G0098370.1">
    <property type="protein sequence ID" value="cds.TraesKARUn01G0098370.1"/>
    <property type="gene ID" value="TraesKARUn01G0098370"/>
</dbReference>
<dbReference type="EnsemblPlants" id="TraesKARUn01G0098940.1">
    <property type="protein sequence ID" value="cds.TraesKARUn01G0098940.1"/>
    <property type="gene ID" value="TraesKARUn01G0098940"/>
</dbReference>
<dbReference type="EnsemblPlants" id="TraesKARUn01G0099100.1">
    <property type="protein sequence ID" value="cds.TraesKARUn01G0099100.1"/>
    <property type="gene ID" value="TraesKARUn01G0099100"/>
</dbReference>
<dbReference type="EnsemblPlants" id="TraesKARUn01G0099580.1">
    <property type="protein sequence ID" value="cds.TraesKARUn01G0099580.1"/>
    <property type="gene ID" value="TraesKARUn01G0099580"/>
</dbReference>
<dbReference type="EnsemblPlants" id="TraesKARUn01G0100810.1">
    <property type="protein sequence ID" value="cds.TraesKARUn01G0100810.1"/>
    <property type="gene ID" value="TraesKARUn01G0100810"/>
</dbReference>
<dbReference type="EnsemblPlants" id="TraesKARUn01G0101240.1">
    <property type="protein sequence ID" value="cds.TraesKARUn01G0101240.1"/>
    <property type="gene ID" value="TraesKARUn01G0101240"/>
</dbReference>
<dbReference type="EnsemblPlants" id="TraesKARUn01G0101370.1">
    <property type="protein sequence ID" value="cds.TraesKARUn01G0101370.1"/>
    <property type="gene ID" value="TraesKARUn01G0101370"/>
</dbReference>
<dbReference type="EnsemblPlants" id="TraesKARUn01G0101450.1">
    <property type="protein sequence ID" value="cds.TraesKARUn01G0101450.1"/>
    <property type="gene ID" value="TraesKARUn01G0101450"/>
</dbReference>
<dbReference type="EnsemblPlants" id="TraesKARUn01G0101540.1">
    <property type="protein sequence ID" value="cds.TraesKARUn01G0101540.1"/>
    <property type="gene ID" value="TraesKARUn01G0101540"/>
</dbReference>
<dbReference type="EnsemblPlants" id="TraesKARUn01G0101580.1">
    <property type="protein sequence ID" value="cds.TraesKARUn01G0101580.1"/>
    <property type="gene ID" value="TraesKARUn01G0101580"/>
</dbReference>
<dbReference type="EnsemblPlants" id="TraesKARUn01G0101690.1">
    <property type="protein sequence ID" value="cds.TraesKARUn01G0101690.1"/>
    <property type="gene ID" value="TraesKARUn01G0101690"/>
</dbReference>
<dbReference type="EnsemblPlants" id="TraesKARUn01G0101900.1">
    <property type="protein sequence ID" value="cds.TraesKARUn01G0101900.1"/>
    <property type="gene ID" value="TraesKARUn01G0101900"/>
</dbReference>
<dbReference type="EnsemblPlants" id="TraesKARUn01G0101970.1">
    <property type="protein sequence ID" value="cds.TraesKARUn01G0101970.1"/>
    <property type="gene ID" value="TraesKARUn01G0101970"/>
</dbReference>
<dbReference type="EnsemblPlants" id="TraesKARUn01G0102270.1">
    <property type="protein sequence ID" value="cds.TraesKARUn01G0102270.1"/>
    <property type="gene ID" value="TraesKARUn01G0102270"/>
</dbReference>
<dbReference type="EnsemblPlants" id="TraesKARUn01G0102280.1">
    <property type="protein sequence ID" value="cds.TraesKARUn01G0102280.1"/>
    <property type="gene ID" value="TraesKARUn01G0102280"/>
</dbReference>
<dbReference type="EnsemblPlants" id="TraesKARUn01G0102620.1">
    <property type="protein sequence ID" value="cds.TraesKARUn01G0102620.1"/>
    <property type="gene ID" value="TraesKARUn01G0102620"/>
</dbReference>
<dbReference type="EnsemblPlants" id="TraesKARUn01G0102670.1">
    <property type="protein sequence ID" value="cds.TraesKARUn01G0102670.1"/>
    <property type="gene ID" value="TraesKARUn01G0102670"/>
</dbReference>
<dbReference type="EnsemblPlants" id="TraesKARUn01G0102920.1">
    <property type="protein sequence ID" value="cds.TraesKARUn01G0102920.1"/>
    <property type="gene ID" value="TraesKARUn01G0102920"/>
</dbReference>
<dbReference type="EnsemblPlants" id="TraesKARUn01G0103080.1">
    <property type="protein sequence ID" value="cds.TraesKARUn01G0103080.1"/>
    <property type="gene ID" value="TraesKARUn01G0103080"/>
</dbReference>
<dbReference type="EnsemblPlants" id="TraesKARUn01G0103130.1">
    <property type="protein sequence ID" value="cds.TraesKARUn01G0103130.1"/>
    <property type="gene ID" value="TraesKARUn01G0103130"/>
</dbReference>
<dbReference type="EnsemblPlants" id="TraesKARUn01G0103220.1">
    <property type="protein sequence ID" value="cds.TraesKARUn01G0103220.1"/>
    <property type="gene ID" value="TraesKARUn01G0103220"/>
</dbReference>
<dbReference type="EnsemblPlants" id="TraesKARUn01G0103290.1">
    <property type="protein sequence ID" value="cds.TraesKARUn01G0103290.1"/>
    <property type="gene ID" value="TraesKARUn01G0103290"/>
</dbReference>
<dbReference type="EnsemblPlants" id="TraesKARUn01G0103640.1">
    <property type="protein sequence ID" value="cds.TraesKARUn01G0103640.1"/>
    <property type="gene ID" value="TraesKARUn01G0103640"/>
</dbReference>
<dbReference type="EnsemblPlants" id="TraesKARUn01G0103960.1">
    <property type="protein sequence ID" value="cds.TraesKARUn01G0103960.1"/>
    <property type="gene ID" value="TraesKARUn01G0103960"/>
</dbReference>
<dbReference type="EnsemblPlants" id="TraesKARUn01G0104100.1">
    <property type="protein sequence ID" value="cds.TraesKARUn01G0104100.1"/>
    <property type="gene ID" value="TraesKARUn01G0104100"/>
</dbReference>
<dbReference type="EnsemblPlants" id="TraesKARUn01G0104510.1">
    <property type="protein sequence ID" value="cds.TraesKARUn01G0104510.1"/>
    <property type="gene ID" value="TraesKARUn01G0104510"/>
</dbReference>
<dbReference type="EnsemblPlants" id="TraesKARUn01G0104570.1">
    <property type="protein sequence ID" value="cds.TraesKARUn01G0104570.1"/>
    <property type="gene ID" value="TraesKARUn01G0104570"/>
</dbReference>
<dbReference type="EnsemblPlants" id="TraesKARUn01G0104770.1">
    <property type="protein sequence ID" value="cds.TraesKARUn01G0104770.1"/>
    <property type="gene ID" value="TraesKARUn01G0104770"/>
</dbReference>
<dbReference type="EnsemblPlants" id="TraesKARUn01G0104950.1">
    <property type="protein sequence ID" value="cds.TraesKARUn01G0104950.1"/>
    <property type="gene ID" value="TraesKARUn01G0104950"/>
</dbReference>
<dbReference type="EnsemblPlants" id="TraesKARUn01G0105080.1">
    <property type="protein sequence ID" value="cds.TraesKARUn01G0105080.1"/>
    <property type="gene ID" value="TraesKARUn01G0105080"/>
</dbReference>
<dbReference type="EnsemblPlants" id="TraesKARUn01G0105260.1">
    <property type="protein sequence ID" value="cds.TraesKARUn01G0105260.1"/>
    <property type="gene ID" value="TraesKARUn01G0105260"/>
</dbReference>
<dbReference type="EnsemblPlants" id="TraesKARUn01G0105340.1">
    <property type="protein sequence ID" value="cds.TraesKARUn01G0105340.1"/>
    <property type="gene ID" value="TraesKARUn01G0105340"/>
</dbReference>
<dbReference type="EnsemblPlants" id="TraesKARUn01G0105430.1">
    <property type="protein sequence ID" value="cds.TraesKARUn01G0105430.1"/>
    <property type="gene ID" value="TraesKARUn01G0105430"/>
</dbReference>
<dbReference type="EnsemblPlants" id="TraesKARUn01G0105500.1">
    <property type="protein sequence ID" value="cds.TraesKARUn01G0105500.1"/>
    <property type="gene ID" value="TraesKARUn01G0105500"/>
</dbReference>
<dbReference type="EnsemblPlants" id="TraesKARUn01G0105780.1">
    <property type="protein sequence ID" value="cds.TraesKARUn01G0105780.1"/>
    <property type="gene ID" value="TraesKARUn01G0105780"/>
</dbReference>
<dbReference type="EnsemblPlants" id="TraesKARUn01G0105820.1">
    <property type="protein sequence ID" value="cds.TraesKARUn01G0105820.1"/>
    <property type="gene ID" value="TraesKARUn01G0105820"/>
</dbReference>
<dbReference type="EnsemblPlants" id="TraesKARUn01G0106200.1">
    <property type="protein sequence ID" value="cds.TraesKARUn01G0106200.1"/>
    <property type="gene ID" value="TraesKARUn01G0106200"/>
</dbReference>
<dbReference type="EnsemblPlants" id="TraesKARUn01G0106470.1">
    <property type="protein sequence ID" value="cds.TraesKARUn01G0106470.1"/>
    <property type="gene ID" value="TraesKARUn01G0106470"/>
</dbReference>
<dbReference type="EnsemblPlants" id="TraesKARUn01G0106510.1">
    <property type="protein sequence ID" value="cds.TraesKARUn01G0106510.1"/>
    <property type="gene ID" value="TraesKARUn01G0106510"/>
</dbReference>
<dbReference type="EnsemblPlants" id="TraesKARUn01G0107040.1">
    <property type="protein sequence ID" value="cds.TraesKARUn01G0107040.1"/>
    <property type="gene ID" value="TraesKARUn01G0107040"/>
</dbReference>
<dbReference type="EnsemblPlants" id="TraesKARUn01G0107060.1">
    <property type="protein sequence ID" value="cds.TraesKARUn01G0107060.1"/>
    <property type="gene ID" value="TraesKARUn01G0107060"/>
</dbReference>
<dbReference type="EnsemblPlants" id="TraesKARUn01G0107370.1">
    <property type="protein sequence ID" value="cds.TraesKARUn01G0107370.1"/>
    <property type="gene ID" value="TraesKARUn01G0107370"/>
</dbReference>
<dbReference type="EnsemblPlants" id="TraesKARUn01G0107530.1">
    <property type="protein sequence ID" value="cds.TraesKARUn01G0107530.1"/>
    <property type="gene ID" value="TraesKARUn01G0107530"/>
</dbReference>
<dbReference type="EnsemblPlants" id="TraesKARUn01G0107860.1">
    <property type="protein sequence ID" value="cds.TraesKARUn01G0107860.1"/>
    <property type="gene ID" value="TraesKARUn01G0107860"/>
</dbReference>
<dbReference type="EnsemblPlants" id="TraesKARUn01G0108070.1">
    <property type="protein sequence ID" value="cds.TraesKARUn01G0108070.1"/>
    <property type="gene ID" value="TraesKARUn01G0108070"/>
</dbReference>
<dbReference type="EnsemblPlants" id="TraesKARUn01G0108200.1">
    <property type="protein sequence ID" value="cds.TraesKARUn01G0108200.1"/>
    <property type="gene ID" value="TraesKARUn01G0108200"/>
</dbReference>
<dbReference type="EnsemblPlants" id="TraesKARUn01G0108440.1">
    <property type="protein sequence ID" value="cds.TraesKARUn01G0108440.1"/>
    <property type="gene ID" value="TraesKARUn01G0108440"/>
</dbReference>
<dbReference type="EnsemblPlants" id="TraesKARUn01G0108500.1">
    <property type="protein sequence ID" value="cds.TraesKARUn01G0108500.1"/>
    <property type="gene ID" value="TraesKARUn01G0108500"/>
</dbReference>
<dbReference type="EnsemblPlants" id="TraesKARUn01G0108630.1">
    <property type="protein sequence ID" value="cds.TraesKARUn01G0108630.1"/>
    <property type="gene ID" value="TraesKARUn01G0108630"/>
</dbReference>
<dbReference type="EnsemblPlants" id="TraesKARUn01G0108680.1">
    <property type="protein sequence ID" value="cds.TraesKARUn01G0108680.1"/>
    <property type="gene ID" value="TraesKARUn01G0108680"/>
</dbReference>
<dbReference type="EnsemblPlants" id="TraesKARUn01G0108720.1">
    <property type="protein sequence ID" value="cds.TraesKARUn01G0108720.1"/>
    <property type="gene ID" value="TraesKARUn01G0108720"/>
</dbReference>
<dbReference type="EnsemblPlants" id="TraesKARUn01G0108790.1">
    <property type="protein sequence ID" value="cds.TraesKARUn01G0108790.1"/>
    <property type="gene ID" value="TraesKARUn01G0108790"/>
</dbReference>
<dbReference type="EnsemblPlants" id="TraesKARUn01G0109130.1">
    <property type="protein sequence ID" value="cds.TraesKARUn01G0109130.1"/>
    <property type="gene ID" value="TraesKARUn01G0109130"/>
</dbReference>
<dbReference type="EnsemblPlants" id="TraesKARUn01G0109190.1">
    <property type="protein sequence ID" value="cds.TraesKARUn01G0109190.1"/>
    <property type="gene ID" value="TraesKARUn01G0109190"/>
</dbReference>
<dbReference type="EnsemblPlants" id="TraesKARUn01G0109300.1">
    <property type="protein sequence ID" value="cds.TraesKARUn01G0109300.1"/>
    <property type="gene ID" value="TraesKARUn01G0109300"/>
</dbReference>
<dbReference type="EnsemblPlants" id="TraesKARUn01G0109330.1">
    <property type="protein sequence ID" value="cds.TraesKARUn01G0109330.1"/>
    <property type="gene ID" value="TraesKARUn01G0109330"/>
</dbReference>
<dbReference type="EnsemblPlants" id="TraesKARUn01G0109350.1">
    <property type="protein sequence ID" value="cds.TraesKARUn01G0109350.1"/>
    <property type="gene ID" value="TraesKARUn01G0109350"/>
</dbReference>
<dbReference type="EnsemblPlants" id="TraesKARUn01G0109530.1">
    <property type="protein sequence ID" value="cds.TraesKARUn01G0109530.1"/>
    <property type="gene ID" value="TraesKARUn01G0109530"/>
</dbReference>
<dbReference type="EnsemblPlants" id="TraesKARUn01G0109570.1">
    <property type="protein sequence ID" value="cds.TraesKARUn01G0109570.1"/>
    <property type="gene ID" value="TraesKARUn01G0109570"/>
</dbReference>
<dbReference type="EnsemblPlants" id="TraesKARUn01G0109870.1">
    <property type="protein sequence ID" value="cds.TraesKARUn01G0109870.1"/>
    <property type="gene ID" value="TraesKARUn01G0109870"/>
</dbReference>
<dbReference type="EnsemblPlants" id="TraesKARUn01G0110000.1">
    <property type="protein sequence ID" value="cds.TraesKARUn01G0110000.1"/>
    <property type="gene ID" value="TraesKARUn01G0110000"/>
</dbReference>
<dbReference type="EnsemblPlants" id="TraesKARUn01G0110340.1">
    <property type="protein sequence ID" value="cds.TraesKARUn01G0110340.1"/>
    <property type="gene ID" value="TraesKARUn01G0110340"/>
</dbReference>
<dbReference type="EnsemblPlants" id="TraesKARUn01G0110450.1">
    <property type="protein sequence ID" value="cds.TraesKARUn01G0110450.1"/>
    <property type="gene ID" value="TraesKARUn01G0110450"/>
</dbReference>
<dbReference type="EnsemblPlants" id="TraesKARUn01G0110460.1">
    <property type="protein sequence ID" value="cds.TraesKARUn01G0110460.1"/>
    <property type="gene ID" value="TraesKARUn01G0110460"/>
</dbReference>
<dbReference type="EnsemblPlants" id="TraesKARUn01G0110690.1">
    <property type="protein sequence ID" value="cds.TraesKARUn01G0110690.1"/>
    <property type="gene ID" value="TraesKARUn01G0110690"/>
</dbReference>
<dbReference type="EnsemblPlants" id="TraesKARUn01G0110910.1">
    <property type="protein sequence ID" value="cds.TraesKARUn01G0110910.1"/>
    <property type="gene ID" value="TraesKARUn01G0110910"/>
</dbReference>
<dbReference type="EnsemblPlants" id="TraesKARUn01G0111080.1">
    <property type="protein sequence ID" value="cds.TraesKARUn01G0111080.1"/>
    <property type="gene ID" value="TraesKARUn01G0111080"/>
</dbReference>
<dbReference type="EnsemblPlants" id="TraesKARUn01G0111380.1">
    <property type="protein sequence ID" value="cds.TraesKARUn01G0111380.1"/>
    <property type="gene ID" value="TraesKARUn01G0111380"/>
</dbReference>
<dbReference type="EnsemblPlants" id="TraesKARUn01G0111470.1">
    <property type="protein sequence ID" value="cds.TraesKARUn01G0111470.1"/>
    <property type="gene ID" value="TraesKARUn01G0111470"/>
</dbReference>
<dbReference type="EnsemblPlants" id="TraesKARUn01G0111580.1">
    <property type="protein sequence ID" value="cds.TraesKARUn01G0111580.1"/>
    <property type="gene ID" value="TraesKARUn01G0111580"/>
</dbReference>
<dbReference type="EnsemblPlants" id="TraesKARUn01G0111670.1">
    <property type="protein sequence ID" value="cds.TraesKARUn01G0111670.1"/>
    <property type="gene ID" value="TraesKARUn01G0111670"/>
</dbReference>
<dbReference type="EnsemblPlants" id="TraesKARUn01G0111850.1">
    <property type="protein sequence ID" value="cds.TraesKARUn01G0111850.1"/>
    <property type="gene ID" value="TraesKARUn01G0111850"/>
</dbReference>
<dbReference type="EnsemblPlants" id="TraesKARUn01G0111970.1">
    <property type="protein sequence ID" value="cds.TraesKARUn01G0111970.1"/>
    <property type="gene ID" value="TraesKARUn01G0111970"/>
</dbReference>
<dbReference type="EnsemblPlants" id="TraesKARUn01G0112030.1">
    <property type="protein sequence ID" value="cds.TraesKARUn01G0112030.1"/>
    <property type="gene ID" value="TraesKARUn01G0112030"/>
</dbReference>
<dbReference type="EnsemblPlants" id="TraesKARUn01G0112050.1">
    <property type="protein sequence ID" value="cds.TraesKARUn01G0112050.1"/>
    <property type="gene ID" value="TraesKARUn01G0112050"/>
</dbReference>
<dbReference type="EnsemblPlants" id="TraesKARUn01G0112460.1">
    <property type="protein sequence ID" value="cds.TraesKARUn01G0112460.1"/>
    <property type="gene ID" value="TraesKARUn01G0112460"/>
</dbReference>
<dbReference type="EnsemblPlants" id="TraesKARUn01G0112780.1">
    <property type="protein sequence ID" value="cds.TraesKARUn01G0112780.1"/>
    <property type="gene ID" value="TraesKARUn01G0112780"/>
</dbReference>
<dbReference type="EnsemblPlants" id="TraesKARUn01G0113070.1">
    <property type="protein sequence ID" value="cds.TraesKARUn01G0113070.1"/>
    <property type="gene ID" value="TraesKARUn01G0113070"/>
</dbReference>
<dbReference type="EnsemblPlants" id="TraesKARUn01G0113180.1">
    <property type="protein sequence ID" value="cds.TraesKARUn01G0113180.1"/>
    <property type="gene ID" value="TraesKARUn01G0113180"/>
</dbReference>
<dbReference type="EnsemblPlants" id="TraesKARUn01G0113260.1">
    <property type="protein sequence ID" value="cds.TraesKARUn01G0113260.1"/>
    <property type="gene ID" value="TraesKARUn01G0113260"/>
</dbReference>
<dbReference type="EnsemblPlants" id="TraesKARUn01G0113300.1">
    <property type="protein sequence ID" value="cds.TraesKARUn01G0113300.1"/>
    <property type="gene ID" value="TraesKARUn01G0113300"/>
</dbReference>
<dbReference type="EnsemblPlants" id="TraesKARUn01G0113400.1">
    <property type="protein sequence ID" value="cds.TraesKARUn01G0113400.1"/>
    <property type="gene ID" value="TraesKARUn01G0113400"/>
</dbReference>
<dbReference type="EnsemblPlants" id="TraesKARUn01G0113540.1">
    <property type="protein sequence ID" value="cds.TraesKARUn01G0113540.1"/>
    <property type="gene ID" value="TraesKARUn01G0113540"/>
</dbReference>
<dbReference type="EnsemblPlants" id="TraesKARUn01G0113760.1">
    <property type="protein sequence ID" value="cds.TraesKARUn01G0113760.1"/>
    <property type="gene ID" value="TraesKARUn01G0113760"/>
</dbReference>
<dbReference type="EnsemblPlants" id="TraesKARUn01G0113920.1">
    <property type="protein sequence ID" value="cds.TraesKARUn01G0113920.1"/>
    <property type="gene ID" value="TraesKARUn01G0113920"/>
</dbReference>
<dbReference type="EnsemblPlants" id="TraesKARUn01G0113970.1">
    <property type="protein sequence ID" value="cds.TraesKARUn01G0113970.1"/>
    <property type="gene ID" value="TraesKARUn01G0113970"/>
</dbReference>
<dbReference type="EnsemblPlants" id="TraesKARUn01G0114020.1">
    <property type="protein sequence ID" value="cds.TraesKARUn01G0114020.1"/>
    <property type="gene ID" value="TraesKARUn01G0114020"/>
</dbReference>
<dbReference type="EnsemblPlants" id="TraesKARUn01G0114050.1">
    <property type="protein sequence ID" value="cds.TraesKARUn01G0114050.1"/>
    <property type="gene ID" value="TraesKARUn01G0114050"/>
</dbReference>
<dbReference type="EnsemblPlants" id="TraesKARUn01G0114080.1">
    <property type="protein sequence ID" value="cds.TraesKARUn01G0114080.1"/>
    <property type="gene ID" value="TraesKARUn01G0114080"/>
</dbReference>
<dbReference type="EnsemblPlants" id="TraesKARUn01G0114110.1">
    <property type="protein sequence ID" value="cds.TraesKARUn01G0114110.1"/>
    <property type="gene ID" value="TraesKARUn01G0114110"/>
</dbReference>
<dbReference type="EnsemblPlants" id="TraesKARUn01G0114480.1">
    <property type="protein sequence ID" value="cds.TraesKARUn01G0114480.1"/>
    <property type="gene ID" value="TraesKARUn01G0114480"/>
</dbReference>
<dbReference type="EnsemblPlants" id="TraesKARUn01G0114550.1">
    <property type="protein sequence ID" value="cds.TraesKARUn01G0114550.1"/>
    <property type="gene ID" value="TraesKARUn01G0114550"/>
</dbReference>
<dbReference type="EnsemblPlants" id="TraesKARUn01G0114720.1">
    <property type="protein sequence ID" value="cds.TraesKARUn01G0114720.1"/>
    <property type="gene ID" value="TraesKARUn01G0114720"/>
</dbReference>
<dbReference type="EnsemblPlants" id="TraesKARUn01G0114820.1">
    <property type="protein sequence ID" value="cds.TraesKARUn01G0114820.1"/>
    <property type="gene ID" value="TraesKARUn01G0114820"/>
</dbReference>
<dbReference type="EnsemblPlants" id="TraesKARUn01G0114840.1">
    <property type="protein sequence ID" value="cds.TraesKARUn01G0114840.1"/>
    <property type="gene ID" value="TraesKARUn01G0114840"/>
</dbReference>
<dbReference type="EnsemblPlants" id="TraesKARUn01G0114850.1">
    <property type="protein sequence ID" value="cds.TraesKARUn01G0114850.1"/>
    <property type="gene ID" value="TraesKARUn01G0114850"/>
</dbReference>
<dbReference type="EnsemblPlants" id="TraesKARUn01G0114920.1">
    <property type="protein sequence ID" value="cds.TraesKARUn01G0114920.1"/>
    <property type="gene ID" value="TraesKARUn01G0114920"/>
</dbReference>
<dbReference type="EnsemblPlants" id="TraesKARUn01G0115540.1">
    <property type="protein sequence ID" value="cds.TraesKARUn01G0115540.1"/>
    <property type="gene ID" value="TraesKARUn01G0115540"/>
</dbReference>
<dbReference type="EnsemblPlants" id="TraesKARUn01G0115600.1">
    <property type="protein sequence ID" value="cds.TraesKARUn01G0115600.1"/>
    <property type="gene ID" value="TraesKARUn01G0115600"/>
</dbReference>
<dbReference type="EnsemblPlants" id="TraesKARUn01G0115870.1">
    <property type="protein sequence ID" value="cds.TraesKARUn01G0115870.1"/>
    <property type="gene ID" value="TraesKARUn01G0115870"/>
</dbReference>
<dbReference type="EnsemblPlants" id="TraesKARUn01G0116030.1">
    <property type="protein sequence ID" value="cds.TraesKARUn01G0116030.1"/>
    <property type="gene ID" value="TraesKARUn01G0116030"/>
</dbReference>
<dbReference type="EnsemblPlants" id="TraesKARUn01G0116170.1">
    <property type="protein sequence ID" value="cds.TraesKARUn01G0116170.1"/>
    <property type="gene ID" value="TraesKARUn01G0116170"/>
</dbReference>
<dbReference type="EnsemblPlants" id="TraesKARUn01G0116310.1">
    <property type="protein sequence ID" value="cds.TraesKARUn01G0116310.1"/>
    <property type="gene ID" value="TraesKARUn01G0116310"/>
</dbReference>
<dbReference type="EnsemblPlants" id="TraesKARUn01G0116660.1">
    <property type="protein sequence ID" value="cds.TraesKARUn01G0116660.1"/>
    <property type="gene ID" value="TraesKARUn01G0116660"/>
</dbReference>
<dbReference type="EnsemblPlants" id="TraesKARUn01G0116670.1">
    <property type="protein sequence ID" value="cds.TraesKARUn01G0116670.1"/>
    <property type="gene ID" value="TraesKARUn01G0116670"/>
</dbReference>
<dbReference type="EnsemblPlants" id="TraesKARUn01G0117740.1">
    <property type="protein sequence ID" value="cds.TraesKARUn01G0117740.1"/>
    <property type="gene ID" value="TraesKARUn01G0117740"/>
</dbReference>
<dbReference type="EnsemblPlants" id="TraesKARUn01G0117760.1">
    <property type="protein sequence ID" value="cds.TraesKARUn01G0117760.1"/>
    <property type="gene ID" value="TraesKARUn01G0117760"/>
</dbReference>
<dbReference type="EnsemblPlants" id="TraesKARUn01G0117770.1">
    <property type="protein sequence ID" value="cds.TraesKARUn01G0117770.1"/>
    <property type="gene ID" value="TraesKARUn01G0117770"/>
</dbReference>
<dbReference type="EnsemblPlants" id="TraesKARUn01G0117810.1">
    <property type="protein sequence ID" value="cds.TraesKARUn01G0117810.1"/>
    <property type="gene ID" value="TraesKARUn01G0117810"/>
</dbReference>
<dbReference type="EnsemblPlants" id="TraesKARUn01G0118140.1">
    <property type="protein sequence ID" value="cds.TraesKARUn01G0118140.1"/>
    <property type="gene ID" value="TraesKARUn01G0118140"/>
</dbReference>
<dbReference type="EnsemblPlants" id="TraesKARUn01G0118240.1">
    <property type="protein sequence ID" value="cds.TraesKARUn01G0118240.1"/>
    <property type="gene ID" value="TraesKARUn01G0118240"/>
</dbReference>
<dbReference type="EnsemblPlants" id="TraesKARUn01G0118320.1">
    <property type="protein sequence ID" value="cds.TraesKARUn01G0118320.1"/>
    <property type="gene ID" value="TraesKARUn01G0118320"/>
</dbReference>
<dbReference type="EnsemblPlants" id="TraesKARUn01G0118480.1">
    <property type="protein sequence ID" value="cds.TraesKARUn01G0118480.1"/>
    <property type="gene ID" value="TraesKARUn01G0118480"/>
</dbReference>
<dbReference type="EnsemblPlants" id="TraesKARUn01G0119090.1">
    <property type="protein sequence ID" value="cds.TraesKARUn01G0119090.1"/>
    <property type="gene ID" value="TraesKARUn01G0119090"/>
</dbReference>
<dbReference type="EnsemblPlants" id="TraesKARUn01G0119220.1">
    <property type="protein sequence ID" value="cds.TraesKARUn01G0119220.1"/>
    <property type="gene ID" value="TraesKARUn01G0119220"/>
</dbReference>
<dbReference type="EnsemblPlants" id="TraesKARUn01G0119620.1">
    <property type="protein sequence ID" value="cds.TraesKARUn01G0119620.1"/>
    <property type="gene ID" value="TraesKARUn01G0119620"/>
</dbReference>
<dbReference type="EnsemblPlants" id="TraesKARUn01G0119800.1">
    <property type="protein sequence ID" value="cds.TraesKARUn01G0119800.1"/>
    <property type="gene ID" value="TraesKARUn01G0119800"/>
</dbReference>
<dbReference type="EnsemblPlants" id="TraesKARUn01G0120030.1">
    <property type="protein sequence ID" value="cds.TraesKARUn01G0120030.1"/>
    <property type="gene ID" value="TraesKARUn01G0120030"/>
</dbReference>
<dbReference type="EnsemblPlants" id="TraesKARUn01G0120300.1">
    <property type="protein sequence ID" value="cds.TraesKARUn01G0120300.1"/>
    <property type="gene ID" value="TraesKARUn01G0120300"/>
</dbReference>
<dbReference type="EnsemblPlants" id="TraesKARUn01G0120790.1">
    <property type="protein sequence ID" value="cds.TraesKARUn01G0120790.1"/>
    <property type="gene ID" value="TraesKARUn01G0120790"/>
</dbReference>
<dbReference type="EnsemblPlants" id="TraesKARUn01G0121030.1">
    <property type="protein sequence ID" value="cds.TraesKARUn01G0121030.1"/>
    <property type="gene ID" value="TraesKARUn01G0121030"/>
</dbReference>
<dbReference type="EnsemblPlants" id="TraesKARUn01G0121600.1">
    <property type="protein sequence ID" value="cds.TraesKARUn01G0121600.1"/>
    <property type="gene ID" value="TraesKARUn01G0121600"/>
</dbReference>
<dbReference type="EnsemblPlants" id="TraesKARUn01G0121630.1">
    <property type="protein sequence ID" value="cds.TraesKARUn01G0121630.1"/>
    <property type="gene ID" value="TraesKARUn01G0121630"/>
</dbReference>
<dbReference type="EnsemblPlants" id="TraesKARUn01G0122070.1">
    <property type="protein sequence ID" value="cds.TraesKARUn01G0122070.1"/>
    <property type="gene ID" value="TraesKARUn01G0122070"/>
</dbReference>
<dbReference type="EnsemblPlants" id="TraesKARUn01G0122210.1">
    <property type="protein sequence ID" value="cds.TraesKARUn01G0122210.1"/>
    <property type="gene ID" value="TraesKARUn01G0122210"/>
</dbReference>
<dbReference type="EnsemblPlants" id="TraesKARUn01G0122330.1">
    <property type="protein sequence ID" value="cds.TraesKARUn01G0122330.1"/>
    <property type="gene ID" value="TraesKARUn01G0122330"/>
</dbReference>
<dbReference type="EnsemblPlants" id="TraesKARUn01G0122520.1">
    <property type="protein sequence ID" value="cds.TraesKARUn01G0122520.1"/>
    <property type="gene ID" value="TraesKARUn01G0122520"/>
</dbReference>
<dbReference type="EnsemblPlants" id="TraesKARUn01G0122550.1">
    <property type="protein sequence ID" value="cds.TraesKARUn01G0122550.1"/>
    <property type="gene ID" value="TraesKARUn01G0122550"/>
</dbReference>
<dbReference type="EnsemblPlants" id="TraesKARUn01G0122660.1">
    <property type="protein sequence ID" value="cds.TraesKARUn01G0122660.1"/>
    <property type="gene ID" value="TraesKARUn01G0122660"/>
</dbReference>
<dbReference type="EnsemblPlants" id="TraesKARUn01G0122760.1">
    <property type="protein sequence ID" value="cds.TraesKARUn01G0122760.1"/>
    <property type="gene ID" value="TraesKARUn01G0122760"/>
</dbReference>
<dbReference type="EnsemblPlants" id="TraesKARUn01G0122930.1">
    <property type="protein sequence ID" value="cds.TraesKARUn01G0122930.1"/>
    <property type="gene ID" value="TraesKARUn01G0122930"/>
</dbReference>
<dbReference type="EnsemblPlants" id="TraesKARUn01G0123120.1">
    <property type="protein sequence ID" value="cds.TraesKARUn01G0123120.1"/>
    <property type="gene ID" value="TraesKARUn01G0123120"/>
</dbReference>
<dbReference type="EnsemblPlants" id="TraesKARUn01G0123450.1">
    <property type="protein sequence ID" value="cds.TraesKARUn01G0123450.1"/>
    <property type="gene ID" value="TraesKARUn01G0123450"/>
</dbReference>
<dbReference type="EnsemblPlants" id="TraesKARUn01G0123870.1">
    <property type="protein sequence ID" value="cds.TraesKARUn01G0123870.1"/>
    <property type="gene ID" value="TraesKARUn01G0123870"/>
</dbReference>
<dbReference type="EnsemblPlants" id="TraesKARUn01G0124040.1">
    <property type="protein sequence ID" value="cds.TraesKARUn01G0124040.1"/>
    <property type="gene ID" value="TraesKARUn01G0124040"/>
</dbReference>
<dbReference type="EnsemblPlants" id="TraesKARUn01G0124050.1">
    <property type="protein sequence ID" value="cds.TraesKARUn01G0124050.1"/>
    <property type="gene ID" value="TraesKARUn01G0124050"/>
</dbReference>
<dbReference type="EnsemblPlants" id="TraesKARUn01G0124660.1">
    <property type="protein sequence ID" value="cds.TraesKARUn01G0124660.1"/>
    <property type="gene ID" value="TraesKARUn01G0124660"/>
</dbReference>
<dbReference type="EnsemblPlants" id="TraesKARUn01G0125290.1">
    <property type="protein sequence ID" value="cds.TraesKARUn01G0125290.1"/>
    <property type="gene ID" value="TraesKARUn01G0125290"/>
</dbReference>
<dbReference type="EnsemblPlants" id="TraesKARUn01G0125700.1">
    <property type="protein sequence ID" value="cds.TraesKARUn01G0125700.1"/>
    <property type="gene ID" value="TraesKARUn01G0125700"/>
</dbReference>
<dbReference type="EnsemblPlants" id="TraesKARUn01G0126180.1">
    <property type="protein sequence ID" value="cds.TraesKARUn01G0126180.1"/>
    <property type="gene ID" value="TraesKARUn01G0126180"/>
</dbReference>
<dbReference type="EnsemblPlants" id="TraesKARUn01G0126250.1">
    <property type="protein sequence ID" value="cds.TraesKARUn01G0126250.1"/>
    <property type="gene ID" value="TraesKARUn01G0126250"/>
</dbReference>
<dbReference type="EnsemblPlants" id="TraesKARUn01G0126370.1">
    <property type="protein sequence ID" value="cds.TraesKARUn01G0126370.1"/>
    <property type="gene ID" value="TraesKARUn01G0126370"/>
</dbReference>
<dbReference type="EnsemblPlants" id="TraesKARUn01G0126430.1">
    <property type="protein sequence ID" value="cds.TraesKARUn01G0126430.1"/>
    <property type="gene ID" value="TraesKARUn01G0126430"/>
</dbReference>
<dbReference type="EnsemblPlants" id="TraesKARUn01G0126450.1">
    <property type="protein sequence ID" value="cds.TraesKARUn01G0126450.1"/>
    <property type="gene ID" value="TraesKARUn01G0126450"/>
</dbReference>
<dbReference type="EnsemblPlants" id="TraesKARUn01G0126630.1">
    <property type="protein sequence ID" value="cds.TraesKARUn01G0126630.1"/>
    <property type="gene ID" value="TraesKARUn01G0126630"/>
</dbReference>
<dbReference type="EnsemblPlants" id="TraesKARUn01G0126720.1">
    <property type="protein sequence ID" value="cds.TraesKARUn01G0126720.1"/>
    <property type="gene ID" value="TraesKARUn01G0126720"/>
</dbReference>
<dbReference type="EnsemblPlants" id="TraesKARUn01G0126770.1">
    <property type="protein sequence ID" value="cds.TraesKARUn01G0126770.1"/>
    <property type="gene ID" value="TraesKARUn01G0126770"/>
</dbReference>
<dbReference type="EnsemblPlants" id="TraesKARUn01G0127060.1">
    <property type="protein sequence ID" value="cds.TraesKARUn01G0127060.1"/>
    <property type="gene ID" value="TraesKARUn01G0127060"/>
</dbReference>
<dbReference type="EnsemblPlants" id="TraesKARUn01G0127380.1">
    <property type="protein sequence ID" value="cds.TraesKARUn01G0127380.1"/>
    <property type="gene ID" value="TraesKARUn01G0127380"/>
</dbReference>
<dbReference type="EnsemblPlants" id="TraesKARUn01G0127580.1">
    <property type="protein sequence ID" value="cds.TraesKARUn01G0127580.1"/>
    <property type="gene ID" value="TraesKARUn01G0127580"/>
</dbReference>
<dbReference type="EnsemblPlants" id="TraesKARUn01G0127640.1">
    <property type="protein sequence ID" value="cds.TraesKARUn01G0127640.1"/>
    <property type="gene ID" value="TraesKARUn01G0127640"/>
</dbReference>
<dbReference type="EnsemblPlants" id="TraesKARUn01G0128230.1">
    <property type="protein sequence ID" value="cds.TraesKARUn01G0128230.1"/>
    <property type="gene ID" value="TraesKARUn01G0128230"/>
</dbReference>
<dbReference type="EnsemblPlants" id="TraesKARUn01G0128490.1">
    <property type="protein sequence ID" value="cds.TraesKARUn01G0128490.1"/>
    <property type="gene ID" value="TraesKARUn01G0128490"/>
</dbReference>
<dbReference type="EnsemblPlants" id="TraesKARUn01G0129090.1">
    <property type="protein sequence ID" value="cds.TraesKARUn01G0129090.1"/>
    <property type="gene ID" value="TraesKARUn01G0129090"/>
</dbReference>
<dbReference type="EnsemblPlants" id="TraesKARUn01G0129400.1">
    <property type="protein sequence ID" value="cds.TraesKARUn01G0129400.1"/>
    <property type="gene ID" value="TraesKARUn01G0129400"/>
</dbReference>
<dbReference type="EnsemblPlants" id="TraesKARUn01G0129430.1">
    <property type="protein sequence ID" value="cds.TraesKARUn01G0129430.1"/>
    <property type="gene ID" value="TraesKARUn01G0129430"/>
</dbReference>
<dbReference type="EnsemblPlants" id="TraesKARUn01G0130080.1">
    <property type="protein sequence ID" value="cds.TraesKARUn01G0130080.1"/>
    <property type="gene ID" value="TraesKARUn01G0130080"/>
</dbReference>
<dbReference type="EnsemblPlants" id="TraesKARUn01G0130370.1">
    <property type="protein sequence ID" value="cds.TraesKARUn01G0130370.1"/>
    <property type="gene ID" value="TraesKARUn01G0130370"/>
</dbReference>
<dbReference type="EnsemblPlants" id="TraesKARUn01G0130450.1">
    <property type="protein sequence ID" value="cds.TraesKARUn01G0130450.1"/>
    <property type="gene ID" value="TraesKARUn01G0130450"/>
</dbReference>
<dbReference type="EnsemblPlants" id="TraesKARUn01G0130520.1">
    <property type="protein sequence ID" value="cds.TraesKARUn01G0130520.1"/>
    <property type="gene ID" value="TraesKARUn01G0130520"/>
</dbReference>
<dbReference type="EnsemblPlants" id="TraesKARUn01G0132040.1">
    <property type="protein sequence ID" value="cds.TraesKARUn01G0132040.1"/>
    <property type="gene ID" value="TraesKARUn01G0132040"/>
</dbReference>
<dbReference type="EnsemblPlants" id="TraesKARUn01G0133240.1">
    <property type="protein sequence ID" value="cds.TraesKARUn01G0133240.1"/>
    <property type="gene ID" value="TraesKARUn01G0133240"/>
</dbReference>
<dbReference type="EnsemblPlants" id="TraesKARUn01G0133360.1">
    <property type="protein sequence ID" value="cds.TraesKARUn01G0133360.1"/>
    <property type="gene ID" value="TraesKARUn01G0133360"/>
</dbReference>
<dbReference type="EnsemblPlants" id="TraesKARUn01G0133520.1">
    <property type="protein sequence ID" value="cds.TraesKARUn01G0133520.1"/>
    <property type="gene ID" value="TraesKARUn01G0133520"/>
</dbReference>
<dbReference type="EnsemblPlants" id="TraesKARUn01G0133980.1">
    <property type="protein sequence ID" value="cds.TraesKARUn01G0133980.1"/>
    <property type="gene ID" value="TraesKARUn01G0133980"/>
</dbReference>
<dbReference type="EnsemblPlants" id="TraesKARUn01G0134140.1">
    <property type="protein sequence ID" value="cds.TraesKARUn01G0134140.1"/>
    <property type="gene ID" value="TraesKARUn01G0134140"/>
</dbReference>
<dbReference type="EnsemblPlants" id="TraesKARUn01G0134450.1">
    <property type="protein sequence ID" value="cds.TraesKARUn01G0134450.1"/>
    <property type="gene ID" value="TraesKARUn01G0134450"/>
</dbReference>
<dbReference type="EnsemblPlants" id="TraesKARUn01G0134680.1">
    <property type="protein sequence ID" value="cds.TraesKARUn01G0134680.1"/>
    <property type="gene ID" value="TraesKARUn01G0134680"/>
</dbReference>
<dbReference type="EnsemblPlants" id="TraesKARUn01G0134720.1">
    <property type="protein sequence ID" value="cds.TraesKARUn01G0134720.1"/>
    <property type="gene ID" value="TraesKARUn01G0134720"/>
</dbReference>
<dbReference type="EnsemblPlants" id="TraesKARUn01G0134920.1">
    <property type="protein sequence ID" value="cds.TraesKARUn01G0134920.1"/>
    <property type="gene ID" value="TraesKARUn01G0134920"/>
</dbReference>
<dbReference type="EnsemblPlants" id="TraesKARUn01G0135170.1">
    <property type="protein sequence ID" value="cds.TraesKARUn01G0135170.1"/>
    <property type="gene ID" value="TraesKARUn01G0135170"/>
</dbReference>
<dbReference type="EnsemblPlants" id="TraesKARUn01G0135230.1">
    <property type="protein sequence ID" value="cds.TraesKARUn01G0135230.1"/>
    <property type="gene ID" value="TraesKARUn01G0135230"/>
</dbReference>
<dbReference type="EnsemblPlants" id="TraesKARUn01G0135260.1">
    <property type="protein sequence ID" value="cds.TraesKARUn01G0135260.1"/>
    <property type="gene ID" value="TraesKARUn01G0135260"/>
</dbReference>
<dbReference type="EnsemblPlants" id="TraesKARUn01G0135600.1">
    <property type="protein sequence ID" value="cds.TraesKARUn01G0135600.1"/>
    <property type="gene ID" value="TraesKARUn01G0135600"/>
</dbReference>
<dbReference type="EnsemblPlants" id="TraesKARUn01G0136000.1">
    <property type="protein sequence ID" value="cds.TraesKARUn01G0136000.1"/>
    <property type="gene ID" value="TraesKARUn01G0136000"/>
</dbReference>
<dbReference type="EnsemblPlants" id="TraesKARUn01G0136170.1">
    <property type="protein sequence ID" value="cds.TraesKARUn01G0136170.1"/>
    <property type="gene ID" value="TraesKARUn01G0136170"/>
</dbReference>
<dbReference type="EnsemblPlants" id="TraesKARUn01G0136270.1">
    <property type="protein sequence ID" value="cds.TraesKARUn01G0136270.1"/>
    <property type="gene ID" value="TraesKARUn01G0136270"/>
</dbReference>
<dbReference type="EnsemblPlants" id="TraesKARUn01G0136380.1">
    <property type="protein sequence ID" value="cds.TraesKARUn01G0136380.1"/>
    <property type="gene ID" value="TraesKARUn01G0136380"/>
</dbReference>
<dbReference type="EnsemblPlants" id="TraesKARUn01G0136720.1">
    <property type="protein sequence ID" value="cds.TraesKARUn01G0136720.1"/>
    <property type="gene ID" value="TraesKARUn01G0136720"/>
</dbReference>
<dbReference type="EnsemblPlants" id="TraesKARUn01G0136830.1">
    <property type="protein sequence ID" value="cds.TraesKARUn01G0136830.1"/>
    <property type="gene ID" value="TraesKARUn01G0136830"/>
</dbReference>
<dbReference type="EnsemblPlants" id="TraesKARUn01G0136930.1">
    <property type="protein sequence ID" value="cds.TraesKARUn01G0136930.1"/>
    <property type="gene ID" value="TraesKARUn01G0136930"/>
</dbReference>
<dbReference type="EnsemblPlants" id="TraesKARUn01G0137320.1">
    <property type="protein sequence ID" value="cds.TraesKARUn01G0137320.1"/>
    <property type="gene ID" value="TraesKARUn01G0137320"/>
</dbReference>
<dbReference type="EnsemblPlants" id="TraesKARUn01G0137410.1">
    <property type="protein sequence ID" value="cds.TraesKARUn01G0137410.1"/>
    <property type="gene ID" value="TraesKARUn01G0137410"/>
</dbReference>
<dbReference type="EnsemblPlants" id="TraesKARUn01G0137570.1">
    <property type="protein sequence ID" value="cds.TraesKARUn01G0137570.1"/>
    <property type="gene ID" value="TraesKARUn01G0137570"/>
</dbReference>
<dbReference type="EnsemblPlants" id="TraesKARUn01G0137870.1">
    <property type="protein sequence ID" value="cds.TraesKARUn01G0137870.1"/>
    <property type="gene ID" value="TraesKARUn01G0137870"/>
</dbReference>
<dbReference type="EnsemblPlants" id="TraesKARUn01G0138050.1">
    <property type="protein sequence ID" value="cds.TraesKARUn01G0138050.1"/>
    <property type="gene ID" value="TraesKARUn01G0138050"/>
</dbReference>
<dbReference type="EnsemblPlants" id="TraesKARUn01G0138650.1">
    <property type="protein sequence ID" value="cds.TraesKARUn01G0138650.1"/>
    <property type="gene ID" value="TraesKARUn01G0138650"/>
</dbReference>
<dbReference type="EnsemblPlants" id="TraesKARUn01G0139350.1">
    <property type="protein sequence ID" value="cds.TraesKARUn01G0139350.1"/>
    <property type="gene ID" value="TraesKARUn01G0139350"/>
</dbReference>
<dbReference type="EnsemblPlants" id="TraesKARUn01G0139430.1">
    <property type="protein sequence ID" value="cds.TraesKARUn01G0139430.1"/>
    <property type="gene ID" value="TraesKARUn01G0139430"/>
</dbReference>
<dbReference type="EnsemblPlants" id="TraesKARUn01G0139540.1">
    <property type="protein sequence ID" value="cds.TraesKARUn01G0139540.1"/>
    <property type="gene ID" value="TraesKARUn01G0139540"/>
</dbReference>
<dbReference type="EnsemblPlants" id="TraesKARUn01G0139670.1">
    <property type="protein sequence ID" value="cds.TraesKARUn01G0139670.1"/>
    <property type="gene ID" value="TraesKARUn01G0139670"/>
</dbReference>
<dbReference type="EnsemblPlants" id="TraesKARUn01G0139920.1">
    <property type="protein sequence ID" value="cds.TraesKARUn01G0139920.1"/>
    <property type="gene ID" value="TraesKARUn01G0139920"/>
</dbReference>
<dbReference type="EnsemblPlants" id="TraesKARUn01G0140090.1">
    <property type="protein sequence ID" value="cds.TraesKARUn01G0140090.1"/>
    <property type="gene ID" value="TraesKARUn01G0140090"/>
</dbReference>
<dbReference type="EnsemblPlants" id="TraesKARUn01G0140120.1">
    <property type="protein sequence ID" value="cds.TraesKARUn01G0140120.1"/>
    <property type="gene ID" value="TraesKARUn01G0140120"/>
</dbReference>
<dbReference type="EnsemblPlants" id="TraesKARUn01G0140230.1">
    <property type="protein sequence ID" value="cds.TraesKARUn01G0140230.1"/>
    <property type="gene ID" value="TraesKARUn01G0140230"/>
</dbReference>
<dbReference type="EnsemblPlants" id="TraesKARUn01G0140270.1">
    <property type="protein sequence ID" value="cds.TraesKARUn01G0140270.1"/>
    <property type="gene ID" value="TraesKARUn01G0140270"/>
</dbReference>
<dbReference type="EnsemblPlants" id="TraesKARUn01G0140350.1">
    <property type="protein sequence ID" value="cds.TraesKARUn01G0140350.1"/>
    <property type="gene ID" value="TraesKARUn01G0140350"/>
</dbReference>
<dbReference type="EnsemblPlants" id="TraesKARUn01G0140400.1">
    <property type="protein sequence ID" value="cds.TraesKARUn01G0140400.1"/>
    <property type="gene ID" value="TraesKARUn01G0140400"/>
</dbReference>
<dbReference type="EnsemblPlants" id="TraesKARUn01G0140490.1">
    <property type="protein sequence ID" value="cds.TraesKARUn01G0140490.1"/>
    <property type="gene ID" value="TraesKARUn01G0140490"/>
</dbReference>
<dbReference type="EnsemblPlants" id="TraesKARUn01G0140510.1">
    <property type="protein sequence ID" value="cds.TraesKARUn01G0140510.1"/>
    <property type="gene ID" value="TraesKARUn01G0140510"/>
</dbReference>
<dbReference type="EnsemblPlants" id="TraesKARUn01G0140820.1">
    <property type="protein sequence ID" value="cds.TraesKARUn01G0140820.1"/>
    <property type="gene ID" value="TraesKARUn01G0140820"/>
</dbReference>
<dbReference type="EnsemblPlants" id="TraesKARUn01G0140920.1">
    <property type="protein sequence ID" value="cds.TraesKARUn01G0140920.1"/>
    <property type="gene ID" value="TraesKARUn01G0140920"/>
</dbReference>
<dbReference type="EnsemblPlants" id="TraesKARUn01G0140940.1">
    <property type="protein sequence ID" value="cds.TraesKARUn01G0140940.1"/>
    <property type="gene ID" value="TraesKARUn01G0140940"/>
</dbReference>
<dbReference type="EnsemblPlants" id="TraesKARUn01G0141010.1">
    <property type="protein sequence ID" value="cds.TraesKARUn01G0141010.1"/>
    <property type="gene ID" value="TraesKARUn01G0141010"/>
</dbReference>
<dbReference type="EnsemblPlants" id="TraesKARUn01G0141150.1">
    <property type="protein sequence ID" value="cds.TraesKARUn01G0141150.1"/>
    <property type="gene ID" value="TraesKARUn01G0141150"/>
</dbReference>
<dbReference type="EnsemblPlants" id="TraesKARUn01G0141350.1">
    <property type="protein sequence ID" value="cds.TraesKARUn01G0141350.1"/>
    <property type="gene ID" value="TraesKARUn01G0141350"/>
</dbReference>
<dbReference type="EnsemblPlants" id="TraesKARUn01G0141370.1">
    <property type="protein sequence ID" value="cds.TraesKARUn01G0141370.1"/>
    <property type="gene ID" value="TraesKARUn01G0141370"/>
</dbReference>
<dbReference type="EnsemblPlants" id="TraesKARUn01G0141530.1">
    <property type="protein sequence ID" value="cds.TraesKARUn01G0141530.1"/>
    <property type="gene ID" value="TraesKARUn01G0141530"/>
</dbReference>
<dbReference type="EnsemblPlants" id="TraesKARUn01G0141780.1">
    <property type="protein sequence ID" value="cds.TraesKARUn01G0141780.1"/>
    <property type="gene ID" value="TraesKARUn01G0141780"/>
</dbReference>
<dbReference type="EnsemblPlants" id="TraesKARUn01G0141880.1">
    <property type="protein sequence ID" value="cds.TraesKARUn01G0141880.1"/>
    <property type="gene ID" value="TraesKARUn01G0141880"/>
</dbReference>
<dbReference type="EnsemblPlants" id="TraesKARUn01G0141900.1">
    <property type="protein sequence ID" value="cds.TraesKARUn01G0141900.1"/>
    <property type="gene ID" value="TraesKARUn01G0141900"/>
</dbReference>
<dbReference type="EnsemblPlants" id="TraesKARUn01G0142060.1">
    <property type="protein sequence ID" value="cds.TraesKARUn01G0142060.1"/>
    <property type="gene ID" value="TraesKARUn01G0142060"/>
</dbReference>
<dbReference type="EnsemblPlants" id="TraesKARUn01G0142270.1">
    <property type="protein sequence ID" value="cds.TraesKARUn01G0142270.1"/>
    <property type="gene ID" value="TraesKARUn01G0142270"/>
</dbReference>
<dbReference type="EnsemblPlants" id="TraesKARUn01G0142330.1">
    <property type="protein sequence ID" value="cds.TraesKARUn01G0142330.1"/>
    <property type="gene ID" value="TraesKARUn01G0142330"/>
</dbReference>
<dbReference type="EnsemblPlants" id="TraesKARUn01G0142340.1">
    <property type="protein sequence ID" value="cds.TraesKARUn01G0142340.1"/>
    <property type="gene ID" value="TraesKARUn01G0142340"/>
</dbReference>
<dbReference type="EnsemblPlants" id="TraesKARUn01G0142550.1">
    <property type="protein sequence ID" value="cds.TraesKARUn01G0142550.1"/>
    <property type="gene ID" value="TraesKARUn01G0142550"/>
</dbReference>
<dbReference type="EnsemblPlants" id="TraesKARUn01G0142580.1">
    <property type="protein sequence ID" value="cds.TraesKARUn01G0142580.1"/>
    <property type="gene ID" value="TraesKARUn01G0142580"/>
</dbReference>
<dbReference type="EnsemblPlants" id="TraesKARUn01G0142600.1">
    <property type="protein sequence ID" value="cds.TraesKARUn01G0142600.1"/>
    <property type="gene ID" value="TraesKARUn01G0142600"/>
</dbReference>
<dbReference type="EnsemblPlants" id="TraesKARUn01G0142890.1">
    <property type="protein sequence ID" value="cds.TraesKARUn01G0142890.1"/>
    <property type="gene ID" value="TraesKARUn01G0142890"/>
</dbReference>
<dbReference type="EnsemblPlants" id="TraesKARUn01G0142940.1">
    <property type="protein sequence ID" value="cds.TraesKARUn01G0142940.1"/>
    <property type="gene ID" value="TraesKARUn01G0142940"/>
</dbReference>
<dbReference type="EnsemblPlants" id="TraesKARUn01G0143020.1">
    <property type="protein sequence ID" value="cds.TraesKARUn01G0143020.1"/>
    <property type="gene ID" value="TraesKARUn01G0143020"/>
</dbReference>
<dbReference type="EnsemblPlants" id="TraesKARUn01G0143330.1">
    <property type="protein sequence ID" value="cds.TraesKARUn01G0143330.1"/>
    <property type="gene ID" value="TraesKARUn01G0143330"/>
</dbReference>
<dbReference type="EnsemblPlants" id="TraesKARUn01G0143490.1">
    <property type="protein sequence ID" value="cds.TraesKARUn01G0143490.1"/>
    <property type="gene ID" value="TraesKARUn01G0143490"/>
</dbReference>
<dbReference type="EnsemblPlants" id="TraesKARUn01G0143750.1">
    <property type="protein sequence ID" value="cds.TraesKARUn01G0143750.1"/>
    <property type="gene ID" value="TraesKARUn01G0143750"/>
</dbReference>
<dbReference type="EnsemblPlants" id="TraesKARUn01G0143770.1">
    <property type="protein sequence ID" value="cds.TraesKARUn01G0143770.1"/>
    <property type="gene ID" value="TraesKARUn01G0143770"/>
</dbReference>
<dbReference type="EnsemblPlants" id="TraesKARUn01G0143830.1">
    <property type="protein sequence ID" value="cds.TraesKARUn01G0143830.1"/>
    <property type="gene ID" value="TraesKARUn01G0143830"/>
</dbReference>
<dbReference type="EnsemblPlants" id="TraesKARUn01G0144050.1">
    <property type="protein sequence ID" value="cds.TraesKARUn01G0144050.1"/>
    <property type="gene ID" value="TraesKARUn01G0144050"/>
</dbReference>
<dbReference type="EnsemblPlants" id="TraesKARUn01G0144250.1">
    <property type="protein sequence ID" value="cds.TraesKARUn01G0144250.1"/>
    <property type="gene ID" value="TraesKARUn01G0144250"/>
</dbReference>
<dbReference type="EnsemblPlants" id="TraesKARUn01G0144290.1">
    <property type="protein sequence ID" value="cds.TraesKARUn01G0144290.1"/>
    <property type="gene ID" value="TraesKARUn01G0144290"/>
</dbReference>
<dbReference type="EnsemblPlants" id="TraesKARUn01G0144350.1">
    <property type="protein sequence ID" value="cds.TraesKARUn01G0144350.1"/>
    <property type="gene ID" value="TraesKARUn01G0144350"/>
</dbReference>
<dbReference type="EnsemblPlants" id="TraesKARUn01G0144570.1">
    <property type="protein sequence ID" value="cds.TraesKARUn01G0144570.1"/>
    <property type="gene ID" value="TraesKARUn01G0144570"/>
</dbReference>
<dbReference type="EnsemblPlants" id="TraesKARUn01G0144590.1">
    <property type="protein sequence ID" value="cds.TraesKARUn01G0144590.1"/>
    <property type="gene ID" value="TraesKARUn01G0144590"/>
</dbReference>
<dbReference type="EnsemblPlants" id="TraesKARUn01G0144610.1">
    <property type="protein sequence ID" value="cds.TraesKARUn01G0144610.1"/>
    <property type="gene ID" value="TraesKARUn01G0144610"/>
</dbReference>
<dbReference type="EnsemblPlants" id="TraesKARUn01G0144870.1">
    <property type="protein sequence ID" value="cds.TraesKARUn01G0144870.1"/>
    <property type="gene ID" value="TraesKARUn01G0144870"/>
</dbReference>
<dbReference type="EnsemblPlants" id="TraesKARUn01G0145190.1">
    <property type="protein sequence ID" value="cds.TraesKARUn01G0145190.1"/>
    <property type="gene ID" value="TraesKARUn01G0145190"/>
</dbReference>
<dbReference type="EnsemblPlants" id="TraesKARUn01G0145420.1">
    <property type="protein sequence ID" value="cds.TraesKARUn01G0145420.1"/>
    <property type="gene ID" value="TraesKARUn01G0145420"/>
</dbReference>
<dbReference type="EnsemblPlants" id="TraesKARUn01G0145440.1">
    <property type="protein sequence ID" value="cds.TraesKARUn01G0145440.1"/>
    <property type="gene ID" value="TraesKARUn01G0145440"/>
</dbReference>
<dbReference type="EnsemblPlants" id="TraesKARUn01G0145580.1">
    <property type="protein sequence ID" value="cds.TraesKARUn01G0145580.1"/>
    <property type="gene ID" value="TraesKARUn01G0145580"/>
</dbReference>
<dbReference type="EnsemblPlants" id="TraesKARUn01G0145600.1">
    <property type="protein sequence ID" value="cds.TraesKARUn01G0145600.1"/>
    <property type="gene ID" value="TraesKARUn01G0145600"/>
</dbReference>
<dbReference type="EnsemblPlants" id="TraesKARUn01G0145820.1">
    <property type="protein sequence ID" value="cds.TraesKARUn01G0145820.1"/>
    <property type="gene ID" value="TraesKARUn01G0145820"/>
</dbReference>
<dbReference type="EnsemblPlants" id="TraesKARUn01G0145850.1">
    <property type="protein sequence ID" value="cds.TraesKARUn01G0145850.1"/>
    <property type="gene ID" value="TraesKARUn01G0145850"/>
</dbReference>
<dbReference type="EnsemblPlants" id="TraesKARUn01G0146150.1">
    <property type="protein sequence ID" value="cds.TraesKARUn01G0146150.1"/>
    <property type="gene ID" value="TraesKARUn01G0146150"/>
</dbReference>
<dbReference type="EnsemblPlants" id="TraesKARUn01G0146230.1">
    <property type="protein sequence ID" value="cds.TraesKARUn01G0146230.1"/>
    <property type="gene ID" value="TraesKARUn01G0146230"/>
</dbReference>
<dbReference type="EnsemblPlants" id="TraesKARUn01G0146470.1">
    <property type="protein sequence ID" value="cds.TraesKARUn01G0146470.1"/>
    <property type="gene ID" value="TraesKARUn01G0146470"/>
</dbReference>
<dbReference type="EnsemblPlants" id="TraesKARUn01G0146670.1">
    <property type="protein sequence ID" value="cds.TraesKARUn01G0146670.1"/>
    <property type="gene ID" value="TraesKARUn01G0146670"/>
</dbReference>
<dbReference type="EnsemblPlants" id="TraesKARUn01G0146940.1">
    <property type="protein sequence ID" value="cds.TraesKARUn01G0146940.1"/>
    <property type="gene ID" value="TraesKARUn01G0146940"/>
</dbReference>
<dbReference type="EnsemblPlants" id="TraesKARUn01G0147500.1">
    <property type="protein sequence ID" value="cds.TraesKARUn01G0147500.1"/>
    <property type="gene ID" value="TraesKARUn01G0147500"/>
</dbReference>
<dbReference type="EnsemblPlants" id="TraesKARUn01G0147520.1">
    <property type="protein sequence ID" value="cds.TraesKARUn01G0147520.1"/>
    <property type="gene ID" value="TraesKARUn01G0147520"/>
</dbReference>
<dbReference type="EnsemblPlants" id="TraesKARUn01G0147840.1">
    <property type="protein sequence ID" value="cds.TraesKARUn01G0147840.1"/>
    <property type="gene ID" value="TraesKARUn01G0147840"/>
</dbReference>
<dbReference type="EnsemblPlants" id="TraesKARUn01G0148110.1">
    <property type="protein sequence ID" value="cds.TraesKARUn01G0148110.1"/>
    <property type="gene ID" value="TraesKARUn01G0148110"/>
</dbReference>
<dbReference type="EnsemblPlants" id="TraesKARUn01G0148740.1">
    <property type="protein sequence ID" value="cds.TraesKARUn01G0148740.1"/>
    <property type="gene ID" value="TraesKARUn01G0148740"/>
</dbReference>
<dbReference type="EnsemblPlants" id="TraesKARUn01G0149060.1">
    <property type="protein sequence ID" value="cds.TraesKARUn01G0149060.1"/>
    <property type="gene ID" value="TraesKARUn01G0149060"/>
</dbReference>
<dbReference type="EnsemblPlants" id="TraesKARUn01G0149070.1">
    <property type="protein sequence ID" value="cds.TraesKARUn01G0149070.1"/>
    <property type="gene ID" value="TraesKARUn01G0149070"/>
</dbReference>
<dbReference type="EnsemblPlants" id="TraesKARUn01G0149080.1">
    <property type="protein sequence ID" value="cds.TraesKARUn01G0149080.1"/>
    <property type="gene ID" value="TraesKARUn01G0149080"/>
</dbReference>
<dbReference type="EnsemblPlants" id="TraesKARUn01G0149100.1">
    <property type="protein sequence ID" value="cds.TraesKARUn01G0149100.1"/>
    <property type="gene ID" value="TraesKARUn01G0149100"/>
</dbReference>
<dbReference type="EnsemblPlants" id="TraesKARUn01G0149310.1">
    <property type="protein sequence ID" value="cds.TraesKARUn01G0149310.1"/>
    <property type="gene ID" value="TraesKARUn01G0149310"/>
</dbReference>
<dbReference type="EnsemblPlants" id="TraesKARUn01G0149620.1">
    <property type="protein sequence ID" value="cds.TraesKARUn01G0149620.1"/>
    <property type="gene ID" value="TraesKARUn01G0149620"/>
</dbReference>
<dbReference type="EnsemblPlants" id="TraesKARUn01G0149980.1">
    <property type="protein sequence ID" value="cds.TraesKARUn01G0149980.1"/>
    <property type="gene ID" value="TraesKARUn01G0149980"/>
</dbReference>
<dbReference type="EnsemblPlants" id="TraesKARUn01G0150100.1">
    <property type="protein sequence ID" value="cds.TraesKARUn01G0150100.1"/>
    <property type="gene ID" value="TraesKARUn01G0150100"/>
</dbReference>
<dbReference type="EnsemblPlants" id="TraesKARUn01G0150170.1">
    <property type="protein sequence ID" value="cds.TraesKARUn01G0150170.1"/>
    <property type="gene ID" value="TraesKARUn01G0150170"/>
</dbReference>
<dbReference type="EnsemblPlants" id="TraesKARUn01G0150190.1">
    <property type="protein sequence ID" value="cds.TraesKARUn01G0150190.1"/>
    <property type="gene ID" value="TraesKARUn01G0150190"/>
</dbReference>
<dbReference type="EnsemblPlants" id="TraesKARUn01G0150320.1">
    <property type="protein sequence ID" value="cds.TraesKARUn01G0150320.1"/>
    <property type="gene ID" value="TraesKARUn01G0150320"/>
</dbReference>
<dbReference type="EnsemblPlants" id="TraesKARUn01G0150680.1">
    <property type="protein sequence ID" value="cds.TraesKARUn01G0150680.1"/>
    <property type="gene ID" value="TraesKARUn01G0150680"/>
</dbReference>
<dbReference type="EnsemblPlants" id="TraesKARUn01G0150800.1">
    <property type="protein sequence ID" value="cds.TraesKARUn01G0150800.1"/>
    <property type="gene ID" value="TraesKARUn01G0150800"/>
</dbReference>
<dbReference type="EnsemblPlants" id="TraesKARUn01G0150870.1">
    <property type="protein sequence ID" value="cds.TraesKARUn01G0150870.1"/>
    <property type="gene ID" value="TraesKARUn01G0150870"/>
</dbReference>
<dbReference type="EnsemblPlants" id="TraesKARUn01G0150920.1">
    <property type="protein sequence ID" value="cds.TraesKARUn01G0150920.1"/>
    <property type="gene ID" value="TraesKARUn01G0150920"/>
</dbReference>
<dbReference type="EnsemblPlants" id="TraesKARUn01G0151220.1">
    <property type="protein sequence ID" value="cds.TraesKARUn01G0151220.1"/>
    <property type="gene ID" value="TraesKARUn01G0151220"/>
</dbReference>
<dbReference type="EnsemblPlants" id="TraesKARUn01G0151260.1">
    <property type="protein sequence ID" value="cds.TraesKARUn01G0151260.1"/>
    <property type="gene ID" value="TraesKARUn01G0151260"/>
</dbReference>
<dbReference type="EnsemblPlants" id="TraesKARUn01G0151430.1">
    <property type="protein sequence ID" value="cds.TraesKARUn01G0151430.1"/>
    <property type="gene ID" value="TraesKARUn01G0151430"/>
</dbReference>
<dbReference type="EnsemblPlants" id="TraesKARUn01G0151620.1">
    <property type="protein sequence ID" value="cds.TraesKARUn01G0151620.1"/>
    <property type="gene ID" value="TraesKARUn01G0151620"/>
</dbReference>
<dbReference type="EnsemblPlants" id="TraesKARUn01G0151720.1">
    <property type="protein sequence ID" value="cds.TraesKARUn01G0151720.1"/>
    <property type="gene ID" value="TraesKARUn01G0151720"/>
</dbReference>
<dbReference type="EnsemblPlants" id="TraesKARUn01G0151860.1">
    <property type="protein sequence ID" value="cds.TraesKARUn01G0151860.1"/>
    <property type="gene ID" value="TraesKARUn01G0151860"/>
</dbReference>
<dbReference type="EnsemblPlants" id="TraesKARUn01G0151870.1">
    <property type="protein sequence ID" value="cds.TraesKARUn01G0151870.1"/>
    <property type="gene ID" value="TraesKARUn01G0151870"/>
</dbReference>
<dbReference type="EnsemblPlants" id="TraesKARUn01G0152250.1">
    <property type="protein sequence ID" value="cds.TraesKARUn01G0152250.1"/>
    <property type="gene ID" value="TraesKARUn01G0152250"/>
</dbReference>
<dbReference type="EnsemblPlants" id="TraesKARUn01G0152300.1">
    <property type="protein sequence ID" value="cds.TraesKARUn01G0152300.1"/>
    <property type="gene ID" value="TraesKARUn01G0152300"/>
</dbReference>
<dbReference type="EnsemblPlants" id="TraesKARUn01G0152370.1">
    <property type="protein sequence ID" value="cds.TraesKARUn01G0152370.1"/>
    <property type="gene ID" value="TraesKARUn01G0152370"/>
</dbReference>
<dbReference type="EnsemblPlants" id="TraesKARUn01G0152890.1">
    <property type="protein sequence ID" value="cds.TraesKARUn01G0152890.1"/>
    <property type="gene ID" value="TraesKARUn01G0152890"/>
</dbReference>
<dbReference type="EnsemblPlants" id="TraesKARUn01G0153300.1">
    <property type="protein sequence ID" value="cds.TraesKARUn01G0153300.1"/>
    <property type="gene ID" value="TraesKARUn01G0153300"/>
</dbReference>
<dbReference type="EnsemblPlants" id="TraesKARUn01G0153860.1">
    <property type="protein sequence ID" value="cds.TraesKARUn01G0153860.1"/>
    <property type="gene ID" value="TraesKARUn01G0153860"/>
</dbReference>
<dbReference type="EnsemblPlants" id="TraesKARUn01G0154030.1">
    <property type="protein sequence ID" value="cds.TraesKARUn01G0154030.1"/>
    <property type="gene ID" value="TraesKARUn01G0154030"/>
</dbReference>
<dbReference type="EnsemblPlants" id="TraesKARUn01G0154040.1">
    <property type="protein sequence ID" value="cds.TraesKARUn01G0154040.1"/>
    <property type="gene ID" value="TraesKARUn01G0154040"/>
</dbReference>
<dbReference type="EnsemblPlants" id="TraesKARUn01G0155110.1">
    <property type="protein sequence ID" value="cds.TraesKARUn01G0155110.1"/>
    <property type="gene ID" value="TraesKARUn01G0155110"/>
</dbReference>
<dbReference type="EnsemblPlants" id="TraesKARUn01G0155670.1">
    <property type="protein sequence ID" value="cds.TraesKARUn01G0155670.1"/>
    <property type="gene ID" value="TraesKARUn01G0155670"/>
</dbReference>
<dbReference type="EnsemblPlants" id="TraesKARUn01G0155760.1">
    <property type="protein sequence ID" value="cds.TraesKARUn01G0155760.1"/>
    <property type="gene ID" value="TraesKARUn01G0155760"/>
</dbReference>
<dbReference type="EnsemblPlants" id="TraesKARUn01G0155950.1">
    <property type="protein sequence ID" value="cds.TraesKARUn01G0155950.1"/>
    <property type="gene ID" value="TraesKARUn01G0155950"/>
</dbReference>
<dbReference type="EnsemblPlants" id="TraesKARUn01G0156470.1">
    <property type="protein sequence ID" value="cds.TraesKARUn01G0156470.1"/>
    <property type="gene ID" value="TraesKARUn01G0156470"/>
</dbReference>
<dbReference type="EnsemblPlants" id="TraesKARUn01G0156580.1">
    <property type="protein sequence ID" value="cds.TraesKARUn01G0156580.1"/>
    <property type="gene ID" value="TraesKARUn01G0156580"/>
</dbReference>
<dbReference type="EnsemblPlants" id="TraesKARUn01G0156840.1">
    <property type="protein sequence ID" value="cds.TraesKARUn01G0156840.1"/>
    <property type="gene ID" value="TraesKARUn01G0156840"/>
</dbReference>
<dbReference type="EnsemblPlants" id="TraesKARUn01G0157180.1">
    <property type="protein sequence ID" value="cds.TraesKARUn01G0157180.1"/>
    <property type="gene ID" value="TraesKARUn01G0157180"/>
</dbReference>
<dbReference type="EnsemblPlants" id="TraesKARUn01G0157430.1">
    <property type="protein sequence ID" value="cds.TraesKARUn01G0157430.1"/>
    <property type="gene ID" value="TraesKARUn01G0157430"/>
</dbReference>
<dbReference type="EnsemblPlants" id="TraesKARUn01G0157850.1">
    <property type="protein sequence ID" value="cds.TraesKARUn01G0157850.1"/>
    <property type="gene ID" value="TraesKARUn01G0157850"/>
</dbReference>
<dbReference type="EnsemblPlants" id="TraesKARUn01G0157950.1">
    <property type="protein sequence ID" value="cds.TraesKARUn01G0157950.1"/>
    <property type="gene ID" value="TraesKARUn01G0157950"/>
</dbReference>
<dbReference type="EnsemblPlants" id="TraesKARUn01G0158030.1">
    <property type="protein sequence ID" value="cds.TraesKARUn01G0158030.1"/>
    <property type="gene ID" value="TraesKARUn01G0158030"/>
</dbReference>
<dbReference type="EnsemblPlants" id="TraesKARUn01G0158160.1">
    <property type="protein sequence ID" value="cds.TraesKARUn01G0158160.1"/>
    <property type="gene ID" value="TraesKARUn01G0158160"/>
</dbReference>
<dbReference type="EnsemblPlants" id="TraesKARUn01G0158200.1">
    <property type="protein sequence ID" value="cds.TraesKARUn01G0158200.1"/>
    <property type="gene ID" value="TraesKARUn01G0158200"/>
</dbReference>
<dbReference type="EnsemblPlants" id="TraesKARUn01G0158210.1">
    <property type="protein sequence ID" value="cds.TraesKARUn01G0158210.1"/>
    <property type="gene ID" value="TraesKARUn01G0158210"/>
</dbReference>
<dbReference type="EnsemblPlants" id="TraesKARUn01G0158590.1">
    <property type="protein sequence ID" value="cds.TraesKARUn01G0158590.1"/>
    <property type="gene ID" value="TraesKARUn01G0158590"/>
</dbReference>
<dbReference type="EnsemblPlants" id="TraesKARUn01G0158970.1">
    <property type="protein sequence ID" value="cds.TraesKARUn01G0158970.1"/>
    <property type="gene ID" value="TraesKARUn01G0158970"/>
</dbReference>
<dbReference type="EnsemblPlants" id="TraesKARUn01G0159260.1">
    <property type="protein sequence ID" value="cds.TraesKARUn01G0159260.1"/>
    <property type="gene ID" value="TraesKARUn01G0159260"/>
</dbReference>
<dbReference type="EnsemblPlants" id="TraesKARUn01G0159480.1">
    <property type="protein sequence ID" value="cds.TraesKARUn01G0159480.1"/>
    <property type="gene ID" value="TraesKARUn01G0159480"/>
</dbReference>
<dbReference type="EnsemblPlants" id="TraesKARUn01G0159530.1">
    <property type="protein sequence ID" value="cds.TraesKARUn01G0159530.1"/>
    <property type="gene ID" value="TraesKARUn01G0159530"/>
</dbReference>
<dbReference type="EnsemblPlants" id="TraesKARUn01G0159550.1">
    <property type="protein sequence ID" value="cds.TraesKARUn01G0159550.1"/>
    <property type="gene ID" value="TraesKARUn01G0159550"/>
</dbReference>
<dbReference type="EnsemblPlants" id="TraesKARUn01G0159690.1">
    <property type="protein sequence ID" value="cds.TraesKARUn01G0159690.1"/>
    <property type="gene ID" value="TraesKARUn01G0159690"/>
</dbReference>
<dbReference type="EnsemblPlants" id="TraesKARUn01G0159790.1">
    <property type="protein sequence ID" value="cds.TraesKARUn01G0159790.1"/>
    <property type="gene ID" value="TraesKARUn01G0159790"/>
</dbReference>
<dbReference type="EnsemblPlants" id="TraesKARUn01G0159980.1">
    <property type="protein sequence ID" value="cds.TraesKARUn01G0159980.1"/>
    <property type="gene ID" value="TraesKARUn01G0159980"/>
</dbReference>
<dbReference type="EnsemblPlants" id="TraesKARUn01G0159990.1">
    <property type="protein sequence ID" value="cds.TraesKARUn01G0159990.1"/>
    <property type="gene ID" value="TraesKARUn01G0159990"/>
</dbReference>
<dbReference type="EnsemblPlants" id="TraesKARUn01G0160080.1">
    <property type="protein sequence ID" value="cds.TraesKARUn01G0160080.1"/>
    <property type="gene ID" value="TraesKARUn01G0160080"/>
</dbReference>
<dbReference type="EnsemblPlants" id="TraesKARUn01G0160350.1">
    <property type="protein sequence ID" value="cds.TraesKARUn01G0160350.1"/>
    <property type="gene ID" value="TraesKARUn01G0160350"/>
</dbReference>
<dbReference type="EnsemblPlants" id="TraesKARUn01G0160790.1">
    <property type="protein sequence ID" value="cds.TraesKARUn01G0160790.1"/>
    <property type="gene ID" value="TraesKARUn01G0160790"/>
</dbReference>
<dbReference type="EnsemblPlants" id="TraesKARUn01G0160820.1">
    <property type="protein sequence ID" value="cds.TraesKARUn01G0160820.1"/>
    <property type="gene ID" value="TraesKARUn01G0160820"/>
</dbReference>
<dbReference type="EnsemblPlants" id="TraesKARUn01G0161190.1">
    <property type="protein sequence ID" value="cds.TraesKARUn01G0161190.1"/>
    <property type="gene ID" value="TraesKARUn01G0161190"/>
</dbReference>
<dbReference type="EnsemblPlants" id="TraesKARUn01G0161450.1">
    <property type="protein sequence ID" value="cds.TraesKARUn01G0161450.1"/>
    <property type="gene ID" value="TraesKARUn01G0161450"/>
</dbReference>
<dbReference type="EnsemblPlants" id="TraesKARUn01G0161480.1">
    <property type="protein sequence ID" value="cds.TraesKARUn01G0161480.1"/>
    <property type="gene ID" value="TraesKARUn01G0161480"/>
</dbReference>
<dbReference type="EnsemblPlants" id="TraesKARUn01G0161660.1">
    <property type="protein sequence ID" value="cds.TraesKARUn01G0161660.1"/>
    <property type="gene ID" value="TraesKARUn01G0161660"/>
</dbReference>
<dbReference type="EnsemblPlants" id="TraesKARUn01G0161720.1">
    <property type="protein sequence ID" value="cds.TraesKARUn01G0161720.1"/>
    <property type="gene ID" value="TraesKARUn01G0161720"/>
</dbReference>
<dbReference type="EnsemblPlants" id="TraesKARUn01G0161770.1">
    <property type="protein sequence ID" value="cds.TraesKARUn01G0161770.1"/>
    <property type="gene ID" value="TraesKARUn01G0161770"/>
</dbReference>
<dbReference type="EnsemblPlants" id="TraesKARUn01G0161790.1">
    <property type="protein sequence ID" value="cds.TraesKARUn01G0161790.1"/>
    <property type="gene ID" value="TraesKARUn01G0161790"/>
</dbReference>
<dbReference type="EnsemblPlants" id="TraesKARUn01G0161970.1">
    <property type="protein sequence ID" value="cds.TraesKARUn01G0161970.1"/>
    <property type="gene ID" value="TraesKARUn01G0161970"/>
</dbReference>
<dbReference type="EnsemblPlants" id="TraesKARUn01G0162610.1">
    <property type="protein sequence ID" value="cds.TraesKARUn01G0162610.1"/>
    <property type="gene ID" value="TraesKARUn01G0162610"/>
</dbReference>
<dbReference type="EnsemblPlants" id="TraesKARUn01G0163080.1">
    <property type="protein sequence ID" value="cds.TraesKARUn01G0163080.1"/>
    <property type="gene ID" value="TraesKARUn01G0163080"/>
</dbReference>
<dbReference type="EnsemblPlants" id="TraesKARUn01G0163200.1">
    <property type="protein sequence ID" value="cds.TraesKARUn01G0163200.1"/>
    <property type="gene ID" value="TraesKARUn01G0163200"/>
</dbReference>
<dbReference type="EnsemblPlants" id="TraesKARUn01G0163570.1">
    <property type="protein sequence ID" value="cds.TraesKARUn01G0163570.1"/>
    <property type="gene ID" value="TraesKARUn01G0163570"/>
</dbReference>
<dbReference type="EnsemblPlants" id="TraesKARUn01G0163660.1">
    <property type="protein sequence ID" value="cds.TraesKARUn01G0163660.1"/>
    <property type="gene ID" value="TraesKARUn01G0163660"/>
</dbReference>
<dbReference type="EnsemblPlants" id="TraesKARUn01G0163830.1">
    <property type="protein sequence ID" value="cds.TraesKARUn01G0163830.1"/>
    <property type="gene ID" value="TraesKARUn01G0163830"/>
</dbReference>
<dbReference type="EnsemblPlants" id="TraesKARUn01G0163920.1">
    <property type="protein sequence ID" value="cds.TraesKARUn01G0163920.1"/>
    <property type="gene ID" value="TraesKARUn01G0163920"/>
</dbReference>
<dbReference type="EnsemblPlants" id="TraesKARUn01G0164050.1">
    <property type="protein sequence ID" value="cds.TraesKARUn01G0164050.1"/>
    <property type="gene ID" value="TraesKARUn01G0164050"/>
</dbReference>
<dbReference type="EnsemblPlants" id="TraesKARUn01G0164290.1">
    <property type="protein sequence ID" value="cds.TraesKARUn01G0164290.1"/>
    <property type="gene ID" value="TraesKARUn01G0164290"/>
</dbReference>
<dbReference type="EnsemblPlants" id="TraesKARUn01G0164470.1">
    <property type="protein sequence ID" value="cds.TraesKARUn01G0164470.1"/>
    <property type="gene ID" value="TraesKARUn01G0164470"/>
</dbReference>
<dbReference type="EnsemblPlants" id="TraesKARUn01G0164620.1">
    <property type="protein sequence ID" value="cds.TraesKARUn01G0164620.1"/>
    <property type="gene ID" value="TraesKARUn01G0164620"/>
</dbReference>
<dbReference type="EnsemblPlants" id="TraesKARUn01G0164830.1">
    <property type="protein sequence ID" value="cds.TraesKARUn01G0164830.1"/>
    <property type="gene ID" value="TraesKARUn01G0164830"/>
</dbReference>
<dbReference type="EnsemblPlants" id="TraesKARUn01G0164880.1">
    <property type="protein sequence ID" value="cds.TraesKARUn01G0164880.1"/>
    <property type="gene ID" value="TraesKARUn01G0164880"/>
</dbReference>
<dbReference type="EnsemblPlants" id="TraesKARUn01G0164900.1">
    <property type="protein sequence ID" value="cds.TraesKARUn01G0164900.1"/>
    <property type="gene ID" value="TraesKARUn01G0164900"/>
</dbReference>
<dbReference type="EnsemblPlants" id="TraesKARUn01G0165090.1">
    <property type="protein sequence ID" value="cds.TraesKARUn01G0165090.1"/>
    <property type="gene ID" value="TraesKARUn01G0165090"/>
</dbReference>
<dbReference type="EnsemblPlants" id="TraesKARUn01G0165240.1">
    <property type="protein sequence ID" value="cds.TraesKARUn01G0165240.1"/>
    <property type="gene ID" value="TraesKARUn01G0165240"/>
</dbReference>
<dbReference type="EnsemblPlants" id="TraesKARUn01G0165400.1">
    <property type="protein sequence ID" value="cds.TraesKARUn01G0165400.1"/>
    <property type="gene ID" value="TraesKARUn01G0165400"/>
</dbReference>
<dbReference type="EnsemblPlants" id="TraesKARUn01G0166180.1">
    <property type="protein sequence ID" value="cds.TraesKARUn01G0166180.1"/>
    <property type="gene ID" value="TraesKARUn01G0166180"/>
</dbReference>
<dbReference type="EnsemblPlants" id="TraesKARUn01G0167020.1">
    <property type="protein sequence ID" value="cds.TraesKARUn01G0167020.1"/>
    <property type="gene ID" value="TraesKARUn01G0167020"/>
</dbReference>
<dbReference type="EnsemblPlants" id="TraesKARUn01G0167210.1">
    <property type="protein sequence ID" value="cds.TraesKARUn01G0167210.1"/>
    <property type="gene ID" value="TraesKARUn01G0167210"/>
</dbReference>
<dbReference type="EnsemblPlants" id="TraesKARUn01G0167270.1">
    <property type="protein sequence ID" value="cds.TraesKARUn01G0167270.1"/>
    <property type="gene ID" value="TraesKARUn01G0167270"/>
</dbReference>
<dbReference type="EnsemblPlants" id="TraesKARUn01G0167520.1">
    <property type="protein sequence ID" value="cds.TraesKARUn01G0167520.1"/>
    <property type="gene ID" value="TraesKARUn01G0167520"/>
</dbReference>
<dbReference type="EnsemblPlants" id="TraesKARUn01G0167860.1">
    <property type="protein sequence ID" value="cds.TraesKARUn01G0167860.1"/>
    <property type="gene ID" value="TraesKARUn01G0167860"/>
</dbReference>
<dbReference type="EnsemblPlants" id="TraesKARUn01G0167980.1">
    <property type="protein sequence ID" value="cds.TraesKARUn01G0167980.1"/>
    <property type="gene ID" value="TraesKARUn01G0167980"/>
</dbReference>
<dbReference type="EnsemblPlants" id="TraesKARUn01G0168300.1">
    <property type="protein sequence ID" value="cds.TraesKARUn01G0168300.1"/>
    <property type="gene ID" value="TraesKARUn01G0168300"/>
</dbReference>
<dbReference type="EnsemblPlants" id="TraesKARUn01G0168450.1">
    <property type="protein sequence ID" value="cds.TraesKARUn01G0168450.1"/>
    <property type="gene ID" value="TraesKARUn01G0168450"/>
</dbReference>
<dbReference type="EnsemblPlants" id="TraesKARUn01G0168550.1">
    <property type="protein sequence ID" value="cds.TraesKARUn01G0168550.1"/>
    <property type="gene ID" value="TraesKARUn01G0168550"/>
</dbReference>
<dbReference type="EnsemblPlants" id="TraesKARUn01G0168630.1">
    <property type="protein sequence ID" value="cds.TraesKARUn01G0168630.1"/>
    <property type="gene ID" value="TraesKARUn01G0168630"/>
</dbReference>
<dbReference type="EnsemblPlants" id="TraesKARUn01G0168750.1">
    <property type="protein sequence ID" value="cds.TraesKARUn01G0168750.1"/>
    <property type="gene ID" value="TraesKARUn01G0168750"/>
</dbReference>
<dbReference type="EnsemblPlants" id="TraesKARUn01G0168770.1">
    <property type="protein sequence ID" value="cds.TraesKARUn01G0168770.1"/>
    <property type="gene ID" value="TraesKARUn01G0168770"/>
</dbReference>
<dbReference type="EnsemblPlants" id="TraesKARUn01G0168850.1">
    <property type="protein sequence ID" value="cds.TraesKARUn01G0168850.1"/>
    <property type="gene ID" value="TraesKARUn01G0168850"/>
</dbReference>
<dbReference type="EnsemblPlants" id="TraesKARUn01G0168860.1">
    <property type="protein sequence ID" value="cds.TraesKARUn01G0168860.1"/>
    <property type="gene ID" value="TraesKARUn01G0168860"/>
</dbReference>
<dbReference type="EnsemblPlants" id="TraesKARUn01G0169150.1">
    <property type="protein sequence ID" value="cds.TraesKARUn01G0169150.1"/>
    <property type="gene ID" value="TraesKARUn01G0169150"/>
</dbReference>
<dbReference type="EnsemblPlants" id="TraesKARUn01G0169440.1">
    <property type="protein sequence ID" value="cds.TraesKARUn01G0169440.1"/>
    <property type="gene ID" value="TraesKARUn01G0169440"/>
</dbReference>
<dbReference type="EnsemblPlants" id="TraesKARUn01G0169470.1">
    <property type="protein sequence ID" value="cds.TraesKARUn01G0169470.1"/>
    <property type="gene ID" value="TraesKARUn01G0169470"/>
</dbReference>
<dbReference type="EnsemblPlants" id="TraesKARUn01G0169540.1">
    <property type="protein sequence ID" value="cds.TraesKARUn01G0169540.1"/>
    <property type="gene ID" value="TraesKARUn01G0169540"/>
</dbReference>
<dbReference type="EnsemblPlants" id="TraesKARUn01G0169680.1">
    <property type="protein sequence ID" value="cds.TraesKARUn01G0169680.1"/>
    <property type="gene ID" value="TraesKARUn01G0169680"/>
</dbReference>
<dbReference type="EnsemblPlants" id="TraesKARUn01G0169790.1">
    <property type="protein sequence ID" value="cds.TraesKARUn01G0169790.1"/>
    <property type="gene ID" value="TraesKARUn01G0169790"/>
</dbReference>
<dbReference type="EnsemblPlants" id="TraesKARUn01G0169950.1">
    <property type="protein sequence ID" value="cds.TraesKARUn01G0169950.1"/>
    <property type="gene ID" value="TraesKARUn01G0169950"/>
</dbReference>
<dbReference type="EnsemblPlants" id="TraesKARUn01G0170150.1">
    <property type="protein sequence ID" value="cds.TraesKARUn01G0170150.1"/>
    <property type="gene ID" value="TraesKARUn01G0170150"/>
</dbReference>
<dbReference type="EnsemblPlants" id="TraesKARUn01G0170190.1">
    <property type="protein sequence ID" value="cds.TraesKARUn01G0170190.1"/>
    <property type="gene ID" value="TraesKARUn01G0170190"/>
</dbReference>
<dbReference type="EnsemblPlants" id="TraesKARUn01G0170490.1">
    <property type="protein sequence ID" value="cds.TraesKARUn01G0170490.1"/>
    <property type="gene ID" value="TraesKARUn01G0170490"/>
</dbReference>
<dbReference type="EnsemblPlants" id="TraesKARUn01G0170590.1">
    <property type="protein sequence ID" value="cds.TraesKARUn01G0170590.1"/>
    <property type="gene ID" value="TraesKARUn01G0170590"/>
</dbReference>
<dbReference type="EnsemblPlants" id="TraesKARUn01G0170620.1">
    <property type="protein sequence ID" value="cds.TraesKARUn01G0170620.1"/>
    <property type="gene ID" value="TraesKARUn01G0170620"/>
</dbReference>
<dbReference type="EnsemblPlants" id="TraesKARUn01G0170930.1">
    <property type="protein sequence ID" value="cds.TraesKARUn01G0170930.1"/>
    <property type="gene ID" value="TraesKARUn01G0170930"/>
</dbReference>
<dbReference type="EnsemblPlants" id="TraesKARUn01G0171120.1">
    <property type="protein sequence ID" value="cds.TraesKARUn01G0171120.1"/>
    <property type="gene ID" value="TraesKARUn01G0171120"/>
</dbReference>
<dbReference type="EnsemblPlants" id="TraesKARUn01G0171250.1">
    <property type="protein sequence ID" value="cds.TraesKARUn01G0171250.1"/>
    <property type="gene ID" value="TraesKARUn01G0171250"/>
</dbReference>
<dbReference type="EnsemblPlants" id="TraesKARUn01G0171360.1">
    <property type="protein sequence ID" value="cds.TraesKARUn01G0171360.1"/>
    <property type="gene ID" value="TraesKARUn01G0171360"/>
</dbReference>
<dbReference type="EnsemblPlants" id="TraesKARUn01G0171410.1">
    <property type="protein sequence ID" value="cds.TraesKARUn01G0171410.1"/>
    <property type="gene ID" value="TraesKARUn01G0171410"/>
</dbReference>
<dbReference type="EnsemblPlants" id="TraesKARUn01G0171560.1">
    <property type="protein sequence ID" value="cds.TraesKARUn01G0171560.1"/>
    <property type="gene ID" value="TraesKARUn01G0171560"/>
</dbReference>
<dbReference type="EnsemblPlants" id="TraesKARUn01G0171710.1">
    <property type="protein sequence ID" value="cds.TraesKARUn01G0171710.1"/>
    <property type="gene ID" value="TraesKARUn01G0171710"/>
</dbReference>
<dbReference type="EnsemblPlants" id="TraesKARUn01G0171860.1">
    <property type="protein sequence ID" value="cds.TraesKARUn01G0171860.1"/>
    <property type="gene ID" value="TraesKARUn01G0171860"/>
</dbReference>
<dbReference type="EnsemblPlants" id="TraesKARUn01G0171910.1">
    <property type="protein sequence ID" value="cds.TraesKARUn01G0171910.1"/>
    <property type="gene ID" value="TraesKARUn01G0171910"/>
</dbReference>
<dbReference type="EnsemblPlants" id="TraesKARUn01G0172060.1">
    <property type="protein sequence ID" value="cds.TraesKARUn01G0172060.1"/>
    <property type="gene ID" value="TraesKARUn01G0172060"/>
</dbReference>
<dbReference type="EnsemblPlants" id="TraesKARUn01G0172140.1">
    <property type="protein sequence ID" value="cds.TraesKARUn01G0172140.1"/>
    <property type="gene ID" value="TraesKARUn01G0172140"/>
</dbReference>
<dbReference type="EnsemblPlants" id="TraesKARUn01G0172800.1">
    <property type="protein sequence ID" value="cds.TraesKARUn01G0172800.1"/>
    <property type="gene ID" value="TraesKARUn01G0172800"/>
</dbReference>
<dbReference type="EnsemblPlants" id="TraesKARUn01G0172890.1">
    <property type="protein sequence ID" value="cds.TraesKARUn01G0172890.1"/>
    <property type="gene ID" value="TraesKARUn01G0172890"/>
</dbReference>
<dbReference type="EnsemblPlants" id="TraesKARUn01G0173220.1">
    <property type="protein sequence ID" value="cds.TraesKARUn01G0173220.1"/>
    <property type="gene ID" value="TraesKARUn01G0173220"/>
</dbReference>
<dbReference type="EnsemblPlants" id="TraesKARUn01G0173320.1">
    <property type="protein sequence ID" value="cds.TraesKARUn01G0173320.1"/>
    <property type="gene ID" value="TraesKARUn01G0173320"/>
</dbReference>
<dbReference type="EnsemblPlants" id="TraesKARUn01G0173530.1">
    <property type="protein sequence ID" value="cds.TraesKARUn01G0173530.1"/>
    <property type="gene ID" value="TraesKARUn01G0173530"/>
</dbReference>
<dbReference type="EnsemblPlants" id="TraesKARUn01G0173640.1">
    <property type="protein sequence ID" value="cds.TraesKARUn01G0173640.1"/>
    <property type="gene ID" value="TraesKARUn01G0173640"/>
</dbReference>
<dbReference type="EnsemblPlants" id="TraesKARUn01G0173730.1">
    <property type="protein sequence ID" value="cds.TraesKARUn01G0173730.1"/>
    <property type="gene ID" value="TraesKARUn01G0173730"/>
</dbReference>
<dbReference type="EnsemblPlants" id="TraesKARUn01G0173830.1">
    <property type="protein sequence ID" value="cds.TraesKARUn01G0173830.1"/>
    <property type="gene ID" value="TraesKARUn01G0173830"/>
</dbReference>
<dbReference type="EnsemblPlants" id="TraesKARUn01G0173970.1">
    <property type="protein sequence ID" value="cds.TraesKARUn01G0173970.1"/>
    <property type="gene ID" value="TraesKARUn01G0173970"/>
</dbReference>
<dbReference type="EnsemblPlants" id="TraesKARUn01G0174080.1">
    <property type="protein sequence ID" value="cds.TraesKARUn01G0174080.1"/>
    <property type="gene ID" value="TraesKARUn01G0174080"/>
</dbReference>
<dbReference type="EnsemblPlants" id="TraesKARUn01G0174520.1">
    <property type="protein sequence ID" value="cds.TraesKARUn01G0174520.1"/>
    <property type="gene ID" value="TraesKARUn01G0174520"/>
</dbReference>
<dbReference type="EnsemblPlants" id="TraesKARUn01G0174780.1">
    <property type="protein sequence ID" value="cds.TraesKARUn01G0174780.1"/>
    <property type="gene ID" value="TraesKARUn01G0174780"/>
</dbReference>
<dbReference type="EnsemblPlants" id="TraesKARUn01G0174830.1">
    <property type="protein sequence ID" value="cds.TraesKARUn01G0174830.1"/>
    <property type="gene ID" value="TraesKARUn01G0174830"/>
</dbReference>
<dbReference type="EnsemblPlants" id="TraesKARUn01G0175080.1">
    <property type="protein sequence ID" value="cds.TraesKARUn01G0175080.1"/>
    <property type="gene ID" value="TraesKARUn01G0175080"/>
</dbReference>
<dbReference type="EnsemblPlants" id="TraesKARUn01G0175210.1">
    <property type="protein sequence ID" value="cds.TraesKARUn01G0175210.1"/>
    <property type="gene ID" value="TraesKARUn01G0175210"/>
</dbReference>
<dbReference type="EnsemblPlants" id="TraesKARUn01G0175380.1">
    <property type="protein sequence ID" value="cds.TraesKARUn01G0175380.1"/>
    <property type="gene ID" value="TraesKARUn01G0175380"/>
</dbReference>
<dbReference type="EnsemblPlants" id="TraesKARUn01G0175590.1">
    <property type="protein sequence ID" value="cds.TraesKARUn01G0175590.1"/>
    <property type="gene ID" value="TraesKARUn01G0175590"/>
</dbReference>
<dbReference type="EnsemblPlants" id="TraesKARUn01G0175640.1">
    <property type="protein sequence ID" value="cds.TraesKARUn01G0175640.1"/>
    <property type="gene ID" value="TraesKARUn01G0175640"/>
</dbReference>
<dbReference type="EnsemblPlants" id="TraesKARUn01G0176320.1">
    <property type="protein sequence ID" value="cds.TraesKARUn01G0176320.1"/>
    <property type="gene ID" value="TraesKARUn01G0176320"/>
</dbReference>
<dbReference type="EnsemblPlants" id="TraesKARUn01G0176560.1">
    <property type="protein sequence ID" value="cds.TraesKARUn01G0176560.1"/>
    <property type="gene ID" value="TraesKARUn01G0176560"/>
</dbReference>
<dbReference type="EnsemblPlants" id="TraesKARUn01G0176610.1">
    <property type="protein sequence ID" value="cds.TraesKARUn01G0176610.1"/>
    <property type="gene ID" value="TraesKARUn01G0176610"/>
</dbReference>
<dbReference type="EnsemblPlants" id="TraesKARUn01G0176700.1">
    <property type="protein sequence ID" value="cds.TraesKARUn01G0176700.1"/>
    <property type="gene ID" value="TraesKARUn01G0176700"/>
</dbReference>
<dbReference type="EnsemblPlants" id="TraesKARUn01G0176800.1">
    <property type="protein sequence ID" value="cds.TraesKARUn01G0176800.1"/>
    <property type="gene ID" value="TraesKARUn01G0176800"/>
</dbReference>
<dbReference type="EnsemblPlants" id="TraesKARUn01G0177090.1">
    <property type="protein sequence ID" value="cds.TraesKARUn01G0177090.1"/>
    <property type="gene ID" value="TraesKARUn01G0177090"/>
</dbReference>
<dbReference type="EnsemblPlants" id="TraesKARUn01G0177180.1">
    <property type="protein sequence ID" value="cds.TraesKARUn01G0177180.1"/>
    <property type="gene ID" value="TraesKARUn01G0177180"/>
</dbReference>
<dbReference type="EnsemblPlants" id="TraesKARUn01G0177430.1">
    <property type="protein sequence ID" value="cds.TraesKARUn01G0177430.1"/>
    <property type="gene ID" value="TraesKARUn01G0177430"/>
</dbReference>
<dbReference type="EnsemblPlants" id="TraesKARUn01G0177620.1">
    <property type="protein sequence ID" value="cds.TraesKARUn01G0177620.1"/>
    <property type="gene ID" value="TraesKARUn01G0177620"/>
</dbReference>
<dbReference type="EnsemblPlants" id="TraesKARUn01G0177740.1">
    <property type="protein sequence ID" value="cds.TraesKARUn01G0177740.1"/>
    <property type="gene ID" value="TraesKARUn01G0177740"/>
</dbReference>
<dbReference type="EnsemblPlants" id="TraesKARUn01G0177860.1">
    <property type="protein sequence ID" value="cds.TraesKARUn01G0177860.1"/>
    <property type="gene ID" value="TraesKARUn01G0177860"/>
</dbReference>
<dbReference type="EnsemblPlants" id="TraesKARUn01G0178040.1">
    <property type="protein sequence ID" value="cds.TraesKARUn01G0178040.1"/>
    <property type="gene ID" value="TraesKARUn01G0178040"/>
</dbReference>
<dbReference type="EnsemblPlants" id="TraesKARUn01G0178120.1">
    <property type="protein sequence ID" value="cds.TraesKARUn01G0178120.1"/>
    <property type="gene ID" value="TraesKARUn01G0178120"/>
</dbReference>
<dbReference type="EnsemblPlants" id="TraesKARUn01G0178190.1">
    <property type="protein sequence ID" value="cds.TraesKARUn01G0178190.1"/>
    <property type="gene ID" value="TraesKARUn01G0178190"/>
</dbReference>
<dbReference type="EnsemblPlants" id="TraesKARUn01G0178300.1">
    <property type="protein sequence ID" value="cds.TraesKARUn01G0178300.1"/>
    <property type="gene ID" value="TraesKARUn01G0178300"/>
</dbReference>
<dbReference type="EnsemblPlants" id="TraesKARUn01G0178520.1">
    <property type="protein sequence ID" value="cds.TraesKARUn01G0178520.1"/>
    <property type="gene ID" value="TraesKARUn01G0178520"/>
</dbReference>
<dbReference type="EnsemblPlants" id="TraesKARUn01G0178580.1">
    <property type="protein sequence ID" value="cds.TraesKARUn01G0178580.1"/>
    <property type="gene ID" value="TraesKARUn01G0178580"/>
</dbReference>
<dbReference type="EnsemblPlants" id="TraesKARUn01G0178720.1">
    <property type="protein sequence ID" value="cds.TraesKARUn01G0178720.1"/>
    <property type="gene ID" value="TraesKARUn01G0178720"/>
</dbReference>
<dbReference type="EnsemblPlants" id="TraesKARUn01G0178850.1">
    <property type="protein sequence ID" value="cds.TraesKARUn01G0178850.1"/>
    <property type="gene ID" value="TraesKARUn01G0178850"/>
</dbReference>
<dbReference type="EnsemblPlants" id="TraesKARUn01G0178940.1">
    <property type="protein sequence ID" value="cds.TraesKARUn01G0178940.1"/>
    <property type="gene ID" value="TraesKARUn01G0178940"/>
</dbReference>
<dbReference type="EnsemblPlants" id="TraesKARUn01G0179190.1">
    <property type="protein sequence ID" value="cds.TraesKARUn01G0179190.1"/>
    <property type="gene ID" value="TraesKARUn01G0179190"/>
</dbReference>
<dbReference type="EnsemblPlants" id="TraesKARUn01G0179310.1">
    <property type="protein sequence ID" value="cds.TraesKARUn01G0179310.1"/>
    <property type="gene ID" value="TraesKARUn01G0179310"/>
</dbReference>
<dbReference type="EnsemblPlants" id="TraesKARUn01G0179530.1">
    <property type="protein sequence ID" value="cds.TraesKARUn01G0179530.1"/>
    <property type="gene ID" value="TraesKARUn01G0179530"/>
</dbReference>
<dbReference type="EnsemblPlants" id="TraesKARUn01G0179690.1">
    <property type="protein sequence ID" value="cds.TraesKARUn01G0179690.1"/>
    <property type="gene ID" value="TraesKARUn01G0179690"/>
</dbReference>
<dbReference type="EnsemblPlants" id="TraesKARUn01G0179850.1">
    <property type="protein sequence ID" value="cds.TraesKARUn01G0179850.1"/>
    <property type="gene ID" value="TraesKARUn01G0179850"/>
</dbReference>
<dbReference type="EnsemblPlants" id="TraesKARUn01G0180130.1">
    <property type="protein sequence ID" value="cds.TraesKARUn01G0180130.1"/>
    <property type="gene ID" value="TraesKARUn01G0180130"/>
</dbReference>
<dbReference type="EnsemblPlants" id="TraesKARUn01G0180260.1">
    <property type="protein sequence ID" value="cds.TraesKARUn01G0180260.1"/>
    <property type="gene ID" value="TraesKARUn01G0180260"/>
</dbReference>
<dbReference type="EnsemblPlants" id="TraesKARUn01G0180460.1">
    <property type="protein sequence ID" value="cds.TraesKARUn01G0180460.1"/>
    <property type="gene ID" value="TraesKARUn01G0180460"/>
</dbReference>
<dbReference type="EnsemblPlants" id="TraesKARUn01G0180510.1">
    <property type="protein sequence ID" value="cds.TraesKARUn01G0180510.1"/>
    <property type="gene ID" value="TraesKARUn01G0180510"/>
</dbReference>
<dbReference type="EnsemblPlants" id="TraesKARUn01G0180770.1">
    <property type="protein sequence ID" value="cds.TraesKARUn01G0180770.1"/>
    <property type="gene ID" value="TraesKARUn01G0180770"/>
</dbReference>
<dbReference type="EnsemblPlants" id="TraesKARUn01G0181000.1">
    <property type="protein sequence ID" value="cds.TraesKARUn01G0181000.1"/>
    <property type="gene ID" value="TraesKARUn01G0181000"/>
</dbReference>
<dbReference type="EnsemblPlants" id="TraesKARUn01G0181180.1">
    <property type="protein sequence ID" value="cds.TraesKARUn01G0181180.1"/>
    <property type="gene ID" value="TraesKARUn01G0181180"/>
</dbReference>
<dbReference type="EnsemblPlants" id="TraesKARUn01G0181680.1">
    <property type="protein sequence ID" value="cds.TraesKARUn01G0181680.1"/>
    <property type="gene ID" value="TraesKARUn01G0181680"/>
</dbReference>
<dbReference type="EnsemblPlants" id="TraesKARUn01G0182340.1">
    <property type="protein sequence ID" value="cds.TraesKARUn01G0182340.1"/>
    <property type="gene ID" value="TraesKARUn01G0182340"/>
</dbReference>
<dbReference type="EnsemblPlants" id="TraesKARUn01G0183520.1">
    <property type="protein sequence ID" value="cds.TraesKARUn01G0183520.1"/>
    <property type="gene ID" value="TraesKARUn01G0183520"/>
</dbReference>
<dbReference type="EnsemblPlants" id="TraesKARUn01G0183640.1">
    <property type="protein sequence ID" value="cds.TraesKARUn01G0183640.1"/>
    <property type="gene ID" value="TraesKARUn01G0183640"/>
</dbReference>
<dbReference type="EnsemblPlants" id="TraesKARUn01G0183710.1">
    <property type="protein sequence ID" value="cds.TraesKARUn01G0183710.1"/>
    <property type="gene ID" value="TraesKARUn01G0183710"/>
</dbReference>
<dbReference type="EnsemblPlants" id="TraesKARUn01G0183870.1">
    <property type="protein sequence ID" value="cds.TraesKARUn01G0183870.1"/>
    <property type="gene ID" value="TraesKARUn01G0183870"/>
</dbReference>
<dbReference type="EnsemblPlants" id="TraesKARUn01G0183890.1">
    <property type="protein sequence ID" value="cds.TraesKARUn01G0183890.1"/>
    <property type="gene ID" value="TraesKARUn01G0183890"/>
</dbReference>
<dbReference type="EnsemblPlants" id="TraesKARUn01G0184260.1">
    <property type="protein sequence ID" value="cds.TraesKARUn01G0184260.1"/>
    <property type="gene ID" value="TraesKARUn01G0184260"/>
</dbReference>
<dbReference type="EnsemblPlants" id="TraesKARUn01G0184310.1">
    <property type="protein sequence ID" value="cds.TraesKARUn01G0184310.1"/>
    <property type="gene ID" value="TraesKARUn01G0184310"/>
</dbReference>
<dbReference type="EnsemblPlants" id="TraesKARUn01G0184420.1">
    <property type="protein sequence ID" value="cds.TraesKARUn01G0184420.1"/>
    <property type="gene ID" value="TraesKARUn01G0184420"/>
</dbReference>
<dbReference type="EnsemblPlants" id="TraesKARUn01G0184560.1">
    <property type="protein sequence ID" value="cds.TraesKARUn01G0184560.1"/>
    <property type="gene ID" value="TraesKARUn01G0184560"/>
</dbReference>
<dbReference type="EnsemblPlants" id="TraesKARUn01G0184830.1">
    <property type="protein sequence ID" value="cds.TraesKARUn01G0184830.1"/>
    <property type="gene ID" value="TraesKARUn01G0184830"/>
</dbReference>
<dbReference type="EnsemblPlants" id="TraesKARUn01G0185670.1">
    <property type="protein sequence ID" value="cds.TraesKARUn01G0185670.1"/>
    <property type="gene ID" value="TraesKARUn01G0185670"/>
</dbReference>
<dbReference type="EnsemblPlants" id="TraesKARUn01G0186150.1">
    <property type="protein sequence ID" value="cds.TraesKARUn01G0186150.1"/>
    <property type="gene ID" value="TraesKARUn01G0186150"/>
</dbReference>
<dbReference type="EnsemblPlants" id="TraesKARUn01G0186280.1">
    <property type="protein sequence ID" value="cds.TraesKARUn01G0186280.1"/>
    <property type="gene ID" value="TraesKARUn01G0186280"/>
</dbReference>
<dbReference type="EnsemblPlants" id="TraesKARUn01G0186410.1">
    <property type="protein sequence ID" value="cds.TraesKARUn01G0186410.1"/>
    <property type="gene ID" value="TraesKARUn01G0186410"/>
</dbReference>
<dbReference type="EnsemblPlants" id="TraesKARUn01G0186650.1">
    <property type="protein sequence ID" value="cds.TraesKARUn01G0186650.1"/>
    <property type="gene ID" value="TraesKARUn01G0186650"/>
</dbReference>
<dbReference type="EnsemblPlants" id="TraesKARUn01G0186840.1">
    <property type="protein sequence ID" value="cds.TraesKARUn01G0186840.1"/>
    <property type="gene ID" value="TraesKARUn01G0186840"/>
</dbReference>
<dbReference type="EnsemblPlants" id="TraesKARUn01G0186910.1">
    <property type="protein sequence ID" value="cds.TraesKARUn01G0186910.1"/>
    <property type="gene ID" value="TraesKARUn01G0186910"/>
</dbReference>
<dbReference type="EnsemblPlants" id="TraesKARUn01G0187340.1">
    <property type="protein sequence ID" value="cds.TraesKARUn01G0187340.1"/>
    <property type="gene ID" value="TraesKARUn01G0187340"/>
</dbReference>
<dbReference type="EnsemblPlants" id="TraesKARUn01G0187410.1">
    <property type="protein sequence ID" value="cds.TraesKARUn01G0187410.1"/>
    <property type="gene ID" value="TraesKARUn01G0187410"/>
</dbReference>
<dbReference type="EnsemblPlants" id="TraesKARUn01G0187580.1">
    <property type="protein sequence ID" value="cds.TraesKARUn01G0187580.1"/>
    <property type="gene ID" value="TraesKARUn01G0187580"/>
</dbReference>
<dbReference type="EnsemblPlants" id="TraesKARUn01G0187760.1">
    <property type="protein sequence ID" value="cds.TraesKARUn01G0187760.1"/>
    <property type="gene ID" value="TraesKARUn01G0187760"/>
</dbReference>
<dbReference type="EnsemblPlants" id="TraesKARUn01G0187850.1">
    <property type="protein sequence ID" value="cds.TraesKARUn01G0187850.1"/>
    <property type="gene ID" value="TraesKARUn01G0187850"/>
</dbReference>
<dbReference type="EnsemblPlants" id="TraesKARUn01G0187870.1">
    <property type="protein sequence ID" value="cds.TraesKARUn01G0187870.1"/>
    <property type="gene ID" value="TraesKARUn01G0187870"/>
</dbReference>
<dbReference type="EnsemblPlants" id="TraesKARUn01G0188090.1">
    <property type="protein sequence ID" value="cds.TraesKARUn01G0188090.1"/>
    <property type="gene ID" value="TraesKARUn01G0188090"/>
</dbReference>
<dbReference type="EnsemblPlants" id="TraesKARUn01G0188420.1">
    <property type="protein sequence ID" value="cds.TraesKARUn01G0188420.1"/>
    <property type="gene ID" value="TraesKARUn01G0188420"/>
</dbReference>
<dbReference type="EnsemblPlants" id="TraesKARUn01G0189100.1">
    <property type="protein sequence ID" value="cds.TraesKARUn01G0189100.1"/>
    <property type="gene ID" value="TraesKARUn01G0189100"/>
</dbReference>
<dbReference type="EnsemblPlants" id="TraesKARUn01G0189270.1">
    <property type="protein sequence ID" value="cds.TraesKARUn01G0189270.1"/>
    <property type="gene ID" value="TraesKARUn01G0189270"/>
</dbReference>
<dbReference type="EnsemblPlants" id="TraesKARUn01G0189300.1">
    <property type="protein sequence ID" value="cds.TraesKARUn01G0189300.1"/>
    <property type="gene ID" value="TraesKARUn01G0189300"/>
</dbReference>
<dbReference type="EnsemblPlants" id="TraesKARUn01G0189460.1">
    <property type="protein sequence ID" value="cds.TraesKARUn01G0189460.1"/>
    <property type="gene ID" value="TraesKARUn01G0189460"/>
</dbReference>
<dbReference type="EnsemblPlants" id="TraesKARUn01G0189780.1">
    <property type="protein sequence ID" value="cds.TraesKARUn01G0189780.1"/>
    <property type="gene ID" value="TraesKARUn01G0189780"/>
</dbReference>
<dbReference type="EnsemblPlants" id="TraesKARUn01G0189840.1">
    <property type="protein sequence ID" value="cds.TraesKARUn01G0189840.1"/>
    <property type="gene ID" value="TraesKARUn01G0189840"/>
</dbReference>
<dbReference type="EnsemblPlants" id="TraesKARUn01G0190100.1">
    <property type="protein sequence ID" value="cds.TraesKARUn01G0190100.1"/>
    <property type="gene ID" value="TraesKARUn01G0190100"/>
</dbReference>
<dbReference type="EnsemblPlants" id="TraesKARUn01G0190220.1">
    <property type="protein sequence ID" value="cds.TraesKARUn01G0190220.1"/>
    <property type="gene ID" value="TraesKARUn01G0190220"/>
</dbReference>
<dbReference type="EnsemblPlants" id="TraesKARUn01G0190320.1">
    <property type="protein sequence ID" value="cds.TraesKARUn01G0190320.1"/>
    <property type="gene ID" value="TraesKARUn01G0190320"/>
</dbReference>
<dbReference type="EnsemblPlants" id="TraesKARUn01G0190440.1">
    <property type="protein sequence ID" value="cds.TraesKARUn01G0190440.1"/>
    <property type="gene ID" value="TraesKARUn01G0190440"/>
</dbReference>
<dbReference type="EnsemblPlants" id="TraesKARUn01G0190620.1">
    <property type="protein sequence ID" value="cds.TraesKARUn01G0190620.1"/>
    <property type="gene ID" value="TraesKARUn01G0190620"/>
</dbReference>
<dbReference type="EnsemblPlants" id="TraesKARUn01G0190810.1">
    <property type="protein sequence ID" value="cds.TraesKARUn01G0190810.1"/>
    <property type="gene ID" value="TraesKARUn01G0190810"/>
</dbReference>
<dbReference type="EnsemblPlants" id="TraesKARUn01G0191100.1">
    <property type="protein sequence ID" value="cds.TraesKARUn01G0191100.1"/>
    <property type="gene ID" value="TraesKARUn01G0191100"/>
</dbReference>
<dbReference type="EnsemblPlants" id="TraesKARUn01G0191220.1">
    <property type="protein sequence ID" value="cds.TraesKARUn01G0191220.1"/>
    <property type="gene ID" value="TraesKARUn01G0191220"/>
</dbReference>
<dbReference type="EnsemblPlants" id="TraesKARUn01G0191350.1">
    <property type="protein sequence ID" value="cds.TraesKARUn01G0191350.1"/>
    <property type="gene ID" value="TraesKARUn01G0191350"/>
</dbReference>
<dbReference type="EnsemblPlants" id="TraesKARUn01G0191670.1">
    <property type="protein sequence ID" value="cds.TraesKARUn01G0191670.1"/>
    <property type="gene ID" value="TraesKARUn01G0191670"/>
</dbReference>
<dbReference type="EnsemblPlants" id="TraesKARUn01G0192130.1">
    <property type="protein sequence ID" value="cds.TraesKARUn01G0192130.1"/>
    <property type="gene ID" value="TraesKARUn01G0192130"/>
</dbReference>
<dbReference type="EnsemblPlants" id="TraesKARUn01G0192240.1">
    <property type="protein sequence ID" value="cds.TraesKARUn01G0192240.1"/>
    <property type="gene ID" value="TraesKARUn01G0192240"/>
</dbReference>
<dbReference type="EnsemblPlants" id="TraesKARUn01G0193860.1">
    <property type="protein sequence ID" value="cds.TraesKARUn01G0193860.1"/>
    <property type="gene ID" value="TraesKARUn01G0193860"/>
</dbReference>
<dbReference type="EnsemblPlants" id="TraesKARUn01G0194130.1">
    <property type="protein sequence ID" value="cds.TraesKARUn01G0194130.1"/>
    <property type="gene ID" value="TraesKARUn01G0194130"/>
</dbReference>
<dbReference type="EnsemblPlants" id="TraesKARUn01G0194610.1">
    <property type="protein sequence ID" value="cds.TraesKARUn01G0194610.1"/>
    <property type="gene ID" value="TraesKARUn01G0194610"/>
</dbReference>
<dbReference type="EnsemblPlants" id="TraesKARUn01G0195720.1">
    <property type="protein sequence ID" value="cds.TraesKARUn01G0195720.1"/>
    <property type="gene ID" value="TraesKARUn01G0195720"/>
</dbReference>
<dbReference type="EnsemblPlants" id="TraesKARUn01G0195730.1">
    <property type="protein sequence ID" value="cds.TraesKARUn01G0195730.1"/>
    <property type="gene ID" value="TraesKARUn01G0195730"/>
</dbReference>
<dbReference type="EnsemblPlants" id="TraesLAC2B03G00883610.1">
    <property type="protein sequence ID" value="TraesLAC2B03G00883610.1.CDS1"/>
    <property type="gene ID" value="TraesLAC2B03G00883610"/>
</dbReference>
<dbReference type="EnsemblPlants" id="TraesLAC3B03G01550040.1">
    <property type="protein sequence ID" value="TraesLAC3B03G01550040.1.CDS1"/>
    <property type="gene ID" value="TraesLAC3B03G01550040"/>
</dbReference>
<dbReference type="EnsemblPlants" id="TraesLDM3B03G01608600.1">
    <property type="protein sequence ID" value="TraesLDM3B03G01608600.1.CDS1"/>
    <property type="gene ID" value="TraesLDM3B03G01608600"/>
</dbReference>
<dbReference type="EnsemblPlants" id="TraesLDM7B03G04275480.1">
    <property type="protein sequence ID" value="TraesLDM7B03G04275480.1.CDS1"/>
    <property type="gene ID" value="TraesLDM7B03G04275480"/>
</dbReference>
<dbReference type="EnsemblPlants" id="TraesMAC3D03G01987460.1">
    <property type="protein sequence ID" value="TraesMAC3D03G01987460.1.CDS1"/>
    <property type="gene ID" value="TraesMAC3D03G01987460"/>
</dbReference>
<dbReference type="EnsemblPlants" id="TraesNOR3B03G01628770.1">
    <property type="protein sequence ID" value="TraesNOR3B03G01628770.1.CDS1"/>
    <property type="gene ID" value="TraesNOR3B03G01628770"/>
</dbReference>
<dbReference type="EnsemblPlants" id="TraesNOR5A03G02711220.1">
    <property type="protein sequence ID" value="TraesNOR5A03G02711220.1.CDS1"/>
    <property type="gene ID" value="TraesNOR5A03G02711220"/>
</dbReference>
<dbReference type="EnsemblPlants" id="TraesNOR7B03G04137400.1">
    <property type="protein sequence ID" value="TraesNOR7B03G04137400.1.CDS1"/>
    <property type="gene ID" value="TraesNOR7B03G04137400"/>
</dbReference>
<dbReference type="EnsemblPlants" id="TraesPARA_EIv1.0_2054670.1">
    <property type="protein sequence ID" value="TraesPARA_EIv1.0_2054670.1.CDS1"/>
    <property type="gene ID" value="TraesPARA_EIv1.0_2054670"/>
</dbReference>
<dbReference type="EnsemblPlants" id="TraesPARA_EIv1.0_2644740.1">
    <property type="protein sequence ID" value="TraesPARA_EIv1.0_2644740.1.CDS1"/>
    <property type="gene ID" value="TraesPARA_EIv1.0_2644740"/>
</dbReference>
<dbReference type="EnsemblPlants" id="TraesPARA_EIv1.0_2648400.1">
    <property type="protein sequence ID" value="TraesPARA_EIv1.0_2648400.1.CDS1"/>
    <property type="gene ID" value="TraesPARA_EIv1.0_2648400"/>
</dbReference>
<dbReference type="EnsemblPlants" id="TraesPARA_EIv1.0_2666530.1">
    <property type="protein sequence ID" value="TraesPARA_EIv1.0_2666530.1.CDS1"/>
    <property type="gene ID" value="TraesPARA_EIv1.0_2666530"/>
</dbReference>
<dbReference type="EnsemblPlants" id="TraesRN3B0100444700.1">
    <property type="protein sequence ID" value="TraesRN3B0100444700.1"/>
    <property type="gene ID" value="TraesRN3B0100444700"/>
</dbReference>
<dbReference type="EnsemblPlants" id="TraesRN3D0101151100.1">
    <property type="protein sequence ID" value="TraesRN3D0101151100.1"/>
    <property type="gene ID" value="TraesRN3D0101151100"/>
</dbReference>
<dbReference type="EnsemblPlants" id="TraesRN5B0100647500.1">
    <property type="protein sequence ID" value="TraesRN5B0100647500.1"/>
    <property type="gene ID" value="TraesRN5B0100647500"/>
</dbReference>
<dbReference type="EnsemblPlants" id="TraesRN5D0101109300.1">
    <property type="protein sequence ID" value="TraesRN5D0101109300.1"/>
    <property type="gene ID" value="TraesRN5D0101109300"/>
</dbReference>
<dbReference type="EnsemblPlants" id="TraesSTA3D03G01984340.1">
    <property type="protein sequence ID" value="TraesSTA3D03G01984340.1.CDS1"/>
    <property type="gene ID" value="TraesSTA3D03G01984340"/>
</dbReference>
<dbReference type="EnsemblPlants" id="TraesSYM5B03G02910000.1">
    <property type="protein sequence ID" value="TraesSYM5B03G02910000.1.CDS1"/>
    <property type="gene ID" value="TraesSYM5B03G02910000"/>
</dbReference>
<dbReference type="GeneID" id="803150"/>
<dbReference type="Gramene" id="TraesARI5B03G02923560.1">
    <property type="protein sequence ID" value="TraesARI5B03G02923560.1.CDS1"/>
    <property type="gene ID" value="TraesARI5B03G02923560"/>
</dbReference>
<dbReference type="Gramene" id="TraesCAD_scaffold_244212_01G000200.1">
    <property type="protein sequence ID" value="TraesCAD_scaffold_244212_01G000200.1"/>
    <property type="gene ID" value="TraesCAD_scaffold_244212_01G000200"/>
</dbReference>
<dbReference type="Gramene" id="TraesCS3B02G188600.1">
    <property type="protein sequence ID" value="TraesCS3B02G188600.1.cds1"/>
    <property type="gene ID" value="TraesCS3B02G188600"/>
</dbReference>
<dbReference type="Gramene" id="TraesCS3B03G0454000.1">
    <property type="protein sequence ID" value="TraesCS3B03G0454000.1.CDS1"/>
    <property type="gene ID" value="TraesCS3B03G0454000"/>
</dbReference>
<dbReference type="Gramene" id="TraesJAG7B03G04074710.1">
    <property type="protein sequence ID" value="TraesJAG7B03G04074710.1.CDS1"/>
    <property type="gene ID" value="TraesJAG7B03G04074710"/>
</dbReference>
<dbReference type="Gramene" id="TraesJUL1B03G00215620.1">
    <property type="protein sequence ID" value="TraesJUL1B03G00215620.1.CDS1"/>
    <property type="gene ID" value="TraesJUL1B03G00215620"/>
</dbReference>
<dbReference type="Gramene" id="TraesJUL7B03G04129920.1">
    <property type="protein sequence ID" value="TraesJUL7B03G04129920.1.CDS1"/>
    <property type="gene ID" value="TraesJUL7B03G04129920"/>
</dbReference>
<dbReference type="Gramene" id="TraesKAR4A01G0000250.1">
    <property type="protein sequence ID" value="cds.TraesKAR4A01G0000250.1"/>
    <property type="gene ID" value="TraesKAR4A01G0000250"/>
</dbReference>
<dbReference type="Gramene" id="TraesKAR6B01G0219060.1">
    <property type="protein sequence ID" value="cds.TraesKAR6B01G0219060.1"/>
    <property type="gene ID" value="TraesKAR6B01G0219060"/>
</dbReference>
<dbReference type="Gramene" id="TraesKAR6B01G0220030.1">
    <property type="protein sequence ID" value="cds.TraesKAR6B01G0220030.1"/>
    <property type="gene ID" value="TraesKAR6B01G0220030"/>
</dbReference>
<dbReference type="Gramene" id="TraesKAR7B01G0098620.1">
    <property type="protein sequence ID" value="cds.TraesKAR7B01G0098620.1"/>
    <property type="gene ID" value="TraesKAR7B01G0098620"/>
</dbReference>
<dbReference type="Gramene" id="TraesKARUn01G0025850.1">
    <property type="protein sequence ID" value="cds.TraesKARUn01G0025850.1"/>
    <property type="gene ID" value="TraesKARUn01G0025850"/>
</dbReference>
<dbReference type="Gramene" id="TraesKARUn01G0025890.1">
    <property type="protein sequence ID" value="cds.TraesKARUn01G0025890.1"/>
    <property type="gene ID" value="TraesKARUn01G0025890"/>
</dbReference>
<dbReference type="Gramene" id="TraesKARUn01G0025970.1">
    <property type="protein sequence ID" value="cds.TraesKARUn01G0025970.1"/>
    <property type="gene ID" value="TraesKARUn01G0025970"/>
</dbReference>
<dbReference type="Gramene" id="TraesKARUn01G0026090.1">
    <property type="protein sequence ID" value="cds.TraesKARUn01G0026090.1"/>
    <property type="gene ID" value="TraesKARUn01G0026090"/>
</dbReference>
<dbReference type="Gramene" id="TraesKARUn01G0026280.1">
    <property type="protein sequence ID" value="cds.TraesKARUn01G0026280.1"/>
    <property type="gene ID" value="TraesKARUn01G0026280"/>
</dbReference>
<dbReference type="Gramene" id="TraesKARUn01G0026400.1">
    <property type="protein sequence ID" value="cds.TraesKARUn01G0026400.1"/>
    <property type="gene ID" value="TraesKARUn01G0026400"/>
</dbReference>
<dbReference type="Gramene" id="TraesKARUn01G0027580.1">
    <property type="protein sequence ID" value="cds.TraesKARUn01G0027580.1"/>
    <property type="gene ID" value="TraesKARUn01G0027580"/>
</dbReference>
<dbReference type="Gramene" id="TraesKARUn01G0027790.1">
    <property type="protein sequence ID" value="cds.TraesKARUn01G0027790.1"/>
    <property type="gene ID" value="TraesKARUn01G0027790"/>
</dbReference>
<dbReference type="Gramene" id="TraesKARUn01G0027950.1">
    <property type="protein sequence ID" value="cds.TraesKARUn01G0027950.1"/>
    <property type="gene ID" value="TraesKARUn01G0027950"/>
</dbReference>
<dbReference type="Gramene" id="TraesKARUn01G0028280.1">
    <property type="protein sequence ID" value="cds.TraesKARUn01G0028280.1"/>
    <property type="gene ID" value="TraesKARUn01G0028280"/>
</dbReference>
<dbReference type="Gramene" id="TraesKARUn01G0028560.1">
    <property type="protein sequence ID" value="cds.TraesKARUn01G0028560.1"/>
    <property type="gene ID" value="TraesKARUn01G0028560"/>
</dbReference>
<dbReference type="Gramene" id="TraesKARUn01G0028660.1">
    <property type="protein sequence ID" value="cds.TraesKARUn01G0028660.1"/>
    <property type="gene ID" value="TraesKARUn01G0028660"/>
</dbReference>
<dbReference type="Gramene" id="TraesKARUn01G0029160.1">
    <property type="protein sequence ID" value="cds.TraesKARUn01G0029160.1"/>
    <property type="gene ID" value="TraesKARUn01G0029160"/>
</dbReference>
<dbReference type="Gramene" id="TraesKARUn01G0029390.1">
    <property type="protein sequence ID" value="cds.TraesKARUn01G0029390.1"/>
    <property type="gene ID" value="TraesKARUn01G0029390"/>
</dbReference>
<dbReference type="Gramene" id="TraesKARUn01G0029420.1">
    <property type="protein sequence ID" value="cds.TraesKARUn01G0029420.1"/>
    <property type="gene ID" value="TraesKARUn01G0029420"/>
</dbReference>
<dbReference type="Gramene" id="TraesKARUn01G0030070.1">
    <property type="protein sequence ID" value="cds.TraesKARUn01G0030070.1"/>
    <property type="gene ID" value="TraesKARUn01G0030070"/>
</dbReference>
<dbReference type="Gramene" id="TraesKARUn01G0030280.1">
    <property type="protein sequence ID" value="cds.TraesKARUn01G0030280.1"/>
    <property type="gene ID" value="TraesKARUn01G0030280"/>
</dbReference>
<dbReference type="Gramene" id="TraesKARUn01G0030580.1">
    <property type="protein sequence ID" value="cds.TraesKARUn01G0030580.1"/>
    <property type="gene ID" value="TraesKARUn01G0030580"/>
</dbReference>
<dbReference type="Gramene" id="TraesKARUn01G0030700.1">
    <property type="protein sequence ID" value="cds.TraesKARUn01G0030700.1"/>
    <property type="gene ID" value="TraesKARUn01G0030700"/>
</dbReference>
<dbReference type="Gramene" id="TraesKARUn01G0031000.1">
    <property type="protein sequence ID" value="cds.TraesKARUn01G0031000.1"/>
    <property type="gene ID" value="TraesKARUn01G0031000"/>
</dbReference>
<dbReference type="Gramene" id="TraesKARUn01G0031140.1">
    <property type="protein sequence ID" value="cds.TraesKARUn01G0031140.1"/>
    <property type="gene ID" value="TraesKARUn01G0031140"/>
</dbReference>
<dbReference type="Gramene" id="TraesKARUn01G0031940.1">
    <property type="protein sequence ID" value="cds.TraesKARUn01G0031940.1"/>
    <property type="gene ID" value="TraesKARUn01G0031940"/>
</dbReference>
<dbReference type="Gramene" id="TraesKARUn01G0032130.1">
    <property type="protein sequence ID" value="cds.TraesKARUn01G0032130.1"/>
    <property type="gene ID" value="TraesKARUn01G0032130"/>
</dbReference>
<dbReference type="Gramene" id="TraesKARUn01G0032170.1">
    <property type="protein sequence ID" value="cds.TraesKARUn01G0032170.1"/>
    <property type="gene ID" value="TraesKARUn01G0032170"/>
</dbReference>
<dbReference type="Gramene" id="TraesKARUn01G0032860.1">
    <property type="protein sequence ID" value="cds.TraesKARUn01G0032860.1"/>
    <property type="gene ID" value="TraesKARUn01G0032860"/>
</dbReference>
<dbReference type="Gramene" id="TraesKARUn01G0033060.1">
    <property type="protein sequence ID" value="cds.TraesKARUn01G0033060.1"/>
    <property type="gene ID" value="TraesKARUn01G0033060"/>
</dbReference>
<dbReference type="Gramene" id="TraesKARUn01G0033200.1">
    <property type="protein sequence ID" value="cds.TraesKARUn01G0033200.1"/>
    <property type="gene ID" value="TraesKARUn01G0033200"/>
</dbReference>
<dbReference type="Gramene" id="TraesKARUn01G0033240.1">
    <property type="protein sequence ID" value="cds.TraesKARUn01G0033240.1"/>
    <property type="gene ID" value="TraesKARUn01G0033240"/>
</dbReference>
<dbReference type="Gramene" id="TraesKARUn01G0033390.1">
    <property type="protein sequence ID" value="cds.TraesKARUn01G0033390.1"/>
    <property type="gene ID" value="TraesKARUn01G0033390"/>
</dbReference>
<dbReference type="Gramene" id="TraesKARUn01G0033920.1">
    <property type="protein sequence ID" value="cds.TraesKARUn01G0033920.1"/>
    <property type="gene ID" value="TraesKARUn01G0033920"/>
</dbReference>
<dbReference type="Gramene" id="TraesKARUn01G0034060.1">
    <property type="protein sequence ID" value="cds.TraesKARUn01G0034060.1"/>
    <property type="gene ID" value="TraesKARUn01G0034060"/>
</dbReference>
<dbReference type="Gramene" id="TraesKARUn01G0034280.1">
    <property type="protein sequence ID" value="cds.TraesKARUn01G0034280.1"/>
    <property type="gene ID" value="TraesKARUn01G0034280"/>
</dbReference>
<dbReference type="Gramene" id="TraesKARUn01G0034520.1">
    <property type="protein sequence ID" value="cds.TraesKARUn01G0034520.1"/>
    <property type="gene ID" value="TraesKARUn01G0034520"/>
</dbReference>
<dbReference type="Gramene" id="TraesKARUn01G0034600.1">
    <property type="protein sequence ID" value="cds.TraesKARUn01G0034600.1"/>
    <property type="gene ID" value="TraesKARUn01G0034600"/>
</dbReference>
<dbReference type="Gramene" id="TraesKARUn01G0034800.1">
    <property type="protein sequence ID" value="cds.TraesKARUn01G0034800.1"/>
    <property type="gene ID" value="TraesKARUn01G0034800"/>
</dbReference>
<dbReference type="Gramene" id="TraesKARUn01G0034950.1">
    <property type="protein sequence ID" value="cds.TraesKARUn01G0034950.1"/>
    <property type="gene ID" value="TraesKARUn01G0034950"/>
</dbReference>
<dbReference type="Gramene" id="TraesKARUn01G0035090.1">
    <property type="protein sequence ID" value="cds.TraesKARUn01G0035090.1"/>
    <property type="gene ID" value="TraesKARUn01G0035090"/>
</dbReference>
<dbReference type="Gramene" id="TraesKARUn01G0035260.1">
    <property type="protein sequence ID" value="cds.TraesKARUn01G0035260.1"/>
    <property type="gene ID" value="TraesKARUn01G0035260"/>
</dbReference>
<dbReference type="Gramene" id="TraesKARUn01G0035450.1">
    <property type="protein sequence ID" value="cds.TraesKARUn01G0035450.1"/>
    <property type="gene ID" value="TraesKARUn01G0035450"/>
</dbReference>
<dbReference type="Gramene" id="TraesKARUn01G0035640.1">
    <property type="protein sequence ID" value="cds.TraesKARUn01G0035640.1"/>
    <property type="gene ID" value="TraesKARUn01G0035640"/>
</dbReference>
<dbReference type="Gramene" id="TraesKARUn01G0035740.1">
    <property type="protein sequence ID" value="cds.TraesKARUn01G0035740.1"/>
    <property type="gene ID" value="TraesKARUn01G0035740"/>
</dbReference>
<dbReference type="Gramene" id="TraesKARUn01G0035940.1">
    <property type="protein sequence ID" value="cds.TraesKARUn01G0035940.1"/>
    <property type="gene ID" value="TraesKARUn01G0035940"/>
</dbReference>
<dbReference type="Gramene" id="TraesKARUn01G0036050.1">
    <property type="protein sequence ID" value="cds.TraesKARUn01G0036050.1"/>
    <property type="gene ID" value="TraesKARUn01G0036050"/>
</dbReference>
<dbReference type="Gramene" id="TraesKARUn01G0036180.1">
    <property type="protein sequence ID" value="cds.TraesKARUn01G0036180.1"/>
    <property type="gene ID" value="TraesKARUn01G0036180"/>
</dbReference>
<dbReference type="Gramene" id="TraesKARUn01G0036470.1">
    <property type="protein sequence ID" value="cds.TraesKARUn01G0036470.1"/>
    <property type="gene ID" value="TraesKARUn01G0036470"/>
</dbReference>
<dbReference type="Gramene" id="TraesKARUn01G0036540.1">
    <property type="protein sequence ID" value="cds.TraesKARUn01G0036540.1"/>
    <property type="gene ID" value="TraesKARUn01G0036540"/>
</dbReference>
<dbReference type="Gramene" id="TraesKARUn01G0036810.1">
    <property type="protein sequence ID" value="cds.TraesKARUn01G0036810.1"/>
    <property type="gene ID" value="TraesKARUn01G0036810"/>
</dbReference>
<dbReference type="Gramene" id="TraesKARUn01G0036930.1">
    <property type="protein sequence ID" value="cds.TraesKARUn01G0036930.1"/>
    <property type="gene ID" value="TraesKARUn01G0036930"/>
</dbReference>
<dbReference type="Gramene" id="TraesKARUn01G0037260.1">
    <property type="protein sequence ID" value="cds.TraesKARUn01G0037260.1"/>
    <property type="gene ID" value="TraesKARUn01G0037260"/>
</dbReference>
<dbReference type="Gramene" id="TraesKARUn01G0048000.1">
    <property type="protein sequence ID" value="cds.TraesKARUn01G0048000.1"/>
    <property type="gene ID" value="TraesKARUn01G0048000"/>
</dbReference>
<dbReference type="Gramene" id="TraesKARUn01G0057930.1">
    <property type="protein sequence ID" value="cds.TraesKARUn01G0057930.1"/>
    <property type="gene ID" value="TraesKARUn01G0057930"/>
</dbReference>
<dbReference type="Gramene" id="TraesKARUn01G0060510.1">
    <property type="protein sequence ID" value="cds.TraesKARUn01G0060510.1"/>
    <property type="gene ID" value="TraesKARUn01G0060510"/>
</dbReference>
<dbReference type="Gramene" id="TraesKARUn01G0061670.1">
    <property type="protein sequence ID" value="cds.TraesKARUn01G0061670.1"/>
    <property type="gene ID" value="TraesKARUn01G0061670"/>
</dbReference>
<dbReference type="Gramene" id="TraesKARUn01G0061690.1">
    <property type="protein sequence ID" value="cds.TraesKARUn01G0061690.1"/>
    <property type="gene ID" value="TraesKARUn01G0061690"/>
</dbReference>
<dbReference type="Gramene" id="TraesKARUn01G0061980.1">
    <property type="protein sequence ID" value="cds.TraesKARUn01G0061980.1"/>
    <property type="gene ID" value="TraesKARUn01G0061980"/>
</dbReference>
<dbReference type="Gramene" id="TraesKARUn01G0062080.1">
    <property type="protein sequence ID" value="cds.TraesKARUn01G0062080.1"/>
    <property type="gene ID" value="TraesKARUn01G0062080"/>
</dbReference>
<dbReference type="Gramene" id="TraesKARUn01G0062220.1">
    <property type="protein sequence ID" value="cds.TraesKARUn01G0062220.1"/>
    <property type="gene ID" value="TraesKARUn01G0062220"/>
</dbReference>
<dbReference type="Gramene" id="TraesKARUn01G0062440.1">
    <property type="protein sequence ID" value="cds.TraesKARUn01G0062440.1"/>
    <property type="gene ID" value="TraesKARUn01G0062440"/>
</dbReference>
<dbReference type="Gramene" id="TraesKARUn01G0062580.1">
    <property type="protein sequence ID" value="cds.TraesKARUn01G0062580.1"/>
    <property type="gene ID" value="TraesKARUn01G0062580"/>
</dbReference>
<dbReference type="Gramene" id="TraesKARUn01G0064220.1">
    <property type="protein sequence ID" value="cds.TraesKARUn01G0064220.1"/>
    <property type="gene ID" value="TraesKARUn01G0064220"/>
</dbReference>
<dbReference type="Gramene" id="TraesKARUn01G0064320.1">
    <property type="protein sequence ID" value="cds.TraesKARUn01G0064320.1"/>
    <property type="gene ID" value="TraesKARUn01G0064320"/>
</dbReference>
<dbReference type="Gramene" id="TraesKARUn01G0064530.1">
    <property type="protein sequence ID" value="cds.TraesKARUn01G0064530.1"/>
    <property type="gene ID" value="TraesKARUn01G0064530"/>
</dbReference>
<dbReference type="Gramene" id="TraesKARUn01G0064680.1">
    <property type="protein sequence ID" value="cds.TraesKARUn01G0064680.1"/>
    <property type="gene ID" value="TraesKARUn01G0064680"/>
</dbReference>
<dbReference type="Gramene" id="TraesKARUn01G0065270.1">
    <property type="protein sequence ID" value="cds.TraesKARUn01G0065270.1"/>
    <property type="gene ID" value="TraesKARUn01G0065270"/>
</dbReference>
<dbReference type="Gramene" id="TraesKARUn01G0065350.1">
    <property type="protein sequence ID" value="cds.TraesKARUn01G0065350.1"/>
    <property type="gene ID" value="TraesKARUn01G0065350"/>
</dbReference>
<dbReference type="Gramene" id="TraesKARUn01G0065450.1">
    <property type="protein sequence ID" value="cds.TraesKARUn01G0065450.1"/>
    <property type="gene ID" value="TraesKARUn01G0065450"/>
</dbReference>
<dbReference type="Gramene" id="TraesKARUn01G0066150.1">
    <property type="protein sequence ID" value="cds.TraesKARUn01G0066150.1"/>
    <property type="gene ID" value="TraesKARUn01G0066150"/>
</dbReference>
<dbReference type="Gramene" id="TraesKARUn01G0066450.1">
    <property type="protein sequence ID" value="cds.TraesKARUn01G0066450.1"/>
    <property type="gene ID" value="TraesKARUn01G0066450"/>
</dbReference>
<dbReference type="Gramene" id="TraesKARUn01G0067050.1">
    <property type="protein sequence ID" value="cds.TraesKARUn01G0067050.1"/>
    <property type="gene ID" value="TraesKARUn01G0067050"/>
</dbReference>
<dbReference type="Gramene" id="TraesKARUn01G0067370.1">
    <property type="protein sequence ID" value="cds.TraesKARUn01G0067370.1"/>
    <property type="gene ID" value="TraesKARUn01G0067370"/>
</dbReference>
<dbReference type="Gramene" id="TraesKARUn01G0067420.1">
    <property type="protein sequence ID" value="cds.TraesKARUn01G0067420.1"/>
    <property type="gene ID" value="TraesKARUn01G0067420"/>
</dbReference>
<dbReference type="Gramene" id="TraesKARUn01G0067510.1">
    <property type="protein sequence ID" value="cds.TraesKARUn01G0067510.1"/>
    <property type="gene ID" value="TraesKARUn01G0067510"/>
</dbReference>
<dbReference type="Gramene" id="TraesKARUn01G0067530.1">
    <property type="protein sequence ID" value="cds.TraesKARUn01G0067530.1"/>
    <property type="gene ID" value="TraesKARUn01G0067530"/>
</dbReference>
<dbReference type="Gramene" id="TraesKARUn01G0067760.1">
    <property type="protein sequence ID" value="cds.TraesKARUn01G0067760.1"/>
    <property type="gene ID" value="TraesKARUn01G0067760"/>
</dbReference>
<dbReference type="Gramene" id="TraesKARUn01G0067970.1">
    <property type="protein sequence ID" value="cds.TraesKARUn01G0067970.1"/>
    <property type="gene ID" value="TraesKARUn01G0067970"/>
</dbReference>
<dbReference type="Gramene" id="TraesKARUn01G0068460.1">
    <property type="protein sequence ID" value="cds.TraesKARUn01G0068460.1"/>
    <property type="gene ID" value="TraesKARUn01G0068460"/>
</dbReference>
<dbReference type="Gramene" id="TraesKARUn01G0068580.1">
    <property type="protein sequence ID" value="cds.TraesKARUn01G0068580.1"/>
    <property type="gene ID" value="TraesKARUn01G0068580"/>
</dbReference>
<dbReference type="Gramene" id="TraesKARUn01G0068910.1">
    <property type="protein sequence ID" value="cds.TraesKARUn01G0068910.1"/>
    <property type="gene ID" value="TraesKARUn01G0068910"/>
</dbReference>
<dbReference type="Gramene" id="TraesKARUn01G0070050.1">
    <property type="protein sequence ID" value="cds.TraesKARUn01G0070050.1"/>
    <property type="gene ID" value="TraesKARUn01G0070050"/>
</dbReference>
<dbReference type="Gramene" id="TraesKARUn01G0070070.1">
    <property type="protein sequence ID" value="cds.TraesKARUn01G0070070.1"/>
    <property type="gene ID" value="TraesKARUn01G0070070"/>
</dbReference>
<dbReference type="Gramene" id="TraesKARUn01G0070270.1">
    <property type="protein sequence ID" value="cds.TraesKARUn01G0070270.1"/>
    <property type="gene ID" value="TraesKARUn01G0070270"/>
</dbReference>
<dbReference type="Gramene" id="TraesKARUn01G0070440.1">
    <property type="protein sequence ID" value="cds.TraesKARUn01G0070440.1"/>
    <property type="gene ID" value="TraesKARUn01G0070440"/>
</dbReference>
<dbReference type="Gramene" id="TraesKARUn01G0070790.1">
    <property type="protein sequence ID" value="cds.TraesKARUn01G0070790.1"/>
    <property type="gene ID" value="TraesKARUn01G0070790"/>
</dbReference>
<dbReference type="Gramene" id="TraesKARUn01G0071220.1">
    <property type="protein sequence ID" value="cds.TraesKARUn01G0071220.1"/>
    <property type="gene ID" value="TraesKARUn01G0071220"/>
</dbReference>
<dbReference type="Gramene" id="TraesKARUn01G0071910.1">
    <property type="protein sequence ID" value="cds.TraesKARUn01G0071910.1"/>
    <property type="gene ID" value="TraesKARUn01G0071910"/>
</dbReference>
<dbReference type="Gramene" id="TraesKARUn01G0072180.1">
    <property type="protein sequence ID" value="cds.TraesKARUn01G0072180.1"/>
    <property type="gene ID" value="TraesKARUn01G0072180"/>
</dbReference>
<dbReference type="Gramene" id="TraesKARUn01G0072410.1">
    <property type="protein sequence ID" value="cds.TraesKARUn01G0072410.1"/>
    <property type="gene ID" value="TraesKARUn01G0072410"/>
</dbReference>
<dbReference type="Gramene" id="TraesKARUn01G0072820.1">
    <property type="protein sequence ID" value="cds.TraesKARUn01G0072820.1"/>
    <property type="gene ID" value="TraesKARUn01G0072820"/>
</dbReference>
<dbReference type="Gramene" id="TraesKARUn01G0072950.1">
    <property type="protein sequence ID" value="cds.TraesKARUn01G0072950.1"/>
    <property type="gene ID" value="TraesKARUn01G0072950"/>
</dbReference>
<dbReference type="Gramene" id="TraesKARUn01G0073120.1">
    <property type="protein sequence ID" value="cds.TraesKARUn01G0073120.1"/>
    <property type="gene ID" value="TraesKARUn01G0073120"/>
</dbReference>
<dbReference type="Gramene" id="TraesKARUn01G0073350.1">
    <property type="protein sequence ID" value="cds.TraesKARUn01G0073350.1"/>
    <property type="gene ID" value="TraesKARUn01G0073350"/>
</dbReference>
<dbReference type="Gramene" id="TraesKARUn01G0073760.1">
    <property type="protein sequence ID" value="cds.TraesKARUn01G0073760.1"/>
    <property type="gene ID" value="TraesKARUn01G0073760"/>
</dbReference>
<dbReference type="Gramene" id="TraesKARUn01G0073780.1">
    <property type="protein sequence ID" value="cds.TraesKARUn01G0073780.1"/>
    <property type="gene ID" value="TraesKARUn01G0073780"/>
</dbReference>
<dbReference type="Gramene" id="TraesKARUn01G0073900.1">
    <property type="protein sequence ID" value="cds.TraesKARUn01G0073900.1"/>
    <property type="gene ID" value="TraesKARUn01G0073900"/>
</dbReference>
<dbReference type="Gramene" id="TraesKARUn01G0073980.1">
    <property type="protein sequence ID" value="cds.TraesKARUn01G0073980.1"/>
    <property type="gene ID" value="TraesKARUn01G0073980"/>
</dbReference>
<dbReference type="Gramene" id="TraesKARUn01G0074470.1">
    <property type="protein sequence ID" value="cds.TraesKARUn01G0074470.1"/>
    <property type="gene ID" value="TraesKARUn01G0074470"/>
</dbReference>
<dbReference type="Gramene" id="TraesKARUn01G0074640.1">
    <property type="protein sequence ID" value="cds.TraesKARUn01G0074640.1"/>
    <property type="gene ID" value="TraesKARUn01G0074640"/>
</dbReference>
<dbReference type="Gramene" id="TraesKARUn01G0074760.1">
    <property type="protein sequence ID" value="cds.TraesKARUn01G0074760.1"/>
    <property type="gene ID" value="TraesKARUn01G0074760"/>
</dbReference>
<dbReference type="Gramene" id="TraesKARUn01G0075030.1">
    <property type="protein sequence ID" value="cds.TraesKARUn01G0075030.1"/>
    <property type="gene ID" value="TraesKARUn01G0075030"/>
</dbReference>
<dbReference type="Gramene" id="TraesKARUn01G0075140.1">
    <property type="protein sequence ID" value="cds.TraesKARUn01G0075140.1"/>
    <property type="gene ID" value="TraesKARUn01G0075140"/>
</dbReference>
<dbReference type="Gramene" id="TraesKARUn01G0075360.1">
    <property type="protein sequence ID" value="cds.TraesKARUn01G0075360.1"/>
    <property type="gene ID" value="TraesKARUn01G0075360"/>
</dbReference>
<dbReference type="Gramene" id="TraesKARUn01G0075760.1">
    <property type="protein sequence ID" value="cds.TraesKARUn01G0075760.1"/>
    <property type="gene ID" value="TraesKARUn01G0075760"/>
</dbReference>
<dbReference type="Gramene" id="TraesKARUn01G0075960.1">
    <property type="protein sequence ID" value="cds.TraesKARUn01G0075960.1"/>
    <property type="gene ID" value="TraesKARUn01G0075960"/>
</dbReference>
<dbReference type="Gramene" id="TraesKARUn01G0076200.1">
    <property type="protein sequence ID" value="cds.TraesKARUn01G0076200.1"/>
    <property type="gene ID" value="TraesKARUn01G0076200"/>
</dbReference>
<dbReference type="Gramene" id="TraesKARUn01G0076400.1">
    <property type="protein sequence ID" value="cds.TraesKARUn01G0076400.1"/>
    <property type="gene ID" value="TraesKARUn01G0076400"/>
</dbReference>
<dbReference type="Gramene" id="TraesKARUn01G0076610.1">
    <property type="protein sequence ID" value="cds.TraesKARUn01G0076610.1"/>
    <property type="gene ID" value="TraesKARUn01G0076610"/>
</dbReference>
<dbReference type="Gramene" id="TraesKARUn01G0076760.1">
    <property type="protein sequence ID" value="cds.TraesKARUn01G0076760.1"/>
    <property type="gene ID" value="TraesKARUn01G0076760"/>
</dbReference>
<dbReference type="Gramene" id="TraesKARUn01G0076840.1">
    <property type="protein sequence ID" value="cds.TraesKARUn01G0076840.1"/>
    <property type="gene ID" value="TraesKARUn01G0076840"/>
</dbReference>
<dbReference type="Gramene" id="TraesKARUn01G0077280.1">
    <property type="protein sequence ID" value="cds.TraesKARUn01G0077280.1"/>
    <property type="gene ID" value="TraesKARUn01G0077280"/>
</dbReference>
<dbReference type="Gramene" id="TraesKARUn01G0077460.1">
    <property type="protein sequence ID" value="cds.TraesKARUn01G0077460.1"/>
    <property type="gene ID" value="TraesKARUn01G0077460"/>
</dbReference>
<dbReference type="Gramene" id="TraesKARUn01G0077720.1">
    <property type="protein sequence ID" value="cds.TraesKARUn01G0077720.1"/>
    <property type="gene ID" value="TraesKARUn01G0077720"/>
</dbReference>
<dbReference type="Gramene" id="TraesKARUn01G0077810.1">
    <property type="protein sequence ID" value="cds.TraesKARUn01G0077810.1"/>
    <property type="gene ID" value="TraesKARUn01G0077810"/>
</dbReference>
<dbReference type="Gramene" id="TraesKARUn01G0078600.1">
    <property type="protein sequence ID" value="cds.TraesKARUn01G0078600.1"/>
    <property type="gene ID" value="TraesKARUn01G0078600"/>
</dbReference>
<dbReference type="Gramene" id="TraesKARUn01G0078730.1">
    <property type="protein sequence ID" value="cds.TraesKARUn01G0078730.1"/>
    <property type="gene ID" value="TraesKARUn01G0078730"/>
</dbReference>
<dbReference type="Gramene" id="TraesKARUn01G0078780.1">
    <property type="protein sequence ID" value="cds.TraesKARUn01G0078780.1"/>
    <property type="gene ID" value="TraesKARUn01G0078780"/>
</dbReference>
<dbReference type="Gramene" id="TraesKARUn01G0079050.1">
    <property type="protein sequence ID" value="cds.TraesKARUn01G0079050.1"/>
    <property type="gene ID" value="TraesKARUn01G0079050"/>
</dbReference>
<dbReference type="Gramene" id="TraesKARUn01G0079170.1">
    <property type="protein sequence ID" value="cds.TraesKARUn01G0079170.1"/>
    <property type="gene ID" value="TraesKARUn01G0079170"/>
</dbReference>
<dbReference type="Gramene" id="TraesKARUn01G0079530.1">
    <property type="protein sequence ID" value="cds.TraesKARUn01G0079530.1"/>
    <property type="gene ID" value="TraesKARUn01G0079530"/>
</dbReference>
<dbReference type="Gramene" id="TraesKARUn01G0079780.1">
    <property type="protein sequence ID" value="cds.TraesKARUn01G0079780.1"/>
    <property type="gene ID" value="TraesKARUn01G0079780"/>
</dbReference>
<dbReference type="Gramene" id="TraesKARUn01G0079910.1">
    <property type="protein sequence ID" value="cds.TraesKARUn01G0079910.1"/>
    <property type="gene ID" value="TraesKARUn01G0079910"/>
</dbReference>
<dbReference type="Gramene" id="TraesKARUn01G0080160.1">
    <property type="protein sequence ID" value="cds.TraesKARUn01G0080160.1"/>
    <property type="gene ID" value="TraesKARUn01G0080160"/>
</dbReference>
<dbReference type="Gramene" id="TraesKARUn01G0080290.1">
    <property type="protein sequence ID" value="cds.TraesKARUn01G0080290.1"/>
    <property type="gene ID" value="TraesKARUn01G0080290"/>
</dbReference>
<dbReference type="Gramene" id="TraesKARUn01G0080320.1">
    <property type="protein sequence ID" value="cds.TraesKARUn01G0080320.1"/>
    <property type="gene ID" value="TraesKARUn01G0080320"/>
</dbReference>
<dbReference type="Gramene" id="TraesKARUn01G0080470.1">
    <property type="protein sequence ID" value="cds.TraesKARUn01G0080470.1"/>
    <property type="gene ID" value="TraesKARUn01G0080470"/>
</dbReference>
<dbReference type="Gramene" id="TraesKARUn01G0080600.1">
    <property type="protein sequence ID" value="cds.TraesKARUn01G0080600.1"/>
    <property type="gene ID" value="TraesKARUn01G0080600"/>
</dbReference>
<dbReference type="Gramene" id="TraesKARUn01G0080870.1">
    <property type="protein sequence ID" value="cds.TraesKARUn01G0080870.1"/>
    <property type="gene ID" value="TraesKARUn01G0080870"/>
</dbReference>
<dbReference type="Gramene" id="TraesKARUn01G0081000.1">
    <property type="protein sequence ID" value="cds.TraesKARUn01G0081000.1"/>
    <property type="gene ID" value="TraesKARUn01G0081000"/>
</dbReference>
<dbReference type="Gramene" id="TraesKARUn01G0081290.1">
    <property type="protein sequence ID" value="cds.TraesKARUn01G0081290.1"/>
    <property type="gene ID" value="TraesKARUn01G0081290"/>
</dbReference>
<dbReference type="Gramene" id="TraesKARUn01G0081490.1">
    <property type="protein sequence ID" value="cds.TraesKARUn01G0081490.1"/>
    <property type="gene ID" value="TraesKARUn01G0081490"/>
</dbReference>
<dbReference type="Gramene" id="TraesKARUn01G0081650.1">
    <property type="protein sequence ID" value="cds.TraesKARUn01G0081650.1"/>
    <property type="gene ID" value="TraesKARUn01G0081650"/>
</dbReference>
<dbReference type="Gramene" id="TraesKARUn01G0081850.1">
    <property type="protein sequence ID" value="cds.TraesKARUn01G0081850.1"/>
    <property type="gene ID" value="TraesKARUn01G0081850"/>
</dbReference>
<dbReference type="Gramene" id="TraesKARUn01G0081990.1">
    <property type="protein sequence ID" value="cds.TraesKARUn01G0081990.1"/>
    <property type="gene ID" value="TraesKARUn01G0081990"/>
</dbReference>
<dbReference type="Gramene" id="TraesKARUn01G0082110.1">
    <property type="protein sequence ID" value="cds.TraesKARUn01G0082110.1"/>
    <property type="gene ID" value="TraesKARUn01G0082110"/>
</dbReference>
<dbReference type="Gramene" id="TraesKARUn01G0082320.1">
    <property type="protein sequence ID" value="cds.TraesKARUn01G0082320.1"/>
    <property type="gene ID" value="TraesKARUn01G0082320"/>
</dbReference>
<dbReference type="Gramene" id="TraesKARUn01G0082450.1">
    <property type="protein sequence ID" value="cds.TraesKARUn01G0082450.1"/>
    <property type="gene ID" value="TraesKARUn01G0082450"/>
</dbReference>
<dbReference type="Gramene" id="TraesKARUn01G0082550.1">
    <property type="protein sequence ID" value="cds.TraesKARUn01G0082550.1"/>
    <property type="gene ID" value="TraesKARUn01G0082550"/>
</dbReference>
<dbReference type="Gramene" id="TraesKARUn01G0082720.1">
    <property type="protein sequence ID" value="cds.TraesKARUn01G0082720.1"/>
    <property type="gene ID" value="TraesKARUn01G0082720"/>
</dbReference>
<dbReference type="Gramene" id="TraesKARUn01G0082830.1">
    <property type="protein sequence ID" value="cds.TraesKARUn01G0082830.1"/>
    <property type="gene ID" value="TraesKARUn01G0082830"/>
</dbReference>
<dbReference type="Gramene" id="TraesKARUn01G0082860.1">
    <property type="protein sequence ID" value="cds.TraesKARUn01G0082860.1"/>
    <property type="gene ID" value="TraesKARUn01G0082860"/>
</dbReference>
<dbReference type="Gramene" id="TraesKARUn01G0083310.1">
    <property type="protein sequence ID" value="cds.TraesKARUn01G0083310.1"/>
    <property type="gene ID" value="TraesKARUn01G0083310"/>
</dbReference>
<dbReference type="Gramene" id="TraesKARUn01G0083530.1">
    <property type="protein sequence ID" value="cds.TraesKARUn01G0083530.1"/>
    <property type="gene ID" value="TraesKARUn01G0083530"/>
</dbReference>
<dbReference type="Gramene" id="TraesKARUn01G0083600.1">
    <property type="protein sequence ID" value="cds.TraesKARUn01G0083600.1"/>
    <property type="gene ID" value="TraesKARUn01G0083600"/>
</dbReference>
<dbReference type="Gramene" id="TraesKARUn01G0083690.1">
    <property type="protein sequence ID" value="cds.TraesKARUn01G0083690.1"/>
    <property type="gene ID" value="TraesKARUn01G0083690"/>
</dbReference>
<dbReference type="Gramene" id="TraesKARUn01G0083870.1">
    <property type="protein sequence ID" value="cds.TraesKARUn01G0083870.1"/>
    <property type="gene ID" value="TraesKARUn01G0083870"/>
</dbReference>
<dbReference type="Gramene" id="TraesKARUn01G0084000.1">
    <property type="protein sequence ID" value="cds.TraesKARUn01G0084000.1"/>
    <property type="gene ID" value="TraesKARUn01G0084000"/>
</dbReference>
<dbReference type="Gramene" id="TraesKARUn01G0084100.1">
    <property type="protein sequence ID" value="cds.TraesKARUn01G0084100.1"/>
    <property type="gene ID" value="TraesKARUn01G0084100"/>
</dbReference>
<dbReference type="Gramene" id="TraesKARUn01G0084260.1">
    <property type="protein sequence ID" value="cds.TraesKARUn01G0084260.1"/>
    <property type="gene ID" value="TraesKARUn01G0084260"/>
</dbReference>
<dbReference type="Gramene" id="TraesKARUn01G0084400.1">
    <property type="protein sequence ID" value="cds.TraesKARUn01G0084400.1"/>
    <property type="gene ID" value="TraesKARUn01G0084400"/>
</dbReference>
<dbReference type="Gramene" id="TraesKARUn01G0084610.1">
    <property type="protein sequence ID" value="cds.TraesKARUn01G0084610.1"/>
    <property type="gene ID" value="TraesKARUn01G0084610"/>
</dbReference>
<dbReference type="Gramene" id="TraesKARUn01G0084770.1">
    <property type="protein sequence ID" value="cds.TraesKARUn01G0084770.1"/>
    <property type="gene ID" value="TraesKARUn01G0084770"/>
</dbReference>
<dbReference type="Gramene" id="TraesKARUn01G0084880.1">
    <property type="protein sequence ID" value="cds.TraesKARUn01G0084880.1"/>
    <property type="gene ID" value="TraesKARUn01G0084880"/>
</dbReference>
<dbReference type="Gramene" id="TraesKARUn01G0085050.1">
    <property type="protein sequence ID" value="cds.TraesKARUn01G0085050.1"/>
    <property type="gene ID" value="TraesKARUn01G0085050"/>
</dbReference>
<dbReference type="Gramene" id="TraesKARUn01G0085200.1">
    <property type="protein sequence ID" value="cds.TraesKARUn01G0085200.1"/>
    <property type="gene ID" value="TraesKARUn01G0085200"/>
</dbReference>
<dbReference type="Gramene" id="TraesKARUn01G0085220.1">
    <property type="protein sequence ID" value="cds.TraesKARUn01G0085220.1"/>
    <property type="gene ID" value="TraesKARUn01G0085220"/>
</dbReference>
<dbReference type="Gramene" id="TraesKARUn01G0085380.1">
    <property type="protein sequence ID" value="cds.TraesKARUn01G0085380.1"/>
    <property type="gene ID" value="TraesKARUn01G0085380"/>
</dbReference>
<dbReference type="Gramene" id="TraesKARUn01G0085540.1">
    <property type="protein sequence ID" value="cds.TraesKARUn01G0085540.1"/>
    <property type="gene ID" value="TraesKARUn01G0085540"/>
</dbReference>
<dbReference type="Gramene" id="TraesKARUn01G0085660.1">
    <property type="protein sequence ID" value="cds.TraesKARUn01G0085660.1"/>
    <property type="gene ID" value="TraesKARUn01G0085660"/>
</dbReference>
<dbReference type="Gramene" id="TraesKARUn01G0085780.1">
    <property type="protein sequence ID" value="cds.TraesKARUn01G0085780.1"/>
    <property type="gene ID" value="TraesKARUn01G0085780"/>
</dbReference>
<dbReference type="Gramene" id="TraesKARUn01G0085880.1">
    <property type="protein sequence ID" value="cds.TraesKARUn01G0085880.1"/>
    <property type="gene ID" value="TraesKARUn01G0085880"/>
</dbReference>
<dbReference type="Gramene" id="TraesKARUn01G0085960.1">
    <property type="protein sequence ID" value="cds.TraesKARUn01G0085960.1"/>
    <property type="gene ID" value="TraesKARUn01G0085960"/>
</dbReference>
<dbReference type="Gramene" id="TraesKARUn01G0086160.1">
    <property type="protein sequence ID" value="cds.TraesKARUn01G0086160.1"/>
    <property type="gene ID" value="TraesKARUn01G0086160"/>
</dbReference>
<dbReference type="Gramene" id="TraesKARUn01G0086340.1">
    <property type="protein sequence ID" value="cds.TraesKARUn01G0086340.1"/>
    <property type="gene ID" value="TraesKARUn01G0086340"/>
</dbReference>
<dbReference type="Gramene" id="TraesKARUn01G0086550.1">
    <property type="protein sequence ID" value="cds.TraesKARUn01G0086550.1"/>
    <property type="gene ID" value="TraesKARUn01G0086550"/>
</dbReference>
<dbReference type="Gramene" id="TraesKARUn01G0086630.1">
    <property type="protein sequence ID" value="cds.TraesKARUn01G0086630.1"/>
    <property type="gene ID" value="TraesKARUn01G0086630"/>
</dbReference>
<dbReference type="Gramene" id="TraesKARUn01G0086880.1">
    <property type="protein sequence ID" value="cds.TraesKARUn01G0086880.1"/>
    <property type="gene ID" value="TraesKARUn01G0086880"/>
</dbReference>
<dbReference type="Gramene" id="TraesKARUn01G0087060.1">
    <property type="protein sequence ID" value="cds.TraesKARUn01G0087060.1"/>
    <property type="gene ID" value="TraesKARUn01G0087060"/>
</dbReference>
<dbReference type="Gramene" id="TraesKARUn01G0087750.1">
    <property type="protein sequence ID" value="cds.TraesKARUn01G0087750.1"/>
    <property type="gene ID" value="TraesKARUn01G0087750"/>
</dbReference>
<dbReference type="Gramene" id="TraesKARUn01G0088000.1">
    <property type="protein sequence ID" value="cds.TraesKARUn01G0088000.1"/>
    <property type="gene ID" value="TraesKARUn01G0088000"/>
</dbReference>
<dbReference type="Gramene" id="TraesKARUn01G0088130.1">
    <property type="protein sequence ID" value="cds.TraesKARUn01G0088130.1"/>
    <property type="gene ID" value="TraesKARUn01G0088130"/>
</dbReference>
<dbReference type="Gramene" id="TraesKARUn01G0088300.1">
    <property type="protein sequence ID" value="cds.TraesKARUn01G0088300.1"/>
    <property type="gene ID" value="TraesKARUn01G0088300"/>
</dbReference>
<dbReference type="Gramene" id="TraesKARUn01G0088570.1">
    <property type="protein sequence ID" value="cds.TraesKARUn01G0088570.1"/>
    <property type="gene ID" value="TraesKARUn01G0088570"/>
</dbReference>
<dbReference type="Gramene" id="TraesKARUn01G0088810.1">
    <property type="protein sequence ID" value="cds.TraesKARUn01G0088810.1"/>
    <property type="gene ID" value="TraesKARUn01G0088810"/>
</dbReference>
<dbReference type="Gramene" id="TraesKARUn01G0088980.1">
    <property type="protein sequence ID" value="cds.TraesKARUn01G0088980.1"/>
    <property type="gene ID" value="TraesKARUn01G0088980"/>
</dbReference>
<dbReference type="Gramene" id="TraesKARUn01G0089480.1">
    <property type="protein sequence ID" value="cds.TraesKARUn01G0089480.1"/>
    <property type="gene ID" value="TraesKARUn01G0089480"/>
</dbReference>
<dbReference type="Gramene" id="TraesKARUn01G0089530.1">
    <property type="protein sequence ID" value="cds.TraesKARUn01G0089530.1"/>
    <property type="gene ID" value="TraesKARUn01G0089530"/>
</dbReference>
<dbReference type="Gramene" id="TraesKARUn01G0089700.1">
    <property type="protein sequence ID" value="cds.TraesKARUn01G0089700.1"/>
    <property type="gene ID" value="TraesKARUn01G0089700"/>
</dbReference>
<dbReference type="Gramene" id="TraesKARUn01G0090030.1">
    <property type="protein sequence ID" value="cds.TraesKARUn01G0090030.1"/>
    <property type="gene ID" value="TraesKARUn01G0090030"/>
</dbReference>
<dbReference type="Gramene" id="TraesKARUn01G0090220.1">
    <property type="protein sequence ID" value="cds.TraesKARUn01G0090220.1"/>
    <property type="gene ID" value="TraesKARUn01G0090220"/>
</dbReference>
<dbReference type="Gramene" id="TraesKARUn01G0090410.1">
    <property type="protein sequence ID" value="cds.TraesKARUn01G0090410.1"/>
    <property type="gene ID" value="TraesKARUn01G0090410"/>
</dbReference>
<dbReference type="Gramene" id="TraesKARUn01G0090510.1">
    <property type="protein sequence ID" value="cds.TraesKARUn01G0090510.1"/>
    <property type="gene ID" value="TraesKARUn01G0090510"/>
</dbReference>
<dbReference type="Gramene" id="TraesKARUn01G0090700.1">
    <property type="protein sequence ID" value="cds.TraesKARUn01G0090700.1"/>
    <property type="gene ID" value="TraesKARUn01G0090700"/>
</dbReference>
<dbReference type="Gramene" id="TraesKARUn01G0090950.1">
    <property type="protein sequence ID" value="cds.TraesKARUn01G0090950.1"/>
    <property type="gene ID" value="TraesKARUn01G0090950"/>
</dbReference>
<dbReference type="Gramene" id="TraesKARUn01G0091290.1">
    <property type="protein sequence ID" value="cds.TraesKARUn01G0091290.1"/>
    <property type="gene ID" value="TraesKARUn01G0091290"/>
</dbReference>
<dbReference type="Gramene" id="TraesKARUn01G0091380.1">
    <property type="protein sequence ID" value="cds.TraesKARUn01G0091380.1"/>
    <property type="gene ID" value="TraesKARUn01G0091380"/>
</dbReference>
<dbReference type="Gramene" id="TraesKARUn01G0091530.1">
    <property type="protein sequence ID" value="cds.TraesKARUn01G0091530.1"/>
    <property type="gene ID" value="TraesKARUn01G0091530"/>
</dbReference>
<dbReference type="Gramene" id="TraesKARUn01G0091760.1">
    <property type="protein sequence ID" value="cds.TraesKARUn01G0091760.1"/>
    <property type="gene ID" value="TraesKARUn01G0091760"/>
</dbReference>
<dbReference type="Gramene" id="TraesKARUn01G0091910.1">
    <property type="protein sequence ID" value="cds.TraesKARUn01G0091910.1"/>
    <property type="gene ID" value="TraesKARUn01G0091910"/>
</dbReference>
<dbReference type="Gramene" id="TraesKARUn01G0091950.1">
    <property type="protein sequence ID" value="cds.TraesKARUn01G0091950.1"/>
    <property type="gene ID" value="TraesKARUn01G0091950"/>
</dbReference>
<dbReference type="Gramene" id="TraesKARUn01G0092260.1">
    <property type="protein sequence ID" value="cds.TraesKARUn01G0092260.1"/>
    <property type="gene ID" value="TraesKARUn01G0092260"/>
</dbReference>
<dbReference type="Gramene" id="TraesKARUn01G0092320.1">
    <property type="protein sequence ID" value="cds.TraesKARUn01G0092320.1"/>
    <property type="gene ID" value="TraesKARUn01G0092320"/>
</dbReference>
<dbReference type="Gramene" id="TraesKARUn01G0092470.1">
    <property type="protein sequence ID" value="cds.TraesKARUn01G0092470.1"/>
    <property type="gene ID" value="TraesKARUn01G0092470"/>
</dbReference>
<dbReference type="Gramene" id="TraesKARUn01G0092550.1">
    <property type="protein sequence ID" value="cds.TraesKARUn01G0092550.1"/>
    <property type="gene ID" value="TraesKARUn01G0092550"/>
</dbReference>
<dbReference type="Gramene" id="TraesKARUn01G0092610.1">
    <property type="protein sequence ID" value="cds.TraesKARUn01G0092610.1"/>
    <property type="gene ID" value="TraesKARUn01G0092610"/>
</dbReference>
<dbReference type="Gramene" id="TraesKARUn01G0092800.1">
    <property type="protein sequence ID" value="cds.TraesKARUn01G0092800.1"/>
    <property type="gene ID" value="TraesKARUn01G0092800"/>
</dbReference>
<dbReference type="Gramene" id="TraesKARUn01G0092810.1">
    <property type="protein sequence ID" value="cds.TraesKARUn01G0092810.1"/>
    <property type="gene ID" value="TraesKARUn01G0092810"/>
</dbReference>
<dbReference type="Gramene" id="TraesKARUn01G0092870.1">
    <property type="protein sequence ID" value="cds.TraesKARUn01G0092870.1"/>
    <property type="gene ID" value="TraesKARUn01G0092870"/>
</dbReference>
<dbReference type="Gramene" id="TraesKARUn01G0093020.1">
    <property type="protein sequence ID" value="cds.TraesKARUn01G0093020.1"/>
    <property type="gene ID" value="TraesKARUn01G0093020"/>
</dbReference>
<dbReference type="Gramene" id="TraesKARUn01G0093150.1">
    <property type="protein sequence ID" value="cds.TraesKARUn01G0093150.1"/>
    <property type="gene ID" value="TraesKARUn01G0093150"/>
</dbReference>
<dbReference type="Gramene" id="TraesKARUn01G0093180.1">
    <property type="protein sequence ID" value="cds.TraesKARUn01G0093180.1"/>
    <property type="gene ID" value="TraesKARUn01G0093180"/>
</dbReference>
<dbReference type="Gramene" id="TraesKARUn01G0093300.1">
    <property type="protein sequence ID" value="cds.TraesKARUn01G0093300.1"/>
    <property type="gene ID" value="TraesKARUn01G0093300"/>
</dbReference>
<dbReference type="Gramene" id="TraesKARUn01G0093330.1">
    <property type="protein sequence ID" value="cds.TraesKARUn01G0093330.1"/>
    <property type="gene ID" value="TraesKARUn01G0093330"/>
</dbReference>
<dbReference type="Gramene" id="TraesKARUn01G0093560.1">
    <property type="protein sequence ID" value="cds.TraesKARUn01G0093560.1"/>
    <property type="gene ID" value="TraesKARUn01G0093560"/>
</dbReference>
<dbReference type="Gramene" id="TraesKARUn01G0093670.1">
    <property type="protein sequence ID" value="cds.TraesKARUn01G0093670.1"/>
    <property type="gene ID" value="TraesKARUn01G0093670"/>
</dbReference>
<dbReference type="Gramene" id="TraesKARUn01G0093680.1">
    <property type="protein sequence ID" value="cds.TraesKARUn01G0093680.1"/>
    <property type="gene ID" value="TraesKARUn01G0093680"/>
</dbReference>
<dbReference type="Gramene" id="TraesKARUn01G0093840.1">
    <property type="protein sequence ID" value="cds.TraesKARUn01G0093840.1"/>
    <property type="gene ID" value="TraesKARUn01G0093840"/>
</dbReference>
<dbReference type="Gramene" id="TraesKARUn01G0094200.1">
    <property type="protein sequence ID" value="cds.TraesKARUn01G0094200.1"/>
    <property type="gene ID" value="TraesKARUn01G0094200"/>
</dbReference>
<dbReference type="Gramene" id="TraesKARUn01G0094540.1">
    <property type="protein sequence ID" value="cds.TraesKARUn01G0094540.1"/>
    <property type="gene ID" value="TraesKARUn01G0094540"/>
</dbReference>
<dbReference type="Gramene" id="TraesKARUn01G0094610.1">
    <property type="protein sequence ID" value="cds.TraesKARUn01G0094610.1"/>
    <property type="gene ID" value="TraesKARUn01G0094610"/>
</dbReference>
<dbReference type="Gramene" id="TraesKARUn01G0094690.1">
    <property type="protein sequence ID" value="cds.TraesKARUn01G0094690.1"/>
    <property type="gene ID" value="TraesKARUn01G0094690"/>
</dbReference>
<dbReference type="Gramene" id="TraesKARUn01G0094800.1">
    <property type="protein sequence ID" value="cds.TraesKARUn01G0094800.1"/>
    <property type="gene ID" value="TraesKARUn01G0094800"/>
</dbReference>
<dbReference type="Gramene" id="TraesKARUn01G0094920.1">
    <property type="protein sequence ID" value="cds.TraesKARUn01G0094920.1"/>
    <property type="gene ID" value="TraesKARUn01G0094920"/>
</dbReference>
<dbReference type="Gramene" id="TraesKARUn01G0095140.1">
    <property type="protein sequence ID" value="cds.TraesKARUn01G0095140.1"/>
    <property type="gene ID" value="TraesKARUn01G0095140"/>
</dbReference>
<dbReference type="Gramene" id="TraesKARUn01G0095200.1">
    <property type="protein sequence ID" value="cds.TraesKARUn01G0095200.1"/>
    <property type="gene ID" value="TraesKARUn01G0095200"/>
</dbReference>
<dbReference type="Gramene" id="TraesKARUn01G0095420.1">
    <property type="protein sequence ID" value="cds.TraesKARUn01G0095420.1"/>
    <property type="gene ID" value="TraesKARUn01G0095420"/>
</dbReference>
<dbReference type="Gramene" id="TraesKARUn01G0096840.1">
    <property type="protein sequence ID" value="cds.TraesKARUn01G0096840.1"/>
    <property type="gene ID" value="TraesKARUn01G0096840"/>
</dbReference>
<dbReference type="Gramene" id="TraesKARUn01G0097280.1">
    <property type="protein sequence ID" value="cds.TraesKARUn01G0097280.1"/>
    <property type="gene ID" value="TraesKARUn01G0097280"/>
</dbReference>
<dbReference type="Gramene" id="TraesKARUn01G0097340.1">
    <property type="protein sequence ID" value="cds.TraesKARUn01G0097340.1"/>
    <property type="gene ID" value="TraesKARUn01G0097340"/>
</dbReference>
<dbReference type="Gramene" id="TraesKARUn01G0097610.1">
    <property type="protein sequence ID" value="cds.TraesKARUn01G0097610.1"/>
    <property type="gene ID" value="TraesKARUn01G0097610"/>
</dbReference>
<dbReference type="Gramene" id="TraesKARUn01G0097940.1">
    <property type="protein sequence ID" value="cds.TraesKARUn01G0097940.1"/>
    <property type="gene ID" value="TraesKARUn01G0097940"/>
</dbReference>
<dbReference type="Gramene" id="TraesKARUn01G0098370.1">
    <property type="protein sequence ID" value="cds.TraesKARUn01G0098370.1"/>
    <property type="gene ID" value="TraesKARUn01G0098370"/>
</dbReference>
<dbReference type="Gramene" id="TraesKARUn01G0098940.1">
    <property type="protein sequence ID" value="cds.TraesKARUn01G0098940.1"/>
    <property type="gene ID" value="TraesKARUn01G0098940"/>
</dbReference>
<dbReference type="Gramene" id="TraesKARUn01G0099100.1">
    <property type="protein sequence ID" value="cds.TraesKARUn01G0099100.1"/>
    <property type="gene ID" value="TraesKARUn01G0099100"/>
</dbReference>
<dbReference type="Gramene" id="TraesKARUn01G0099580.1">
    <property type="protein sequence ID" value="cds.TraesKARUn01G0099580.1"/>
    <property type="gene ID" value="TraesKARUn01G0099580"/>
</dbReference>
<dbReference type="Gramene" id="TraesKARUn01G0100810.1">
    <property type="protein sequence ID" value="cds.TraesKARUn01G0100810.1"/>
    <property type="gene ID" value="TraesKARUn01G0100810"/>
</dbReference>
<dbReference type="Gramene" id="TraesKARUn01G0101240.1">
    <property type="protein sequence ID" value="cds.TraesKARUn01G0101240.1"/>
    <property type="gene ID" value="TraesKARUn01G0101240"/>
</dbReference>
<dbReference type="Gramene" id="TraesKARUn01G0101370.1">
    <property type="protein sequence ID" value="cds.TraesKARUn01G0101370.1"/>
    <property type="gene ID" value="TraesKARUn01G0101370"/>
</dbReference>
<dbReference type="Gramene" id="TraesKARUn01G0101450.1">
    <property type="protein sequence ID" value="cds.TraesKARUn01G0101450.1"/>
    <property type="gene ID" value="TraesKARUn01G0101450"/>
</dbReference>
<dbReference type="Gramene" id="TraesKARUn01G0101540.1">
    <property type="protein sequence ID" value="cds.TraesKARUn01G0101540.1"/>
    <property type="gene ID" value="TraesKARUn01G0101540"/>
</dbReference>
<dbReference type="Gramene" id="TraesKARUn01G0101580.1">
    <property type="protein sequence ID" value="cds.TraesKARUn01G0101580.1"/>
    <property type="gene ID" value="TraesKARUn01G0101580"/>
</dbReference>
<dbReference type="Gramene" id="TraesKARUn01G0101690.1">
    <property type="protein sequence ID" value="cds.TraesKARUn01G0101690.1"/>
    <property type="gene ID" value="TraesKARUn01G0101690"/>
</dbReference>
<dbReference type="Gramene" id="TraesKARUn01G0101900.1">
    <property type="protein sequence ID" value="cds.TraesKARUn01G0101900.1"/>
    <property type="gene ID" value="TraesKARUn01G0101900"/>
</dbReference>
<dbReference type="Gramene" id="TraesKARUn01G0101970.1">
    <property type="protein sequence ID" value="cds.TraesKARUn01G0101970.1"/>
    <property type="gene ID" value="TraesKARUn01G0101970"/>
</dbReference>
<dbReference type="Gramene" id="TraesKARUn01G0102270.1">
    <property type="protein sequence ID" value="cds.TraesKARUn01G0102270.1"/>
    <property type="gene ID" value="TraesKARUn01G0102270"/>
</dbReference>
<dbReference type="Gramene" id="TraesKARUn01G0102280.1">
    <property type="protein sequence ID" value="cds.TraesKARUn01G0102280.1"/>
    <property type="gene ID" value="TraesKARUn01G0102280"/>
</dbReference>
<dbReference type="Gramene" id="TraesKARUn01G0102620.1">
    <property type="protein sequence ID" value="cds.TraesKARUn01G0102620.1"/>
    <property type="gene ID" value="TraesKARUn01G0102620"/>
</dbReference>
<dbReference type="Gramene" id="TraesKARUn01G0102670.1">
    <property type="protein sequence ID" value="cds.TraesKARUn01G0102670.1"/>
    <property type="gene ID" value="TraesKARUn01G0102670"/>
</dbReference>
<dbReference type="Gramene" id="TraesKARUn01G0102920.1">
    <property type="protein sequence ID" value="cds.TraesKARUn01G0102920.1"/>
    <property type="gene ID" value="TraesKARUn01G0102920"/>
</dbReference>
<dbReference type="Gramene" id="TraesKARUn01G0103080.1">
    <property type="protein sequence ID" value="cds.TraesKARUn01G0103080.1"/>
    <property type="gene ID" value="TraesKARUn01G0103080"/>
</dbReference>
<dbReference type="Gramene" id="TraesKARUn01G0103130.1">
    <property type="protein sequence ID" value="cds.TraesKARUn01G0103130.1"/>
    <property type="gene ID" value="TraesKARUn01G0103130"/>
</dbReference>
<dbReference type="Gramene" id="TraesKARUn01G0103220.1">
    <property type="protein sequence ID" value="cds.TraesKARUn01G0103220.1"/>
    <property type="gene ID" value="TraesKARUn01G0103220"/>
</dbReference>
<dbReference type="Gramene" id="TraesKARUn01G0103290.1">
    <property type="protein sequence ID" value="cds.TraesKARUn01G0103290.1"/>
    <property type="gene ID" value="TraesKARUn01G0103290"/>
</dbReference>
<dbReference type="Gramene" id="TraesKARUn01G0103640.1">
    <property type="protein sequence ID" value="cds.TraesKARUn01G0103640.1"/>
    <property type="gene ID" value="TraesKARUn01G0103640"/>
</dbReference>
<dbReference type="Gramene" id="TraesKARUn01G0103960.1">
    <property type="protein sequence ID" value="cds.TraesKARUn01G0103960.1"/>
    <property type="gene ID" value="TraesKARUn01G0103960"/>
</dbReference>
<dbReference type="Gramene" id="TraesKARUn01G0104100.1">
    <property type="protein sequence ID" value="cds.TraesKARUn01G0104100.1"/>
    <property type="gene ID" value="TraesKARUn01G0104100"/>
</dbReference>
<dbReference type="Gramene" id="TraesKARUn01G0104510.1">
    <property type="protein sequence ID" value="cds.TraesKARUn01G0104510.1"/>
    <property type="gene ID" value="TraesKARUn01G0104510"/>
</dbReference>
<dbReference type="Gramene" id="TraesKARUn01G0104570.1">
    <property type="protein sequence ID" value="cds.TraesKARUn01G0104570.1"/>
    <property type="gene ID" value="TraesKARUn01G0104570"/>
</dbReference>
<dbReference type="Gramene" id="TraesKARUn01G0104770.1">
    <property type="protein sequence ID" value="cds.TraesKARUn01G0104770.1"/>
    <property type="gene ID" value="TraesKARUn01G0104770"/>
</dbReference>
<dbReference type="Gramene" id="TraesKARUn01G0104950.1">
    <property type="protein sequence ID" value="cds.TraesKARUn01G0104950.1"/>
    <property type="gene ID" value="TraesKARUn01G0104950"/>
</dbReference>
<dbReference type="Gramene" id="TraesKARUn01G0105080.1">
    <property type="protein sequence ID" value="cds.TraesKARUn01G0105080.1"/>
    <property type="gene ID" value="TraesKARUn01G0105080"/>
</dbReference>
<dbReference type="Gramene" id="TraesKARUn01G0105260.1">
    <property type="protein sequence ID" value="cds.TraesKARUn01G0105260.1"/>
    <property type="gene ID" value="TraesKARUn01G0105260"/>
</dbReference>
<dbReference type="Gramene" id="TraesKARUn01G0105340.1">
    <property type="protein sequence ID" value="cds.TraesKARUn01G0105340.1"/>
    <property type="gene ID" value="TraesKARUn01G0105340"/>
</dbReference>
<dbReference type="Gramene" id="TraesKARUn01G0105430.1">
    <property type="protein sequence ID" value="cds.TraesKARUn01G0105430.1"/>
    <property type="gene ID" value="TraesKARUn01G0105430"/>
</dbReference>
<dbReference type="Gramene" id="TraesKARUn01G0105500.1">
    <property type="protein sequence ID" value="cds.TraesKARUn01G0105500.1"/>
    <property type="gene ID" value="TraesKARUn01G0105500"/>
</dbReference>
<dbReference type="Gramene" id="TraesKARUn01G0105780.1">
    <property type="protein sequence ID" value="cds.TraesKARUn01G0105780.1"/>
    <property type="gene ID" value="TraesKARUn01G0105780"/>
</dbReference>
<dbReference type="Gramene" id="TraesKARUn01G0105820.1">
    <property type="protein sequence ID" value="cds.TraesKARUn01G0105820.1"/>
    <property type="gene ID" value="TraesKARUn01G0105820"/>
</dbReference>
<dbReference type="Gramene" id="TraesKARUn01G0106200.1">
    <property type="protein sequence ID" value="cds.TraesKARUn01G0106200.1"/>
    <property type="gene ID" value="TraesKARUn01G0106200"/>
</dbReference>
<dbReference type="Gramene" id="TraesKARUn01G0106470.1">
    <property type="protein sequence ID" value="cds.TraesKARUn01G0106470.1"/>
    <property type="gene ID" value="TraesKARUn01G0106470"/>
</dbReference>
<dbReference type="Gramene" id="TraesKARUn01G0106510.1">
    <property type="protein sequence ID" value="cds.TraesKARUn01G0106510.1"/>
    <property type="gene ID" value="TraesKARUn01G0106510"/>
</dbReference>
<dbReference type="Gramene" id="TraesKARUn01G0107040.1">
    <property type="protein sequence ID" value="cds.TraesKARUn01G0107040.1"/>
    <property type="gene ID" value="TraesKARUn01G0107040"/>
</dbReference>
<dbReference type="Gramene" id="TraesKARUn01G0107060.1">
    <property type="protein sequence ID" value="cds.TraesKARUn01G0107060.1"/>
    <property type="gene ID" value="TraesKARUn01G0107060"/>
</dbReference>
<dbReference type="Gramene" id="TraesKARUn01G0107370.1">
    <property type="protein sequence ID" value="cds.TraesKARUn01G0107370.1"/>
    <property type="gene ID" value="TraesKARUn01G0107370"/>
</dbReference>
<dbReference type="Gramene" id="TraesKARUn01G0107530.1">
    <property type="protein sequence ID" value="cds.TraesKARUn01G0107530.1"/>
    <property type="gene ID" value="TraesKARUn01G0107530"/>
</dbReference>
<dbReference type="Gramene" id="TraesKARUn01G0107860.1">
    <property type="protein sequence ID" value="cds.TraesKARUn01G0107860.1"/>
    <property type="gene ID" value="TraesKARUn01G0107860"/>
</dbReference>
<dbReference type="Gramene" id="TraesKARUn01G0108070.1">
    <property type="protein sequence ID" value="cds.TraesKARUn01G0108070.1"/>
    <property type="gene ID" value="TraesKARUn01G0108070"/>
</dbReference>
<dbReference type="Gramene" id="TraesKARUn01G0108200.1">
    <property type="protein sequence ID" value="cds.TraesKARUn01G0108200.1"/>
    <property type="gene ID" value="TraesKARUn01G0108200"/>
</dbReference>
<dbReference type="Gramene" id="TraesKARUn01G0108440.1">
    <property type="protein sequence ID" value="cds.TraesKARUn01G0108440.1"/>
    <property type="gene ID" value="TraesKARUn01G0108440"/>
</dbReference>
<dbReference type="Gramene" id="TraesKARUn01G0108500.1">
    <property type="protein sequence ID" value="cds.TraesKARUn01G0108500.1"/>
    <property type="gene ID" value="TraesKARUn01G0108500"/>
</dbReference>
<dbReference type="Gramene" id="TraesKARUn01G0108630.1">
    <property type="protein sequence ID" value="cds.TraesKARUn01G0108630.1"/>
    <property type="gene ID" value="TraesKARUn01G0108630"/>
</dbReference>
<dbReference type="Gramene" id="TraesKARUn01G0108680.1">
    <property type="protein sequence ID" value="cds.TraesKARUn01G0108680.1"/>
    <property type="gene ID" value="TraesKARUn01G0108680"/>
</dbReference>
<dbReference type="Gramene" id="TraesKARUn01G0108720.1">
    <property type="protein sequence ID" value="cds.TraesKARUn01G0108720.1"/>
    <property type="gene ID" value="TraesKARUn01G0108720"/>
</dbReference>
<dbReference type="Gramene" id="TraesKARUn01G0108790.1">
    <property type="protein sequence ID" value="cds.TraesKARUn01G0108790.1"/>
    <property type="gene ID" value="TraesKARUn01G0108790"/>
</dbReference>
<dbReference type="Gramene" id="TraesKARUn01G0109130.1">
    <property type="protein sequence ID" value="cds.TraesKARUn01G0109130.1"/>
    <property type="gene ID" value="TraesKARUn01G0109130"/>
</dbReference>
<dbReference type="Gramene" id="TraesKARUn01G0109190.1">
    <property type="protein sequence ID" value="cds.TraesKARUn01G0109190.1"/>
    <property type="gene ID" value="TraesKARUn01G0109190"/>
</dbReference>
<dbReference type="Gramene" id="TraesKARUn01G0109300.1">
    <property type="protein sequence ID" value="cds.TraesKARUn01G0109300.1"/>
    <property type="gene ID" value="TraesKARUn01G0109300"/>
</dbReference>
<dbReference type="Gramene" id="TraesKARUn01G0109330.1">
    <property type="protein sequence ID" value="cds.TraesKARUn01G0109330.1"/>
    <property type="gene ID" value="TraesKARUn01G0109330"/>
</dbReference>
<dbReference type="Gramene" id="TraesKARUn01G0109350.1">
    <property type="protein sequence ID" value="cds.TraesKARUn01G0109350.1"/>
    <property type="gene ID" value="TraesKARUn01G0109350"/>
</dbReference>
<dbReference type="Gramene" id="TraesKARUn01G0109530.1">
    <property type="protein sequence ID" value="cds.TraesKARUn01G0109530.1"/>
    <property type="gene ID" value="TraesKARUn01G0109530"/>
</dbReference>
<dbReference type="Gramene" id="TraesKARUn01G0109570.1">
    <property type="protein sequence ID" value="cds.TraesKARUn01G0109570.1"/>
    <property type="gene ID" value="TraesKARUn01G0109570"/>
</dbReference>
<dbReference type="Gramene" id="TraesKARUn01G0109870.1">
    <property type="protein sequence ID" value="cds.TraesKARUn01G0109870.1"/>
    <property type="gene ID" value="TraesKARUn01G0109870"/>
</dbReference>
<dbReference type="Gramene" id="TraesKARUn01G0110000.1">
    <property type="protein sequence ID" value="cds.TraesKARUn01G0110000.1"/>
    <property type="gene ID" value="TraesKARUn01G0110000"/>
</dbReference>
<dbReference type="Gramene" id="TraesKARUn01G0110340.1">
    <property type="protein sequence ID" value="cds.TraesKARUn01G0110340.1"/>
    <property type="gene ID" value="TraesKARUn01G0110340"/>
</dbReference>
<dbReference type="Gramene" id="TraesKARUn01G0110450.1">
    <property type="protein sequence ID" value="cds.TraesKARUn01G0110450.1"/>
    <property type="gene ID" value="TraesKARUn01G0110450"/>
</dbReference>
<dbReference type="Gramene" id="TraesKARUn01G0110460.1">
    <property type="protein sequence ID" value="cds.TraesKARUn01G0110460.1"/>
    <property type="gene ID" value="TraesKARUn01G0110460"/>
</dbReference>
<dbReference type="Gramene" id="TraesKARUn01G0110690.1">
    <property type="protein sequence ID" value="cds.TraesKARUn01G0110690.1"/>
    <property type="gene ID" value="TraesKARUn01G0110690"/>
</dbReference>
<dbReference type="Gramene" id="TraesKARUn01G0110910.1">
    <property type="protein sequence ID" value="cds.TraesKARUn01G0110910.1"/>
    <property type="gene ID" value="TraesKARUn01G0110910"/>
</dbReference>
<dbReference type="Gramene" id="TraesKARUn01G0111080.1">
    <property type="protein sequence ID" value="cds.TraesKARUn01G0111080.1"/>
    <property type="gene ID" value="TraesKARUn01G0111080"/>
</dbReference>
<dbReference type="Gramene" id="TraesKARUn01G0111380.1">
    <property type="protein sequence ID" value="cds.TraesKARUn01G0111380.1"/>
    <property type="gene ID" value="TraesKARUn01G0111380"/>
</dbReference>
<dbReference type="Gramene" id="TraesKARUn01G0111470.1">
    <property type="protein sequence ID" value="cds.TraesKARUn01G0111470.1"/>
    <property type="gene ID" value="TraesKARUn01G0111470"/>
</dbReference>
<dbReference type="Gramene" id="TraesKARUn01G0111580.1">
    <property type="protein sequence ID" value="cds.TraesKARUn01G0111580.1"/>
    <property type="gene ID" value="TraesKARUn01G0111580"/>
</dbReference>
<dbReference type="Gramene" id="TraesKARUn01G0111670.1">
    <property type="protein sequence ID" value="cds.TraesKARUn01G0111670.1"/>
    <property type="gene ID" value="TraesKARUn01G0111670"/>
</dbReference>
<dbReference type="Gramene" id="TraesKARUn01G0111850.1">
    <property type="protein sequence ID" value="cds.TraesKARUn01G0111850.1"/>
    <property type="gene ID" value="TraesKARUn01G0111850"/>
</dbReference>
<dbReference type="Gramene" id="TraesKARUn01G0111970.1">
    <property type="protein sequence ID" value="cds.TraesKARUn01G0111970.1"/>
    <property type="gene ID" value="TraesKARUn01G0111970"/>
</dbReference>
<dbReference type="Gramene" id="TraesKARUn01G0112030.1">
    <property type="protein sequence ID" value="cds.TraesKARUn01G0112030.1"/>
    <property type="gene ID" value="TraesKARUn01G0112030"/>
</dbReference>
<dbReference type="Gramene" id="TraesKARUn01G0112050.1">
    <property type="protein sequence ID" value="cds.TraesKARUn01G0112050.1"/>
    <property type="gene ID" value="TraesKARUn01G0112050"/>
</dbReference>
<dbReference type="Gramene" id="TraesKARUn01G0112460.1">
    <property type="protein sequence ID" value="cds.TraesKARUn01G0112460.1"/>
    <property type="gene ID" value="TraesKARUn01G0112460"/>
</dbReference>
<dbReference type="Gramene" id="TraesKARUn01G0112780.1">
    <property type="protein sequence ID" value="cds.TraesKARUn01G0112780.1"/>
    <property type="gene ID" value="TraesKARUn01G0112780"/>
</dbReference>
<dbReference type="Gramene" id="TraesKARUn01G0113070.1">
    <property type="protein sequence ID" value="cds.TraesKARUn01G0113070.1"/>
    <property type="gene ID" value="TraesKARUn01G0113070"/>
</dbReference>
<dbReference type="Gramene" id="TraesKARUn01G0113180.1">
    <property type="protein sequence ID" value="cds.TraesKARUn01G0113180.1"/>
    <property type="gene ID" value="TraesKARUn01G0113180"/>
</dbReference>
<dbReference type="Gramene" id="TraesKARUn01G0113260.1">
    <property type="protein sequence ID" value="cds.TraesKARUn01G0113260.1"/>
    <property type="gene ID" value="TraesKARUn01G0113260"/>
</dbReference>
<dbReference type="Gramene" id="TraesKARUn01G0113300.1">
    <property type="protein sequence ID" value="cds.TraesKARUn01G0113300.1"/>
    <property type="gene ID" value="TraesKARUn01G0113300"/>
</dbReference>
<dbReference type="Gramene" id="TraesKARUn01G0113400.1">
    <property type="protein sequence ID" value="cds.TraesKARUn01G0113400.1"/>
    <property type="gene ID" value="TraesKARUn01G0113400"/>
</dbReference>
<dbReference type="Gramene" id="TraesKARUn01G0113540.1">
    <property type="protein sequence ID" value="cds.TraesKARUn01G0113540.1"/>
    <property type="gene ID" value="TraesKARUn01G0113540"/>
</dbReference>
<dbReference type="Gramene" id="TraesKARUn01G0113760.1">
    <property type="protein sequence ID" value="cds.TraesKARUn01G0113760.1"/>
    <property type="gene ID" value="TraesKARUn01G0113760"/>
</dbReference>
<dbReference type="Gramene" id="TraesKARUn01G0113920.1">
    <property type="protein sequence ID" value="cds.TraesKARUn01G0113920.1"/>
    <property type="gene ID" value="TraesKARUn01G0113920"/>
</dbReference>
<dbReference type="Gramene" id="TraesKARUn01G0113970.1">
    <property type="protein sequence ID" value="cds.TraesKARUn01G0113970.1"/>
    <property type="gene ID" value="TraesKARUn01G0113970"/>
</dbReference>
<dbReference type="Gramene" id="TraesKARUn01G0114020.1">
    <property type="protein sequence ID" value="cds.TraesKARUn01G0114020.1"/>
    <property type="gene ID" value="TraesKARUn01G0114020"/>
</dbReference>
<dbReference type="Gramene" id="TraesKARUn01G0114050.1">
    <property type="protein sequence ID" value="cds.TraesKARUn01G0114050.1"/>
    <property type="gene ID" value="TraesKARUn01G0114050"/>
</dbReference>
<dbReference type="Gramene" id="TraesKARUn01G0114080.1">
    <property type="protein sequence ID" value="cds.TraesKARUn01G0114080.1"/>
    <property type="gene ID" value="TraesKARUn01G0114080"/>
</dbReference>
<dbReference type="Gramene" id="TraesKARUn01G0114110.1">
    <property type="protein sequence ID" value="cds.TraesKARUn01G0114110.1"/>
    <property type="gene ID" value="TraesKARUn01G0114110"/>
</dbReference>
<dbReference type="Gramene" id="TraesKARUn01G0114480.1">
    <property type="protein sequence ID" value="cds.TraesKARUn01G0114480.1"/>
    <property type="gene ID" value="TraesKARUn01G0114480"/>
</dbReference>
<dbReference type="Gramene" id="TraesKARUn01G0114550.1">
    <property type="protein sequence ID" value="cds.TraesKARUn01G0114550.1"/>
    <property type="gene ID" value="TraesKARUn01G0114550"/>
</dbReference>
<dbReference type="Gramene" id="TraesKARUn01G0114720.1">
    <property type="protein sequence ID" value="cds.TraesKARUn01G0114720.1"/>
    <property type="gene ID" value="TraesKARUn01G0114720"/>
</dbReference>
<dbReference type="Gramene" id="TraesKARUn01G0114820.1">
    <property type="protein sequence ID" value="cds.TraesKARUn01G0114820.1"/>
    <property type="gene ID" value="TraesKARUn01G0114820"/>
</dbReference>
<dbReference type="Gramene" id="TraesKARUn01G0114840.1">
    <property type="protein sequence ID" value="cds.TraesKARUn01G0114840.1"/>
    <property type="gene ID" value="TraesKARUn01G0114840"/>
</dbReference>
<dbReference type="Gramene" id="TraesKARUn01G0114850.1">
    <property type="protein sequence ID" value="cds.TraesKARUn01G0114850.1"/>
    <property type="gene ID" value="TraesKARUn01G0114850"/>
</dbReference>
<dbReference type="Gramene" id="TraesKARUn01G0114920.1">
    <property type="protein sequence ID" value="cds.TraesKARUn01G0114920.1"/>
    <property type="gene ID" value="TraesKARUn01G0114920"/>
</dbReference>
<dbReference type="Gramene" id="TraesKARUn01G0115540.1">
    <property type="protein sequence ID" value="cds.TraesKARUn01G0115540.1"/>
    <property type="gene ID" value="TraesKARUn01G0115540"/>
</dbReference>
<dbReference type="Gramene" id="TraesKARUn01G0115600.1">
    <property type="protein sequence ID" value="cds.TraesKARUn01G0115600.1"/>
    <property type="gene ID" value="TraesKARUn01G0115600"/>
</dbReference>
<dbReference type="Gramene" id="TraesKARUn01G0115870.1">
    <property type="protein sequence ID" value="cds.TraesKARUn01G0115870.1"/>
    <property type="gene ID" value="TraesKARUn01G0115870"/>
</dbReference>
<dbReference type="Gramene" id="TraesKARUn01G0116030.1">
    <property type="protein sequence ID" value="cds.TraesKARUn01G0116030.1"/>
    <property type="gene ID" value="TraesKARUn01G0116030"/>
</dbReference>
<dbReference type="Gramene" id="TraesKARUn01G0116170.1">
    <property type="protein sequence ID" value="cds.TraesKARUn01G0116170.1"/>
    <property type="gene ID" value="TraesKARUn01G0116170"/>
</dbReference>
<dbReference type="Gramene" id="TraesKARUn01G0116310.1">
    <property type="protein sequence ID" value="cds.TraesKARUn01G0116310.1"/>
    <property type="gene ID" value="TraesKARUn01G0116310"/>
</dbReference>
<dbReference type="Gramene" id="TraesKARUn01G0116660.1">
    <property type="protein sequence ID" value="cds.TraesKARUn01G0116660.1"/>
    <property type="gene ID" value="TraesKARUn01G0116660"/>
</dbReference>
<dbReference type="Gramene" id="TraesKARUn01G0116670.1">
    <property type="protein sequence ID" value="cds.TraesKARUn01G0116670.1"/>
    <property type="gene ID" value="TraesKARUn01G0116670"/>
</dbReference>
<dbReference type="Gramene" id="TraesKARUn01G0117740.1">
    <property type="protein sequence ID" value="cds.TraesKARUn01G0117740.1"/>
    <property type="gene ID" value="TraesKARUn01G0117740"/>
</dbReference>
<dbReference type="Gramene" id="TraesKARUn01G0117760.1">
    <property type="protein sequence ID" value="cds.TraesKARUn01G0117760.1"/>
    <property type="gene ID" value="TraesKARUn01G0117760"/>
</dbReference>
<dbReference type="Gramene" id="TraesKARUn01G0117770.1">
    <property type="protein sequence ID" value="cds.TraesKARUn01G0117770.1"/>
    <property type="gene ID" value="TraesKARUn01G0117770"/>
</dbReference>
<dbReference type="Gramene" id="TraesKARUn01G0117810.1">
    <property type="protein sequence ID" value="cds.TraesKARUn01G0117810.1"/>
    <property type="gene ID" value="TraesKARUn01G0117810"/>
</dbReference>
<dbReference type="Gramene" id="TraesKARUn01G0118140.1">
    <property type="protein sequence ID" value="cds.TraesKARUn01G0118140.1"/>
    <property type="gene ID" value="TraesKARUn01G0118140"/>
</dbReference>
<dbReference type="Gramene" id="TraesKARUn01G0118240.1">
    <property type="protein sequence ID" value="cds.TraesKARUn01G0118240.1"/>
    <property type="gene ID" value="TraesKARUn01G0118240"/>
</dbReference>
<dbReference type="Gramene" id="TraesKARUn01G0118320.1">
    <property type="protein sequence ID" value="cds.TraesKARUn01G0118320.1"/>
    <property type="gene ID" value="TraesKARUn01G0118320"/>
</dbReference>
<dbReference type="Gramene" id="TraesKARUn01G0118480.1">
    <property type="protein sequence ID" value="cds.TraesKARUn01G0118480.1"/>
    <property type="gene ID" value="TraesKARUn01G0118480"/>
</dbReference>
<dbReference type="Gramene" id="TraesKARUn01G0119090.1">
    <property type="protein sequence ID" value="cds.TraesKARUn01G0119090.1"/>
    <property type="gene ID" value="TraesKARUn01G0119090"/>
</dbReference>
<dbReference type="Gramene" id="TraesKARUn01G0119220.1">
    <property type="protein sequence ID" value="cds.TraesKARUn01G0119220.1"/>
    <property type="gene ID" value="TraesKARUn01G0119220"/>
</dbReference>
<dbReference type="Gramene" id="TraesKARUn01G0119620.1">
    <property type="protein sequence ID" value="cds.TraesKARUn01G0119620.1"/>
    <property type="gene ID" value="TraesKARUn01G0119620"/>
</dbReference>
<dbReference type="Gramene" id="TraesKARUn01G0119800.1">
    <property type="protein sequence ID" value="cds.TraesKARUn01G0119800.1"/>
    <property type="gene ID" value="TraesKARUn01G0119800"/>
</dbReference>
<dbReference type="Gramene" id="TraesKARUn01G0120030.1">
    <property type="protein sequence ID" value="cds.TraesKARUn01G0120030.1"/>
    <property type="gene ID" value="TraesKARUn01G0120030"/>
</dbReference>
<dbReference type="Gramene" id="TraesKARUn01G0120300.1">
    <property type="protein sequence ID" value="cds.TraesKARUn01G0120300.1"/>
    <property type="gene ID" value="TraesKARUn01G0120300"/>
</dbReference>
<dbReference type="Gramene" id="TraesKARUn01G0120790.1">
    <property type="protein sequence ID" value="cds.TraesKARUn01G0120790.1"/>
    <property type="gene ID" value="TraesKARUn01G0120790"/>
</dbReference>
<dbReference type="Gramene" id="TraesKARUn01G0121030.1">
    <property type="protein sequence ID" value="cds.TraesKARUn01G0121030.1"/>
    <property type="gene ID" value="TraesKARUn01G0121030"/>
</dbReference>
<dbReference type="Gramene" id="TraesKARUn01G0121600.1">
    <property type="protein sequence ID" value="cds.TraesKARUn01G0121600.1"/>
    <property type="gene ID" value="TraesKARUn01G0121600"/>
</dbReference>
<dbReference type="Gramene" id="TraesKARUn01G0121630.1">
    <property type="protein sequence ID" value="cds.TraesKARUn01G0121630.1"/>
    <property type="gene ID" value="TraesKARUn01G0121630"/>
</dbReference>
<dbReference type="Gramene" id="TraesKARUn01G0122070.1">
    <property type="protein sequence ID" value="cds.TraesKARUn01G0122070.1"/>
    <property type="gene ID" value="TraesKARUn01G0122070"/>
</dbReference>
<dbReference type="Gramene" id="TraesKARUn01G0122210.1">
    <property type="protein sequence ID" value="cds.TraesKARUn01G0122210.1"/>
    <property type="gene ID" value="TraesKARUn01G0122210"/>
</dbReference>
<dbReference type="Gramene" id="TraesKARUn01G0122330.1">
    <property type="protein sequence ID" value="cds.TraesKARUn01G0122330.1"/>
    <property type="gene ID" value="TraesKARUn01G0122330"/>
</dbReference>
<dbReference type="Gramene" id="TraesKARUn01G0122520.1">
    <property type="protein sequence ID" value="cds.TraesKARUn01G0122520.1"/>
    <property type="gene ID" value="TraesKARUn01G0122520"/>
</dbReference>
<dbReference type="Gramene" id="TraesKARUn01G0122550.1">
    <property type="protein sequence ID" value="cds.TraesKARUn01G0122550.1"/>
    <property type="gene ID" value="TraesKARUn01G0122550"/>
</dbReference>
<dbReference type="Gramene" id="TraesKARUn01G0122660.1">
    <property type="protein sequence ID" value="cds.TraesKARUn01G0122660.1"/>
    <property type="gene ID" value="TraesKARUn01G0122660"/>
</dbReference>
<dbReference type="Gramene" id="TraesKARUn01G0122760.1">
    <property type="protein sequence ID" value="cds.TraesKARUn01G0122760.1"/>
    <property type="gene ID" value="TraesKARUn01G0122760"/>
</dbReference>
<dbReference type="Gramene" id="TraesKARUn01G0122930.1">
    <property type="protein sequence ID" value="cds.TraesKARUn01G0122930.1"/>
    <property type="gene ID" value="TraesKARUn01G0122930"/>
</dbReference>
<dbReference type="Gramene" id="TraesKARUn01G0123120.1">
    <property type="protein sequence ID" value="cds.TraesKARUn01G0123120.1"/>
    <property type="gene ID" value="TraesKARUn01G0123120"/>
</dbReference>
<dbReference type="Gramene" id="TraesKARUn01G0123450.1">
    <property type="protein sequence ID" value="cds.TraesKARUn01G0123450.1"/>
    <property type="gene ID" value="TraesKARUn01G0123450"/>
</dbReference>
<dbReference type="Gramene" id="TraesKARUn01G0123870.1">
    <property type="protein sequence ID" value="cds.TraesKARUn01G0123870.1"/>
    <property type="gene ID" value="TraesKARUn01G0123870"/>
</dbReference>
<dbReference type="Gramene" id="TraesKARUn01G0124040.1">
    <property type="protein sequence ID" value="cds.TraesKARUn01G0124040.1"/>
    <property type="gene ID" value="TraesKARUn01G0124040"/>
</dbReference>
<dbReference type="Gramene" id="TraesKARUn01G0124050.1">
    <property type="protein sequence ID" value="cds.TraesKARUn01G0124050.1"/>
    <property type="gene ID" value="TraesKARUn01G0124050"/>
</dbReference>
<dbReference type="Gramene" id="TraesKARUn01G0124660.1">
    <property type="protein sequence ID" value="cds.TraesKARUn01G0124660.1"/>
    <property type="gene ID" value="TraesKARUn01G0124660"/>
</dbReference>
<dbReference type="Gramene" id="TraesKARUn01G0125290.1">
    <property type="protein sequence ID" value="cds.TraesKARUn01G0125290.1"/>
    <property type="gene ID" value="TraesKARUn01G0125290"/>
</dbReference>
<dbReference type="Gramene" id="TraesKARUn01G0125700.1">
    <property type="protein sequence ID" value="cds.TraesKARUn01G0125700.1"/>
    <property type="gene ID" value="TraesKARUn01G0125700"/>
</dbReference>
<dbReference type="Gramene" id="TraesKARUn01G0126180.1">
    <property type="protein sequence ID" value="cds.TraesKARUn01G0126180.1"/>
    <property type="gene ID" value="TraesKARUn01G0126180"/>
</dbReference>
<dbReference type="Gramene" id="TraesKARUn01G0126250.1">
    <property type="protein sequence ID" value="cds.TraesKARUn01G0126250.1"/>
    <property type="gene ID" value="TraesKARUn01G0126250"/>
</dbReference>
<dbReference type="Gramene" id="TraesKARUn01G0126370.1">
    <property type="protein sequence ID" value="cds.TraesKARUn01G0126370.1"/>
    <property type="gene ID" value="TraesKARUn01G0126370"/>
</dbReference>
<dbReference type="Gramene" id="TraesKARUn01G0126430.1">
    <property type="protein sequence ID" value="cds.TraesKARUn01G0126430.1"/>
    <property type="gene ID" value="TraesKARUn01G0126430"/>
</dbReference>
<dbReference type="Gramene" id="TraesKARUn01G0126450.1">
    <property type="protein sequence ID" value="cds.TraesKARUn01G0126450.1"/>
    <property type="gene ID" value="TraesKARUn01G0126450"/>
</dbReference>
<dbReference type="Gramene" id="TraesKARUn01G0126630.1">
    <property type="protein sequence ID" value="cds.TraesKARUn01G0126630.1"/>
    <property type="gene ID" value="TraesKARUn01G0126630"/>
</dbReference>
<dbReference type="Gramene" id="TraesKARUn01G0126720.1">
    <property type="protein sequence ID" value="cds.TraesKARUn01G0126720.1"/>
    <property type="gene ID" value="TraesKARUn01G0126720"/>
</dbReference>
<dbReference type="Gramene" id="TraesKARUn01G0126770.1">
    <property type="protein sequence ID" value="cds.TraesKARUn01G0126770.1"/>
    <property type="gene ID" value="TraesKARUn01G0126770"/>
</dbReference>
<dbReference type="Gramene" id="TraesKARUn01G0127060.1">
    <property type="protein sequence ID" value="cds.TraesKARUn01G0127060.1"/>
    <property type="gene ID" value="TraesKARUn01G0127060"/>
</dbReference>
<dbReference type="Gramene" id="TraesKARUn01G0127380.1">
    <property type="protein sequence ID" value="cds.TraesKARUn01G0127380.1"/>
    <property type="gene ID" value="TraesKARUn01G0127380"/>
</dbReference>
<dbReference type="Gramene" id="TraesKARUn01G0127580.1">
    <property type="protein sequence ID" value="cds.TraesKARUn01G0127580.1"/>
    <property type="gene ID" value="TraesKARUn01G0127580"/>
</dbReference>
<dbReference type="Gramene" id="TraesKARUn01G0127640.1">
    <property type="protein sequence ID" value="cds.TraesKARUn01G0127640.1"/>
    <property type="gene ID" value="TraesKARUn01G0127640"/>
</dbReference>
<dbReference type="Gramene" id="TraesKARUn01G0128230.1">
    <property type="protein sequence ID" value="cds.TraesKARUn01G0128230.1"/>
    <property type="gene ID" value="TraesKARUn01G0128230"/>
</dbReference>
<dbReference type="Gramene" id="TraesKARUn01G0128490.1">
    <property type="protein sequence ID" value="cds.TraesKARUn01G0128490.1"/>
    <property type="gene ID" value="TraesKARUn01G0128490"/>
</dbReference>
<dbReference type="Gramene" id="TraesKARUn01G0129090.1">
    <property type="protein sequence ID" value="cds.TraesKARUn01G0129090.1"/>
    <property type="gene ID" value="TraesKARUn01G0129090"/>
</dbReference>
<dbReference type="Gramene" id="TraesKARUn01G0129400.1">
    <property type="protein sequence ID" value="cds.TraesKARUn01G0129400.1"/>
    <property type="gene ID" value="TraesKARUn01G0129400"/>
</dbReference>
<dbReference type="Gramene" id="TraesKARUn01G0129430.1">
    <property type="protein sequence ID" value="cds.TraesKARUn01G0129430.1"/>
    <property type="gene ID" value="TraesKARUn01G0129430"/>
</dbReference>
<dbReference type="Gramene" id="TraesKARUn01G0130080.1">
    <property type="protein sequence ID" value="cds.TraesKARUn01G0130080.1"/>
    <property type="gene ID" value="TraesKARUn01G0130080"/>
</dbReference>
<dbReference type="Gramene" id="TraesKARUn01G0130370.1">
    <property type="protein sequence ID" value="cds.TraesKARUn01G0130370.1"/>
    <property type="gene ID" value="TraesKARUn01G0130370"/>
</dbReference>
<dbReference type="Gramene" id="TraesKARUn01G0130450.1">
    <property type="protein sequence ID" value="cds.TraesKARUn01G0130450.1"/>
    <property type="gene ID" value="TraesKARUn01G0130450"/>
</dbReference>
<dbReference type="Gramene" id="TraesKARUn01G0130520.1">
    <property type="protein sequence ID" value="cds.TraesKARUn01G0130520.1"/>
    <property type="gene ID" value="TraesKARUn01G0130520"/>
</dbReference>
<dbReference type="Gramene" id="TraesKARUn01G0132040.1">
    <property type="protein sequence ID" value="cds.TraesKARUn01G0132040.1"/>
    <property type="gene ID" value="TraesKARUn01G0132040"/>
</dbReference>
<dbReference type="Gramene" id="TraesKARUn01G0133240.1">
    <property type="protein sequence ID" value="cds.TraesKARUn01G0133240.1"/>
    <property type="gene ID" value="TraesKARUn01G0133240"/>
</dbReference>
<dbReference type="Gramene" id="TraesKARUn01G0133360.1">
    <property type="protein sequence ID" value="cds.TraesKARUn01G0133360.1"/>
    <property type="gene ID" value="TraesKARUn01G0133360"/>
</dbReference>
<dbReference type="Gramene" id="TraesKARUn01G0133520.1">
    <property type="protein sequence ID" value="cds.TraesKARUn01G0133520.1"/>
    <property type="gene ID" value="TraesKARUn01G0133520"/>
</dbReference>
<dbReference type="Gramene" id="TraesKARUn01G0133980.1">
    <property type="protein sequence ID" value="cds.TraesKARUn01G0133980.1"/>
    <property type="gene ID" value="TraesKARUn01G0133980"/>
</dbReference>
<dbReference type="Gramene" id="TraesKARUn01G0134140.1">
    <property type="protein sequence ID" value="cds.TraesKARUn01G0134140.1"/>
    <property type="gene ID" value="TraesKARUn01G0134140"/>
</dbReference>
<dbReference type="Gramene" id="TraesKARUn01G0134450.1">
    <property type="protein sequence ID" value="cds.TraesKARUn01G0134450.1"/>
    <property type="gene ID" value="TraesKARUn01G0134450"/>
</dbReference>
<dbReference type="Gramene" id="TraesKARUn01G0134680.1">
    <property type="protein sequence ID" value="cds.TraesKARUn01G0134680.1"/>
    <property type="gene ID" value="TraesKARUn01G0134680"/>
</dbReference>
<dbReference type="Gramene" id="TraesKARUn01G0134720.1">
    <property type="protein sequence ID" value="cds.TraesKARUn01G0134720.1"/>
    <property type="gene ID" value="TraesKARUn01G0134720"/>
</dbReference>
<dbReference type="Gramene" id="TraesKARUn01G0134920.1">
    <property type="protein sequence ID" value="cds.TraesKARUn01G0134920.1"/>
    <property type="gene ID" value="TraesKARUn01G0134920"/>
</dbReference>
<dbReference type="Gramene" id="TraesKARUn01G0135170.1">
    <property type="protein sequence ID" value="cds.TraesKARUn01G0135170.1"/>
    <property type="gene ID" value="TraesKARUn01G0135170"/>
</dbReference>
<dbReference type="Gramene" id="TraesKARUn01G0135230.1">
    <property type="protein sequence ID" value="cds.TraesKARUn01G0135230.1"/>
    <property type="gene ID" value="TraesKARUn01G0135230"/>
</dbReference>
<dbReference type="Gramene" id="TraesKARUn01G0135260.1">
    <property type="protein sequence ID" value="cds.TraesKARUn01G0135260.1"/>
    <property type="gene ID" value="TraesKARUn01G0135260"/>
</dbReference>
<dbReference type="Gramene" id="TraesKARUn01G0135600.1">
    <property type="protein sequence ID" value="cds.TraesKARUn01G0135600.1"/>
    <property type="gene ID" value="TraesKARUn01G0135600"/>
</dbReference>
<dbReference type="Gramene" id="TraesKARUn01G0136000.1">
    <property type="protein sequence ID" value="cds.TraesKARUn01G0136000.1"/>
    <property type="gene ID" value="TraesKARUn01G0136000"/>
</dbReference>
<dbReference type="Gramene" id="TraesKARUn01G0136170.1">
    <property type="protein sequence ID" value="cds.TraesKARUn01G0136170.1"/>
    <property type="gene ID" value="TraesKARUn01G0136170"/>
</dbReference>
<dbReference type="Gramene" id="TraesKARUn01G0136270.1">
    <property type="protein sequence ID" value="cds.TraesKARUn01G0136270.1"/>
    <property type="gene ID" value="TraesKARUn01G0136270"/>
</dbReference>
<dbReference type="Gramene" id="TraesKARUn01G0136380.1">
    <property type="protein sequence ID" value="cds.TraesKARUn01G0136380.1"/>
    <property type="gene ID" value="TraesKARUn01G0136380"/>
</dbReference>
<dbReference type="Gramene" id="TraesKARUn01G0136720.1">
    <property type="protein sequence ID" value="cds.TraesKARUn01G0136720.1"/>
    <property type="gene ID" value="TraesKARUn01G0136720"/>
</dbReference>
<dbReference type="Gramene" id="TraesKARUn01G0136830.1">
    <property type="protein sequence ID" value="cds.TraesKARUn01G0136830.1"/>
    <property type="gene ID" value="TraesKARUn01G0136830"/>
</dbReference>
<dbReference type="Gramene" id="TraesKARUn01G0136930.1">
    <property type="protein sequence ID" value="cds.TraesKARUn01G0136930.1"/>
    <property type="gene ID" value="TraesKARUn01G0136930"/>
</dbReference>
<dbReference type="Gramene" id="TraesKARUn01G0137320.1">
    <property type="protein sequence ID" value="cds.TraesKARUn01G0137320.1"/>
    <property type="gene ID" value="TraesKARUn01G0137320"/>
</dbReference>
<dbReference type="Gramene" id="TraesKARUn01G0137410.1">
    <property type="protein sequence ID" value="cds.TraesKARUn01G0137410.1"/>
    <property type="gene ID" value="TraesKARUn01G0137410"/>
</dbReference>
<dbReference type="Gramene" id="TraesKARUn01G0137570.1">
    <property type="protein sequence ID" value="cds.TraesKARUn01G0137570.1"/>
    <property type="gene ID" value="TraesKARUn01G0137570"/>
</dbReference>
<dbReference type="Gramene" id="TraesKARUn01G0137870.1">
    <property type="protein sequence ID" value="cds.TraesKARUn01G0137870.1"/>
    <property type="gene ID" value="TraesKARUn01G0137870"/>
</dbReference>
<dbReference type="Gramene" id="TraesKARUn01G0138050.1">
    <property type="protein sequence ID" value="cds.TraesKARUn01G0138050.1"/>
    <property type="gene ID" value="TraesKARUn01G0138050"/>
</dbReference>
<dbReference type="Gramene" id="TraesKARUn01G0138650.1">
    <property type="protein sequence ID" value="cds.TraesKARUn01G0138650.1"/>
    <property type="gene ID" value="TraesKARUn01G0138650"/>
</dbReference>
<dbReference type="Gramene" id="TraesKARUn01G0139350.1">
    <property type="protein sequence ID" value="cds.TraesKARUn01G0139350.1"/>
    <property type="gene ID" value="TraesKARUn01G0139350"/>
</dbReference>
<dbReference type="Gramene" id="TraesKARUn01G0139430.1">
    <property type="protein sequence ID" value="cds.TraesKARUn01G0139430.1"/>
    <property type="gene ID" value="TraesKARUn01G0139430"/>
</dbReference>
<dbReference type="Gramene" id="TraesKARUn01G0139540.1">
    <property type="protein sequence ID" value="cds.TraesKARUn01G0139540.1"/>
    <property type="gene ID" value="TraesKARUn01G0139540"/>
</dbReference>
<dbReference type="Gramene" id="TraesKARUn01G0139670.1">
    <property type="protein sequence ID" value="cds.TraesKARUn01G0139670.1"/>
    <property type="gene ID" value="TraesKARUn01G0139670"/>
</dbReference>
<dbReference type="Gramene" id="TraesKARUn01G0139920.1">
    <property type="protein sequence ID" value="cds.TraesKARUn01G0139920.1"/>
    <property type="gene ID" value="TraesKARUn01G0139920"/>
</dbReference>
<dbReference type="Gramene" id="TraesKARUn01G0140090.1">
    <property type="protein sequence ID" value="cds.TraesKARUn01G0140090.1"/>
    <property type="gene ID" value="TraesKARUn01G0140090"/>
</dbReference>
<dbReference type="Gramene" id="TraesKARUn01G0140120.1">
    <property type="protein sequence ID" value="cds.TraesKARUn01G0140120.1"/>
    <property type="gene ID" value="TraesKARUn01G0140120"/>
</dbReference>
<dbReference type="Gramene" id="TraesKARUn01G0140230.1">
    <property type="protein sequence ID" value="cds.TraesKARUn01G0140230.1"/>
    <property type="gene ID" value="TraesKARUn01G0140230"/>
</dbReference>
<dbReference type="Gramene" id="TraesKARUn01G0140270.1">
    <property type="protein sequence ID" value="cds.TraesKARUn01G0140270.1"/>
    <property type="gene ID" value="TraesKARUn01G0140270"/>
</dbReference>
<dbReference type="Gramene" id="TraesKARUn01G0140350.1">
    <property type="protein sequence ID" value="cds.TraesKARUn01G0140350.1"/>
    <property type="gene ID" value="TraesKARUn01G0140350"/>
</dbReference>
<dbReference type="Gramene" id="TraesKARUn01G0140400.1">
    <property type="protein sequence ID" value="cds.TraesKARUn01G0140400.1"/>
    <property type="gene ID" value="TraesKARUn01G0140400"/>
</dbReference>
<dbReference type="Gramene" id="TraesKARUn01G0140490.1">
    <property type="protein sequence ID" value="cds.TraesKARUn01G0140490.1"/>
    <property type="gene ID" value="TraesKARUn01G0140490"/>
</dbReference>
<dbReference type="Gramene" id="TraesKARUn01G0140510.1">
    <property type="protein sequence ID" value="cds.TraesKARUn01G0140510.1"/>
    <property type="gene ID" value="TraesKARUn01G0140510"/>
</dbReference>
<dbReference type="Gramene" id="TraesKARUn01G0140820.1">
    <property type="protein sequence ID" value="cds.TraesKARUn01G0140820.1"/>
    <property type="gene ID" value="TraesKARUn01G0140820"/>
</dbReference>
<dbReference type="Gramene" id="TraesKARUn01G0140920.1">
    <property type="protein sequence ID" value="cds.TraesKARUn01G0140920.1"/>
    <property type="gene ID" value="TraesKARUn01G0140920"/>
</dbReference>
<dbReference type="Gramene" id="TraesKARUn01G0140940.1">
    <property type="protein sequence ID" value="cds.TraesKARUn01G0140940.1"/>
    <property type="gene ID" value="TraesKARUn01G0140940"/>
</dbReference>
<dbReference type="Gramene" id="TraesKARUn01G0141010.1">
    <property type="protein sequence ID" value="cds.TraesKARUn01G0141010.1"/>
    <property type="gene ID" value="TraesKARUn01G0141010"/>
</dbReference>
<dbReference type="Gramene" id="TraesKARUn01G0141150.1">
    <property type="protein sequence ID" value="cds.TraesKARUn01G0141150.1"/>
    <property type="gene ID" value="TraesKARUn01G0141150"/>
</dbReference>
<dbReference type="Gramene" id="TraesKARUn01G0141350.1">
    <property type="protein sequence ID" value="cds.TraesKARUn01G0141350.1"/>
    <property type="gene ID" value="TraesKARUn01G0141350"/>
</dbReference>
<dbReference type="Gramene" id="TraesKARUn01G0141370.1">
    <property type="protein sequence ID" value="cds.TraesKARUn01G0141370.1"/>
    <property type="gene ID" value="TraesKARUn01G0141370"/>
</dbReference>
<dbReference type="Gramene" id="TraesKARUn01G0141530.1">
    <property type="protein sequence ID" value="cds.TraesKARUn01G0141530.1"/>
    <property type="gene ID" value="TraesKARUn01G0141530"/>
</dbReference>
<dbReference type="Gramene" id="TraesKARUn01G0141780.1">
    <property type="protein sequence ID" value="cds.TraesKARUn01G0141780.1"/>
    <property type="gene ID" value="TraesKARUn01G0141780"/>
</dbReference>
<dbReference type="Gramene" id="TraesKARUn01G0141880.1">
    <property type="protein sequence ID" value="cds.TraesKARUn01G0141880.1"/>
    <property type="gene ID" value="TraesKARUn01G0141880"/>
</dbReference>
<dbReference type="Gramene" id="TraesKARUn01G0141900.1">
    <property type="protein sequence ID" value="cds.TraesKARUn01G0141900.1"/>
    <property type="gene ID" value="TraesKARUn01G0141900"/>
</dbReference>
<dbReference type="Gramene" id="TraesKARUn01G0142060.1">
    <property type="protein sequence ID" value="cds.TraesKARUn01G0142060.1"/>
    <property type="gene ID" value="TraesKARUn01G0142060"/>
</dbReference>
<dbReference type="Gramene" id="TraesKARUn01G0142270.1">
    <property type="protein sequence ID" value="cds.TraesKARUn01G0142270.1"/>
    <property type="gene ID" value="TraesKARUn01G0142270"/>
</dbReference>
<dbReference type="Gramene" id="TraesKARUn01G0142330.1">
    <property type="protein sequence ID" value="cds.TraesKARUn01G0142330.1"/>
    <property type="gene ID" value="TraesKARUn01G0142330"/>
</dbReference>
<dbReference type="Gramene" id="TraesKARUn01G0142340.1">
    <property type="protein sequence ID" value="cds.TraesKARUn01G0142340.1"/>
    <property type="gene ID" value="TraesKARUn01G0142340"/>
</dbReference>
<dbReference type="Gramene" id="TraesKARUn01G0142550.1">
    <property type="protein sequence ID" value="cds.TraesKARUn01G0142550.1"/>
    <property type="gene ID" value="TraesKARUn01G0142550"/>
</dbReference>
<dbReference type="Gramene" id="TraesKARUn01G0142580.1">
    <property type="protein sequence ID" value="cds.TraesKARUn01G0142580.1"/>
    <property type="gene ID" value="TraesKARUn01G0142580"/>
</dbReference>
<dbReference type="Gramene" id="TraesKARUn01G0142600.1">
    <property type="protein sequence ID" value="cds.TraesKARUn01G0142600.1"/>
    <property type="gene ID" value="TraesKARUn01G0142600"/>
</dbReference>
<dbReference type="Gramene" id="TraesKARUn01G0142890.1">
    <property type="protein sequence ID" value="cds.TraesKARUn01G0142890.1"/>
    <property type="gene ID" value="TraesKARUn01G0142890"/>
</dbReference>
<dbReference type="Gramene" id="TraesKARUn01G0142940.1">
    <property type="protein sequence ID" value="cds.TraesKARUn01G0142940.1"/>
    <property type="gene ID" value="TraesKARUn01G0142940"/>
</dbReference>
<dbReference type="Gramene" id="TraesKARUn01G0143020.1">
    <property type="protein sequence ID" value="cds.TraesKARUn01G0143020.1"/>
    <property type="gene ID" value="TraesKARUn01G0143020"/>
</dbReference>
<dbReference type="Gramene" id="TraesKARUn01G0143330.1">
    <property type="protein sequence ID" value="cds.TraesKARUn01G0143330.1"/>
    <property type="gene ID" value="TraesKARUn01G0143330"/>
</dbReference>
<dbReference type="Gramene" id="TraesKARUn01G0143490.1">
    <property type="protein sequence ID" value="cds.TraesKARUn01G0143490.1"/>
    <property type="gene ID" value="TraesKARUn01G0143490"/>
</dbReference>
<dbReference type="Gramene" id="TraesKARUn01G0143750.1">
    <property type="protein sequence ID" value="cds.TraesKARUn01G0143750.1"/>
    <property type="gene ID" value="TraesKARUn01G0143750"/>
</dbReference>
<dbReference type="Gramene" id="TraesKARUn01G0143770.1">
    <property type="protein sequence ID" value="cds.TraesKARUn01G0143770.1"/>
    <property type="gene ID" value="TraesKARUn01G0143770"/>
</dbReference>
<dbReference type="Gramene" id="TraesKARUn01G0143830.1">
    <property type="protein sequence ID" value="cds.TraesKARUn01G0143830.1"/>
    <property type="gene ID" value="TraesKARUn01G0143830"/>
</dbReference>
<dbReference type="Gramene" id="TraesKARUn01G0144050.1">
    <property type="protein sequence ID" value="cds.TraesKARUn01G0144050.1"/>
    <property type="gene ID" value="TraesKARUn01G0144050"/>
</dbReference>
<dbReference type="Gramene" id="TraesKARUn01G0144250.1">
    <property type="protein sequence ID" value="cds.TraesKARUn01G0144250.1"/>
    <property type="gene ID" value="TraesKARUn01G0144250"/>
</dbReference>
<dbReference type="Gramene" id="TraesKARUn01G0144290.1">
    <property type="protein sequence ID" value="cds.TraesKARUn01G0144290.1"/>
    <property type="gene ID" value="TraesKARUn01G0144290"/>
</dbReference>
<dbReference type="Gramene" id="TraesKARUn01G0144350.1">
    <property type="protein sequence ID" value="cds.TraesKARUn01G0144350.1"/>
    <property type="gene ID" value="TraesKARUn01G0144350"/>
</dbReference>
<dbReference type="Gramene" id="TraesKARUn01G0144570.1">
    <property type="protein sequence ID" value="cds.TraesKARUn01G0144570.1"/>
    <property type="gene ID" value="TraesKARUn01G0144570"/>
</dbReference>
<dbReference type="Gramene" id="TraesKARUn01G0144590.1">
    <property type="protein sequence ID" value="cds.TraesKARUn01G0144590.1"/>
    <property type="gene ID" value="TraesKARUn01G0144590"/>
</dbReference>
<dbReference type="Gramene" id="TraesKARUn01G0144610.1">
    <property type="protein sequence ID" value="cds.TraesKARUn01G0144610.1"/>
    <property type="gene ID" value="TraesKARUn01G0144610"/>
</dbReference>
<dbReference type="Gramene" id="TraesKARUn01G0144870.1">
    <property type="protein sequence ID" value="cds.TraesKARUn01G0144870.1"/>
    <property type="gene ID" value="TraesKARUn01G0144870"/>
</dbReference>
<dbReference type="Gramene" id="TraesKARUn01G0145190.1">
    <property type="protein sequence ID" value="cds.TraesKARUn01G0145190.1"/>
    <property type="gene ID" value="TraesKARUn01G0145190"/>
</dbReference>
<dbReference type="Gramene" id="TraesKARUn01G0145420.1">
    <property type="protein sequence ID" value="cds.TraesKARUn01G0145420.1"/>
    <property type="gene ID" value="TraesKARUn01G0145420"/>
</dbReference>
<dbReference type="Gramene" id="TraesKARUn01G0145440.1">
    <property type="protein sequence ID" value="cds.TraesKARUn01G0145440.1"/>
    <property type="gene ID" value="TraesKARUn01G0145440"/>
</dbReference>
<dbReference type="Gramene" id="TraesKARUn01G0145580.1">
    <property type="protein sequence ID" value="cds.TraesKARUn01G0145580.1"/>
    <property type="gene ID" value="TraesKARUn01G0145580"/>
</dbReference>
<dbReference type="Gramene" id="TraesKARUn01G0145600.1">
    <property type="protein sequence ID" value="cds.TraesKARUn01G0145600.1"/>
    <property type="gene ID" value="TraesKARUn01G0145600"/>
</dbReference>
<dbReference type="Gramene" id="TraesKARUn01G0145820.1">
    <property type="protein sequence ID" value="cds.TraesKARUn01G0145820.1"/>
    <property type="gene ID" value="TraesKARUn01G0145820"/>
</dbReference>
<dbReference type="Gramene" id="TraesKARUn01G0145850.1">
    <property type="protein sequence ID" value="cds.TraesKARUn01G0145850.1"/>
    <property type="gene ID" value="TraesKARUn01G0145850"/>
</dbReference>
<dbReference type="Gramene" id="TraesKARUn01G0146150.1">
    <property type="protein sequence ID" value="cds.TraesKARUn01G0146150.1"/>
    <property type="gene ID" value="TraesKARUn01G0146150"/>
</dbReference>
<dbReference type="Gramene" id="TraesKARUn01G0146230.1">
    <property type="protein sequence ID" value="cds.TraesKARUn01G0146230.1"/>
    <property type="gene ID" value="TraesKARUn01G0146230"/>
</dbReference>
<dbReference type="Gramene" id="TraesKARUn01G0146470.1">
    <property type="protein sequence ID" value="cds.TraesKARUn01G0146470.1"/>
    <property type="gene ID" value="TraesKARUn01G0146470"/>
</dbReference>
<dbReference type="Gramene" id="TraesKARUn01G0146670.1">
    <property type="protein sequence ID" value="cds.TraesKARUn01G0146670.1"/>
    <property type="gene ID" value="TraesKARUn01G0146670"/>
</dbReference>
<dbReference type="Gramene" id="TraesKARUn01G0146940.1">
    <property type="protein sequence ID" value="cds.TraesKARUn01G0146940.1"/>
    <property type="gene ID" value="TraesKARUn01G0146940"/>
</dbReference>
<dbReference type="Gramene" id="TraesKARUn01G0147500.1">
    <property type="protein sequence ID" value="cds.TraesKARUn01G0147500.1"/>
    <property type="gene ID" value="TraesKARUn01G0147500"/>
</dbReference>
<dbReference type="Gramene" id="TraesKARUn01G0147520.1">
    <property type="protein sequence ID" value="cds.TraesKARUn01G0147520.1"/>
    <property type="gene ID" value="TraesKARUn01G0147520"/>
</dbReference>
<dbReference type="Gramene" id="TraesKARUn01G0147840.1">
    <property type="protein sequence ID" value="cds.TraesKARUn01G0147840.1"/>
    <property type="gene ID" value="TraesKARUn01G0147840"/>
</dbReference>
<dbReference type="Gramene" id="TraesKARUn01G0148110.1">
    <property type="protein sequence ID" value="cds.TraesKARUn01G0148110.1"/>
    <property type="gene ID" value="TraesKARUn01G0148110"/>
</dbReference>
<dbReference type="Gramene" id="TraesKARUn01G0148740.1">
    <property type="protein sequence ID" value="cds.TraesKARUn01G0148740.1"/>
    <property type="gene ID" value="TraesKARUn01G0148740"/>
</dbReference>
<dbReference type="Gramene" id="TraesKARUn01G0149060.1">
    <property type="protein sequence ID" value="cds.TraesKARUn01G0149060.1"/>
    <property type="gene ID" value="TraesKARUn01G0149060"/>
</dbReference>
<dbReference type="Gramene" id="TraesKARUn01G0149070.1">
    <property type="protein sequence ID" value="cds.TraesKARUn01G0149070.1"/>
    <property type="gene ID" value="TraesKARUn01G0149070"/>
</dbReference>
<dbReference type="Gramene" id="TraesKARUn01G0149080.1">
    <property type="protein sequence ID" value="cds.TraesKARUn01G0149080.1"/>
    <property type="gene ID" value="TraesKARUn01G0149080"/>
</dbReference>
<dbReference type="Gramene" id="TraesKARUn01G0149100.1">
    <property type="protein sequence ID" value="cds.TraesKARUn01G0149100.1"/>
    <property type="gene ID" value="TraesKARUn01G0149100"/>
</dbReference>
<dbReference type="Gramene" id="TraesKARUn01G0149310.1">
    <property type="protein sequence ID" value="cds.TraesKARUn01G0149310.1"/>
    <property type="gene ID" value="TraesKARUn01G0149310"/>
</dbReference>
<dbReference type="Gramene" id="TraesKARUn01G0149620.1">
    <property type="protein sequence ID" value="cds.TraesKARUn01G0149620.1"/>
    <property type="gene ID" value="TraesKARUn01G0149620"/>
</dbReference>
<dbReference type="Gramene" id="TraesKARUn01G0149980.1">
    <property type="protein sequence ID" value="cds.TraesKARUn01G0149980.1"/>
    <property type="gene ID" value="TraesKARUn01G0149980"/>
</dbReference>
<dbReference type="Gramene" id="TraesKARUn01G0150100.1">
    <property type="protein sequence ID" value="cds.TraesKARUn01G0150100.1"/>
    <property type="gene ID" value="TraesKARUn01G0150100"/>
</dbReference>
<dbReference type="Gramene" id="TraesKARUn01G0150170.1">
    <property type="protein sequence ID" value="cds.TraesKARUn01G0150170.1"/>
    <property type="gene ID" value="TraesKARUn01G0150170"/>
</dbReference>
<dbReference type="Gramene" id="TraesKARUn01G0150190.1">
    <property type="protein sequence ID" value="cds.TraesKARUn01G0150190.1"/>
    <property type="gene ID" value="TraesKARUn01G0150190"/>
</dbReference>
<dbReference type="Gramene" id="TraesKARUn01G0150320.1">
    <property type="protein sequence ID" value="cds.TraesKARUn01G0150320.1"/>
    <property type="gene ID" value="TraesKARUn01G0150320"/>
</dbReference>
<dbReference type="Gramene" id="TraesKARUn01G0150680.1">
    <property type="protein sequence ID" value="cds.TraesKARUn01G0150680.1"/>
    <property type="gene ID" value="TraesKARUn01G0150680"/>
</dbReference>
<dbReference type="Gramene" id="TraesKARUn01G0150800.1">
    <property type="protein sequence ID" value="cds.TraesKARUn01G0150800.1"/>
    <property type="gene ID" value="TraesKARUn01G0150800"/>
</dbReference>
<dbReference type="Gramene" id="TraesKARUn01G0150870.1">
    <property type="protein sequence ID" value="cds.TraesKARUn01G0150870.1"/>
    <property type="gene ID" value="TraesKARUn01G0150870"/>
</dbReference>
<dbReference type="Gramene" id="TraesKARUn01G0150920.1">
    <property type="protein sequence ID" value="cds.TraesKARUn01G0150920.1"/>
    <property type="gene ID" value="TraesKARUn01G0150920"/>
</dbReference>
<dbReference type="Gramene" id="TraesKARUn01G0151220.1">
    <property type="protein sequence ID" value="cds.TraesKARUn01G0151220.1"/>
    <property type="gene ID" value="TraesKARUn01G0151220"/>
</dbReference>
<dbReference type="Gramene" id="TraesKARUn01G0151260.1">
    <property type="protein sequence ID" value="cds.TraesKARUn01G0151260.1"/>
    <property type="gene ID" value="TraesKARUn01G0151260"/>
</dbReference>
<dbReference type="Gramene" id="TraesKARUn01G0151430.1">
    <property type="protein sequence ID" value="cds.TraesKARUn01G0151430.1"/>
    <property type="gene ID" value="TraesKARUn01G0151430"/>
</dbReference>
<dbReference type="Gramene" id="TraesKARUn01G0151620.1">
    <property type="protein sequence ID" value="cds.TraesKARUn01G0151620.1"/>
    <property type="gene ID" value="TraesKARUn01G0151620"/>
</dbReference>
<dbReference type="Gramene" id="TraesKARUn01G0151720.1">
    <property type="protein sequence ID" value="cds.TraesKARUn01G0151720.1"/>
    <property type="gene ID" value="TraesKARUn01G0151720"/>
</dbReference>
<dbReference type="Gramene" id="TraesKARUn01G0151860.1">
    <property type="protein sequence ID" value="cds.TraesKARUn01G0151860.1"/>
    <property type="gene ID" value="TraesKARUn01G0151860"/>
</dbReference>
<dbReference type="Gramene" id="TraesKARUn01G0151870.1">
    <property type="protein sequence ID" value="cds.TraesKARUn01G0151870.1"/>
    <property type="gene ID" value="TraesKARUn01G0151870"/>
</dbReference>
<dbReference type="Gramene" id="TraesKARUn01G0152250.1">
    <property type="protein sequence ID" value="cds.TraesKARUn01G0152250.1"/>
    <property type="gene ID" value="TraesKARUn01G0152250"/>
</dbReference>
<dbReference type="Gramene" id="TraesKARUn01G0152300.1">
    <property type="protein sequence ID" value="cds.TraesKARUn01G0152300.1"/>
    <property type="gene ID" value="TraesKARUn01G0152300"/>
</dbReference>
<dbReference type="Gramene" id="TraesKARUn01G0152370.1">
    <property type="protein sequence ID" value="cds.TraesKARUn01G0152370.1"/>
    <property type="gene ID" value="TraesKARUn01G0152370"/>
</dbReference>
<dbReference type="Gramene" id="TraesKARUn01G0152890.1">
    <property type="protein sequence ID" value="cds.TraesKARUn01G0152890.1"/>
    <property type="gene ID" value="TraesKARUn01G0152890"/>
</dbReference>
<dbReference type="Gramene" id="TraesKARUn01G0153300.1">
    <property type="protein sequence ID" value="cds.TraesKARUn01G0153300.1"/>
    <property type="gene ID" value="TraesKARUn01G0153300"/>
</dbReference>
<dbReference type="Gramene" id="TraesKARUn01G0153860.1">
    <property type="protein sequence ID" value="cds.TraesKARUn01G0153860.1"/>
    <property type="gene ID" value="TraesKARUn01G0153860"/>
</dbReference>
<dbReference type="Gramene" id="TraesKARUn01G0154030.1">
    <property type="protein sequence ID" value="cds.TraesKARUn01G0154030.1"/>
    <property type="gene ID" value="TraesKARUn01G0154030"/>
</dbReference>
<dbReference type="Gramene" id="TraesKARUn01G0154040.1">
    <property type="protein sequence ID" value="cds.TraesKARUn01G0154040.1"/>
    <property type="gene ID" value="TraesKARUn01G0154040"/>
</dbReference>
<dbReference type="Gramene" id="TraesKARUn01G0155110.1">
    <property type="protein sequence ID" value="cds.TraesKARUn01G0155110.1"/>
    <property type="gene ID" value="TraesKARUn01G0155110"/>
</dbReference>
<dbReference type="Gramene" id="TraesKARUn01G0155670.1">
    <property type="protein sequence ID" value="cds.TraesKARUn01G0155670.1"/>
    <property type="gene ID" value="TraesKARUn01G0155670"/>
</dbReference>
<dbReference type="Gramene" id="TraesKARUn01G0155760.1">
    <property type="protein sequence ID" value="cds.TraesKARUn01G0155760.1"/>
    <property type="gene ID" value="TraesKARUn01G0155760"/>
</dbReference>
<dbReference type="Gramene" id="TraesKARUn01G0155950.1">
    <property type="protein sequence ID" value="cds.TraesKARUn01G0155950.1"/>
    <property type="gene ID" value="TraesKARUn01G0155950"/>
</dbReference>
<dbReference type="Gramene" id="TraesKARUn01G0156470.1">
    <property type="protein sequence ID" value="cds.TraesKARUn01G0156470.1"/>
    <property type="gene ID" value="TraesKARUn01G0156470"/>
</dbReference>
<dbReference type="Gramene" id="TraesKARUn01G0156580.1">
    <property type="protein sequence ID" value="cds.TraesKARUn01G0156580.1"/>
    <property type="gene ID" value="TraesKARUn01G0156580"/>
</dbReference>
<dbReference type="Gramene" id="TraesKARUn01G0156840.1">
    <property type="protein sequence ID" value="cds.TraesKARUn01G0156840.1"/>
    <property type="gene ID" value="TraesKARUn01G0156840"/>
</dbReference>
<dbReference type="Gramene" id="TraesKARUn01G0157180.1">
    <property type="protein sequence ID" value="cds.TraesKARUn01G0157180.1"/>
    <property type="gene ID" value="TraesKARUn01G0157180"/>
</dbReference>
<dbReference type="Gramene" id="TraesKARUn01G0157430.1">
    <property type="protein sequence ID" value="cds.TraesKARUn01G0157430.1"/>
    <property type="gene ID" value="TraesKARUn01G0157430"/>
</dbReference>
<dbReference type="Gramene" id="TraesKARUn01G0157850.1">
    <property type="protein sequence ID" value="cds.TraesKARUn01G0157850.1"/>
    <property type="gene ID" value="TraesKARUn01G0157850"/>
</dbReference>
<dbReference type="Gramene" id="TraesKARUn01G0157950.1">
    <property type="protein sequence ID" value="cds.TraesKARUn01G0157950.1"/>
    <property type="gene ID" value="TraesKARUn01G0157950"/>
</dbReference>
<dbReference type="Gramene" id="TraesKARUn01G0158030.1">
    <property type="protein sequence ID" value="cds.TraesKARUn01G0158030.1"/>
    <property type="gene ID" value="TraesKARUn01G0158030"/>
</dbReference>
<dbReference type="Gramene" id="TraesKARUn01G0158160.1">
    <property type="protein sequence ID" value="cds.TraesKARUn01G0158160.1"/>
    <property type="gene ID" value="TraesKARUn01G0158160"/>
</dbReference>
<dbReference type="Gramene" id="TraesKARUn01G0158200.1">
    <property type="protein sequence ID" value="cds.TraesKARUn01G0158200.1"/>
    <property type="gene ID" value="TraesKARUn01G0158200"/>
</dbReference>
<dbReference type="Gramene" id="TraesKARUn01G0158210.1">
    <property type="protein sequence ID" value="cds.TraesKARUn01G0158210.1"/>
    <property type="gene ID" value="TraesKARUn01G0158210"/>
</dbReference>
<dbReference type="Gramene" id="TraesKARUn01G0158590.1">
    <property type="protein sequence ID" value="cds.TraesKARUn01G0158590.1"/>
    <property type="gene ID" value="TraesKARUn01G0158590"/>
</dbReference>
<dbReference type="Gramene" id="TraesKARUn01G0158970.1">
    <property type="protein sequence ID" value="cds.TraesKARUn01G0158970.1"/>
    <property type="gene ID" value="TraesKARUn01G0158970"/>
</dbReference>
<dbReference type="Gramene" id="TraesKARUn01G0159260.1">
    <property type="protein sequence ID" value="cds.TraesKARUn01G0159260.1"/>
    <property type="gene ID" value="TraesKARUn01G0159260"/>
</dbReference>
<dbReference type="Gramene" id="TraesKARUn01G0159480.1">
    <property type="protein sequence ID" value="cds.TraesKARUn01G0159480.1"/>
    <property type="gene ID" value="TraesKARUn01G0159480"/>
</dbReference>
<dbReference type="Gramene" id="TraesKARUn01G0159530.1">
    <property type="protein sequence ID" value="cds.TraesKARUn01G0159530.1"/>
    <property type="gene ID" value="TraesKARUn01G0159530"/>
</dbReference>
<dbReference type="Gramene" id="TraesKARUn01G0159550.1">
    <property type="protein sequence ID" value="cds.TraesKARUn01G0159550.1"/>
    <property type="gene ID" value="TraesKARUn01G0159550"/>
</dbReference>
<dbReference type="Gramene" id="TraesKARUn01G0159690.1">
    <property type="protein sequence ID" value="cds.TraesKARUn01G0159690.1"/>
    <property type="gene ID" value="TraesKARUn01G0159690"/>
</dbReference>
<dbReference type="Gramene" id="TraesKARUn01G0159790.1">
    <property type="protein sequence ID" value="cds.TraesKARUn01G0159790.1"/>
    <property type="gene ID" value="TraesKARUn01G0159790"/>
</dbReference>
<dbReference type="Gramene" id="TraesKARUn01G0159980.1">
    <property type="protein sequence ID" value="cds.TraesKARUn01G0159980.1"/>
    <property type="gene ID" value="TraesKARUn01G0159980"/>
</dbReference>
<dbReference type="Gramene" id="TraesKARUn01G0159990.1">
    <property type="protein sequence ID" value="cds.TraesKARUn01G0159990.1"/>
    <property type="gene ID" value="TraesKARUn01G0159990"/>
</dbReference>
<dbReference type="Gramene" id="TraesKARUn01G0160080.1">
    <property type="protein sequence ID" value="cds.TraesKARUn01G0160080.1"/>
    <property type="gene ID" value="TraesKARUn01G0160080"/>
</dbReference>
<dbReference type="Gramene" id="TraesKARUn01G0160350.1">
    <property type="protein sequence ID" value="cds.TraesKARUn01G0160350.1"/>
    <property type="gene ID" value="TraesKARUn01G0160350"/>
</dbReference>
<dbReference type="Gramene" id="TraesKARUn01G0160790.1">
    <property type="protein sequence ID" value="cds.TraesKARUn01G0160790.1"/>
    <property type="gene ID" value="TraesKARUn01G0160790"/>
</dbReference>
<dbReference type="Gramene" id="TraesKARUn01G0160820.1">
    <property type="protein sequence ID" value="cds.TraesKARUn01G0160820.1"/>
    <property type="gene ID" value="TraesKARUn01G0160820"/>
</dbReference>
<dbReference type="Gramene" id="TraesKARUn01G0161190.1">
    <property type="protein sequence ID" value="cds.TraesKARUn01G0161190.1"/>
    <property type="gene ID" value="TraesKARUn01G0161190"/>
</dbReference>
<dbReference type="Gramene" id="TraesKARUn01G0161450.1">
    <property type="protein sequence ID" value="cds.TraesKARUn01G0161450.1"/>
    <property type="gene ID" value="TraesKARUn01G0161450"/>
</dbReference>
<dbReference type="Gramene" id="TraesKARUn01G0161480.1">
    <property type="protein sequence ID" value="cds.TraesKARUn01G0161480.1"/>
    <property type="gene ID" value="TraesKARUn01G0161480"/>
</dbReference>
<dbReference type="Gramene" id="TraesKARUn01G0161660.1">
    <property type="protein sequence ID" value="cds.TraesKARUn01G0161660.1"/>
    <property type="gene ID" value="TraesKARUn01G0161660"/>
</dbReference>
<dbReference type="Gramene" id="TraesKARUn01G0161720.1">
    <property type="protein sequence ID" value="cds.TraesKARUn01G0161720.1"/>
    <property type="gene ID" value="TraesKARUn01G0161720"/>
</dbReference>
<dbReference type="Gramene" id="TraesKARUn01G0161770.1">
    <property type="protein sequence ID" value="cds.TraesKARUn01G0161770.1"/>
    <property type="gene ID" value="TraesKARUn01G0161770"/>
</dbReference>
<dbReference type="Gramene" id="TraesKARUn01G0161790.1">
    <property type="protein sequence ID" value="cds.TraesKARUn01G0161790.1"/>
    <property type="gene ID" value="TraesKARUn01G0161790"/>
</dbReference>
<dbReference type="Gramene" id="TraesKARUn01G0161970.1">
    <property type="protein sequence ID" value="cds.TraesKARUn01G0161970.1"/>
    <property type="gene ID" value="TraesKARUn01G0161970"/>
</dbReference>
<dbReference type="Gramene" id="TraesKARUn01G0162610.1">
    <property type="protein sequence ID" value="cds.TraesKARUn01G0162610.1"/>
    <property type="gene ID" value="TraesKARUn01G0162610"/>
</dbReference>
<dbReference type="Gramene" id="TraesKARUn01G0163080.1">
    <property type="protein sequence ID" value="cds.TraesKARUn01G0163080.1"/>
    <property type="gene ID" value="TraesKARUn01G0163080"/>
</dbReference>
<dbReference type="Gramene" id="TraesKARUn01G0163200.1">
    <property type="protein sequence ID" value="cds.TraesKARUn01G0163200.1"/>
    <property type="gene ID" value="TraesKARUn01G0163200"/>
</dbReference>
<dbReference type="Gramene" id="TraesKARUn01G0163570.1">
    <property type="protein sequence ID" value="cds.TraesKARUn01G0163570.1"/>
    <property type="gene ID" value="TraesKARUn01G0163570"/>
</dbReference>
<dbReference type="Gramene" id="TraesKARUn01G0163660.1">
    <property type="protein sequence ID" value="cds.TraesKARUn01G0163660.1"/>
    <property type="gene ID" value="TraesKARUn01G0163660"/>
</dbReference>
<dbReference type="Gramene" id="TraesKARUn01G0163830.1">
    <property type="protein sequence ID" value="cds.TraesKARUn01G0163830.1"/>
    <property type="gene ID" value="TraesKARUn01G0163830"/>
</dbReference>
<dbReference type="Gramene" id="TraesKARUn01G0163920.1">
    <property type="protein sequence ID" value="cds.TraesKARUn01G0163920.1"/>
    <property type="gene ID" value="TraesKARUn01G0163920"/>
</dbReference>
<dbReference type="Gramene" id="TraesKARUn01G0164050.1">
    <property type="protein sequence ID" value="cds.TraesKARUn01G0164050.1"/>
    <property type="gene ID" value="TraesKARUn01G0164050"/>
</dbReference>
<dbReference type="Gramene" id="TraesKARUn01G0164290.1">
    <property type="protein sequence ID" value="cds.TraesKARUn01G0164290.1"/>
    <property type="gene ID" value="TraesKARUn01G0164290"/>
</dbReference>
<dbReference type="Gramene" id="TraesKARUn01G0164470.1">
    <property type="protein sequence ID" value="cds.TraesKARUn01G0164470.1"/>
    <property type="gene ID" value="TraesKARUn01G0164470"/>
</dbReference>
<dbReference type="Gramene" id="TraesKARUn01G0164620.1">
    <property type="protein sequence ID" value="cds.TraesKARUn01G0164620.1"/>
    <property type="gene ID" value="TraesKARUn01G0164620"/>
</dbReference>
<dbReference type="Gramene" id="TraesKARUn01G0164830.1">
    <property type="protein sequence ID" value="cds.TraesKARUn01G0164830.1"/>
    <property type="gene ID" value="TraesKARUn01G0164830"/>
</dbReference>
<dbReference type="Gramene" id="TraesKARUn01G0164880.1">
    <property type="protein sequence ID" value="cds.TraesKARUn01G0164880.1"/>
    <property type="gene ID" value="TraesKARUn01G0164880"/>
</dbReference>
<dbReference type="Gramene" id="TraesKARUn01G0164900.1">
    <property type="protein sequence ID" value="cds.TraesKARUn01G0164900.1"/>
    <property type="gene ID" value="TraesKARUn01G0164900"/>
</dbReference>
<dbReference type="Gramene" id="TraesKARUn01G0165090.1">
    <property type="protein sequence ID" value="cds.TraesKARUn01G0165090.1"/>
    <property type="gene ID" value="TraesKARUn01G0165090"/>
</dbReference>
<dbReference type="Gramene" id="TraesKARUn01G0165240.1">
    <property type="protein sequence ID" value="cds.TraesKARUn01G0165240.1"/>
    <property type="gene ID" value="TraesKARUn01G0165240"/>
</dbReference>
<dbReference type="Gramene" id="TraesKARUn01G0165400.1">
    <property type="protein sequence ID" value="cds.TraesKARUn01G0165400.1"/>
    <property type="gene ID" value="TraesKARUn01G0165400"/>
</dbReference>
<dbReference type="Gramene" id="TraesKARUn01G0166180.1">
    <property type="protein sequence ID" value="cds.TraesKARUn01G0166180.1"/>
    <property type="gene ID" value="TraesKARUn01G0166180"/>
</dbReference>
<dbReference type="Gramene" id="TraesKARUn01G0167020.1">
    <property type="protein sequence ID" value="cds.TraesKARUn01G0167020.1"/>
    <property type="gene ID" value="TraesKARUn01G0167020"/>
</dbReference>
<dbReference type="Gramene" id="TraesKARUn01G0167210.1">
    <property type="protein sequence ID" value="cds.TraesKARUn01G0167210.1"/>
    <property type="gene ID" value="TraesKARUn01G0167210"/>
</dbReference>
<dbReference type="Gramene" id="TraesKARUn01G0167270.1">
    <property type="protein sequence ID" value="cds.TraesKARUn01G0167270.1"/>
    <property type="gene ID" value="TraesKARUn01G0167270"/>
</dbReference>
<dbReference type="Gramene" id="TraesKARUn01G0167520.1">
    <property type="protein sequence ID" value="cds.TraesKARUn01G0167520.1"/>
    <property type="gene ID" value="TraesKARUn01G0167520"/>
</dbReference>
<dbReference type="Gramene" id="TraesKARUn01G0167860.1">
    <property type="protein sequence ID" value="cds.TraesKARUn01G0167860.1"/>
    <property type="gene ID" value="TraesKARUn01G0167860"/>
</dbReference>
<dbReference type="Gramene" id="TraesKARUn01G0167980.1">
    <property type="protein sequence ID" value="cds.TraesKARUn01G0167980.1"/>
    <property type="gene ID" value="TraesKARUn01G0167980"/>
</dbReference>
<dbReference type="Gramene" id="TraesKARUn01G0168300.1">
    <property type="protein sequence ID" value="cds.TraesKARUn01G0168300.1"/>
    <property type="gene ID" value="TraesKARUn01G0168300"/>
</dbReference>
<dbReference type="Gramene" id="TraesKARUn01G0168450.1">
    <property type="protein sequence ID" value="cds.TraesKARUn01G0168450.1"/>
    <property type="gene ID" value="TraesKARUn01G0168450"/>
</dbReference>
<dbReference type="Gramene" id="TraesKARUn01G0168550.1">
    <property type="protein sequence ID" value="cds.TraesKARUn01G0168550.1"/>
    <property type="gene ID" value="TraesKARUn01G0168550"/>
</dbReference>
<dbReference type="Gramene" id="TraesKARUn01G0168630.1">
    <property type="protein sequence ID" value="cds.TraesKARUn01G0168630.1"/>
    <property type="gene ID" value="TraesKARUn01G0168630"/>
</dbReference>
<dbReference type="Gramene" id="TraesKARUn01G0168750.1">
    <property type="protein sequence ID" value="cds.TraesKARUn01G0168750.1"/>
    <property type="gene ID" value="TraesKARUn01G0168750"/>
</dbReference>
<dbReference type="Gramene" id="TraesKARUn01G0168770.1">
    <property type="protein sequence ID" value="cds.TraesKARUn01G0168770.1"/>
    <property type="gene ID" value="TraesKARUn01G0168770"/>
</dbReference>
<dbReference type="Gramene" id="TraesKARUn01G0168850.1">
    <property type="protein sequence ID" value="cds.TraesKARUn01G0168850.1"/>
    <property type="gene ID" value="TraesKARUn01G0168850"/>
</dbReference>
<dbReference type="Gramene" id="TraesKARUn01G0168860.1">
    <property type="protein sequence ID" value="cds.TraesKARUn01G0168860.1"/>
    <property type="gene ID" value="TraesKARUn01G0168860"/>
</dbReference>
<dbReference type="Gramene" id="TraesKARUn01G0169150.1">
    <property type="protein sequence ID" value="cds.TraesKARUn01G0169150.1"/>
    <property type="gene ID" value="TraesKARUn01G0169150"/>
</dbReference>
<dbReference type="Gramene" id="TraesKARUn01G0169440.1">
    <property type="protein sequence ID" value="cds.TraesKARUn01G0169440.1"/>
    <property type="gene ID" value="TraesKARUn01G0169440"/>
</dbReference>
<dbReference type="Gramene" id="TraesKARUn01G0169470.1">
    <property type="protein sequence ID" value="cds.TraesKARUn01G0169470.1"/>
    <property type="gene ID" value="TraesKARUn01G0169470"/>
</dbReference>
<dbReference type="Gramene" id="TraesKARUn01G0169540.1">
    <property type="protein sequence ID" value="cds.TraesKARUn01G0169540.1"/>
    <property type="gene ID" value="TraesKARUn01G0169540"/>
</dbReference>
<dbReference type="Gramene" id="TraesKARUn01G0169680.1">
    <property type="protein sequence ID" value="cds.TraesKARUn01G0169680.1"/>
    <property type="gene ID" value="TraesKARUn01G0169680"/>
</dbReference>
<dbReference type="Gramene" id="TraesKARUn01G0169790.1">
    <property type="protein sequence ID" value="cds.TraesKARUn01G0169790.1"/>
    <property type="gene ID" value="TraesKARUn01G0169790"/>
</dbReference>
<dbReference type="Gramene" id="TraesKARUn01G0169950.1">
    <property type="protein sequence ID" value="cds.TraesKARUn01G0169950.1"/>
    <property type="gene ID" value="TraesKARUn01G0169950"/>
</dbReference>
<dbReference type="Gramene" id="TraesKARUn01G0170150.1">
    <property type="protein sequence ID" value="cds.TraesKARUn01G0170150.1"/>
    <property type="gene ID" value="TraesKARUn01G0170150"/>
</dbReference>
<dbReference type="Gramene" id="TraesKARUn01G0170190.1">
    <property type="protein sequence ID" value="cds.TraesKARUn01G0170190.1"/>
    <property type="gene ID" value="TraesKARUn01G0170190"/>
</dbReference>
<dbReference type="Gramene" id="TraesKARUn01G0170490.1">
    <property type="protein sequence ID" value="cds.TraesKARUn01G0170490.1"/>
    <property type="gene ID" value="TraesKARUn01G0170490"/>
</dbReference>
<dbReference type="Gramene" id="TraesKARUn01G0170590.1">
    <property type="protein sequence ID" value="cds.TraesKARUn01G0170590.1"/>
    <property type="gene ID" value="TraesKARUn01G0170590"/>
</dbReference>
<dbReference type="Gramene" id="TraesKARUn01G0170620.1">
    <property type="protein sequence ID" value="cds.TraesKARUn01G0170620.1"/>
    <property type="gene ID" value="TraesKARUn01G0170620"/>
</dbReference>
<dbReference type="Gramene" id="TraesKARUn01G0170930.1">
    <property type="protein sequence ID" value="cds.TraesKARUn01G0170930.1"/>
    <property type="gene ID" value="TraesKARUn01G0170930"/>
</dbReference>
<dbReference type="Gramene" id="TraesKARUn01G0171120.1">
    <property type="protein sequence ID" value="cds.TraesKARUn01G0171120.1"/>
    <property type="gene ID" value="TraesKARUn01G0171120"/>
</dbReference>
<dbReference type="Gramene" id="TraesKARUn01G0171250.1">
    <property type="protein sequence ID" value="cds.TraesKARUn01G0171250.1"/>
    <property type="gene ID" value="TraesKARUn01G0171250"/>
</dbReference>
<dbReference type="Gramene" id="TraesKARUn01G0171360.1">
    <property type="protein sequence ID" value="cds.TraesKARUn01G0171360.1"/>
    <property type="gene ID" value="TraesKARUn01G0171360"/>
</dbReference>
<dbReference type="Gramene" id="TraesKARUn01G0171410.1">
    <property type="protein sequence ID" value="cds.TraesKARUn01G0171410.1"/>
    <property type="gene ID" value="TraesKARUn01G0171410"/>
</dbReference>
<dbReference type="Gramene" id="TraesKARUn01G0171560.1">
    <property type="protein sequence ID" value="cds.TraesKARUn01G0171560.1"/>
    <property type="gene ID" value="TraesKARUn01G0171560"/>
</dbReference>
<dbReference type="Gramene" id="TraesKARUn01G0171710.1">
    <property type="protein sequence ID" value="cds.TraesKARUn01G0171710.1"/>
    <property type="gene ID" value="TraesKARUn01G0171710"/>
</dbReference>
<dbReference type="Gramene" id="TraesKARUn01G0171860.1">
    <property type="protein sequence ID" value="cds.TraesKARUn01G0171860.1"/>
    <property type="gene ID" value="TraesKARUn01G0171860"/>
</dbReference>
<dbReference type="Gramene" id="TraesKARUn01G0171910.1">
    <property type="protein sequence ID" value="cds.TraesKARUn01G0171910.1"/>
    <property type="gene ID" value="TraesKARUn01G0171910"/>
</dbReference>
<dbReference type="Gramene" id="TraesKARUn01G0172060.1">
    <property type="protein sequence ID" value="cds.TraesKARUn01G0172060.1"/>
    <property type="gene ID" value="TraesKARUn01G0172060"/>
</dbReference>
<dbReference type="Gramene" id="TraesKARUn01G0172140.1">
    <property type="protein sequence ID" value="cds.TraesKARUn01G0172140.1"/>
    <property type="gene ID" value="TraesKARUn01G0172140"/>
</dbReference>
<dbReference type="Gramene" id="TraesKARUn01G0172800.1">
    <property type="protein sequence ID" value="cds.TraesKARUn01G0172800.1"/>
    <property type="gene ID" value="TraesKARUn01G0172800"/>
</dbReference>
<dbReference type="Gramene" id="TraesKARUn01G0172890.1">
    <property type="protein sequence ID" value="cds.TraesKARUn01G0172890.1"/>
    <property type="gene ID" value="TraesKARUn01G0172890"/>
</dbReference>
<dbReference type="Gramene" id="TraesKARUn01G0173220.1">
    <property type="protein sequence ID" value="cds.TraesKARUn01G0173220.1"/>
    <property type="gene ID" value="TraesKARUn01G0173220"/>
</dbReference>
<dbReference type="Gramene" id="TraesKARUn01G0173320.1">
    <property type="protein sequence ID" value="cds.TraesKARUn01G0173320.1"/>
    <property type="gene ID" value="TraesKARUn01G0173320"/>
</dbReference>
<dbReference type="Gramene" id="TraesKARUn01G0173530.1">
    <property type="protein sequence ID" value="cds.TraesKARUn01G0173530.1"/>
    <property type="gene ID" value="TraesKARUn01G0173530"/>
</dbReference>
<dbReference type="Gramene" id="TraesKARUn01G0173640.1">
    <property type="protein sequence ID" value="cds.TraesKARUn01G0173640.1"/>
    <property type="gene ID" value="TraesKARUn01G0173640"/>
</dbReference>
<dbReference type="Gramene" id="TraesKARUn01G0173730.1">
    <property type="protein sequence ID" value="cds.TraesKARUn01G0173730.1"/>
    <property type="gene ID" value="TraesKARUn01G0173730"/>
</dbReference>
<dbReference type="Gramene" id="TraesKARUn01G0173830.1">
    <property type="protein sequence ID" value="cds.TraesKARUn01G0173830.1"/>
    <property type="gene ID" value="TraesKARUn01G0173830"/>
</dbReference>
<dbReference type="Gramene" id="TraesKARUn01G0173970.1">
    <property type="protein sequence ID" value="cds.TraesKARUn01G0173970.1"/>
    <property type="gene ID" value="TraesKARUn01G0173970"/>
</dbReference>
<dbReference type="Gramene" id="TraesKARUn01G0174080.1">
    <property type="protein sequence ID" value="cds.TraesKARUn01G0174080.1"/>
    <property type="gene ID" value="TraesKARUn01G0174080"/>
</dbReference>
<dbReference type="Gramene" id="TraesKARUn01G0174520.1">
    <property type="protein sequence ID" value="cds.TraesKARUn01G0174520.1"/>
    <property type="gene ID" value="TraesKARUn01G0174520"/>
</dbReference>
<dbReference type="Gramene" id="TraesKARUn01G0174780.1">
    <property type="protein sequence ID" value="cds.TraesKARUn01G0174780.1"/>
    <property type="gene ID" value="TraesKARUn01G0174780"/>
</dbReference>
<dbReference type="Gramene" id="TraesKARUn01G0174830.1">
    <property type="protein sequence ID" value="cds.TraesKARUn01G0174830.1"/>
    <property type="gene ID" value="TraesKARUn01G0174830"/>
</dbReference>
<dbReference type="Gramene" id="TraesKARUn01G0175080.1">
    <property type="protein sequence ID" value="cds.TraesKARUn01G0175080.1"/>
    <property type="gene ID" value="TraesKARUn01G0175080"/>
</dbReference>
<dbReference type="Gramene" id="TraesKARUn01G0175210.1">
    <property type="protein sequence ID" value="cds.TraesKARUn01G0175210.1"/>
    <property type="gene ID" value="TraesKARUn01G0175210"/>
</dbReference>
<dbReference type="Gramene" id="TraesKARUn01G0175380.1">
    <property type="protein sequence ID" value="cds.TraesKARUn01G0175380.1"/>
    <property type="gene ID" value="TraesKARUn01G0175380"/>
</dbReference>
<dbReference type="Gramene" id="TraesKARUn01G0175590.1">
    <property type="protein sequence ID" value="cds.TraesKARUn01G0175590.1"/>
    <property type="gene ID" value="TraesKARUn01G0175590"/>
</dbReference>
<dbReference type="Gramene" id="TraesKARUn01G0175640.1">
    <property type="protein sequence ID" value="cds.TraesKARUn01G0175640.1"/>
    <property type="gene ID" value="TraesKARUn01G0175640"/>
</dbReference>
<dbReference type="Gramene" id="TraesKARUn01G0176320.1">
    <property type="protein sequence ID" value="cds.TraesKARUn01G0176320.1"/>
    <property type="gene ID" value="TraesKARUn01G0176320"/>
</dbReference>
<dbReference type="Gramene" id="TraesKARUn01G0176560.1">
    <property type="protein sequence ID" value="cds.TraesKARUn01G0176560.1"/>
    <property type="gene ID" value="TraesKARUn01G0176560"/>
</dbReference>
<dbReference type="Gramene" id="TraesKARUn01G0176610.1">
    <property type="protein sequence ID" value="cds.TraesKARUn01G0176610.1"/>
    <property type="gene ID" value="TraesKARUn01G0176610"/>
</dbReference>
<dbReference type="Gramene" id="TraesKARUn01G0176700.1">
    <property type="protein sequence ID" value="cds.TraesKARUn01G0176700.1"/>
    <property type="gene ID" value="TraesKARUn01G0176700"/>
</dbReference>
<dbReference type="Gramene" id="TraesKARUn01G0176800.1">
    <property type="protein sequence ID" value="cds.TraesKARUn01G0176800.1"/>
    <property type="gene ID" value="TraesKARUn01G0176800"/>
</dbReference>
<dbReference type="Gramene" id="TraesKARUn01G0177090.1">
    <property type="protein sequence ID" value="cds.TraesKARUn01G0177090.1"/>
    <property type="gene ID" value="TraesKARUn01G0177090"/>
</dbReference>
<dbReference type="Gramene" id="TraesKARUn01G0177180.1">
    <property type="protein sequence ID" value="cds.TraesKARUn01G0177180.1"/>
    <property type="gene ID" value="TraesKARUn01G0177180"/>
</dbReference>
<dbReference type="Gramene" id="TraesKARUn01G0177430.1">
    <property type="protein sequence ID" value="cds.TraesKARUn01G0177430.1"/>
    <property type="gene ID" value="TraesKARUn01G0177430"/>
</dbReference>
<dbReference type="Gramene" id="TraesKARUn01G0177620.1">
    <property type="protein sequence ID" value="cds.TraesKARUn01G0177620.1"/>
    <property type="gene ID" value="TraesKARUn01G0177620"/>
</dbReference>
<dbReference type="Gramene" id="TraesKARUn01G0177740.1">
    <property type="protein sequence ID" value="cds.TraesKARUn01G0177740.1"/>
    <property type="gene ID" value="TraesKARUn01G0177740"/>
</dbReference>
<dbReference type="Gramene" id="TraesKARUn01G0177860.1">
    <property type="protein sequence ID" value="cds.TraesKARUn01G0177860.1"/>
    <property type="gene ID" value="TraesKARUn01G0177860"/>
</dbReference>
<dbReference type="Gramene" id="TraesKARUn01G0178040.1">
    <property type="protein sequence ID" value="cds.TraesKARUn01G0178040.1"/>
    <property type="gene ID" value="TraesKARUn01G0178040"/>
</dbReference>
<dbReference type="Gramene" id="TraesKARUn01G0178120.1">
    <property type="protein sequence ID" value="cds.TraesKARUn01G0178120.1"/>
    <property type="gene ID" value="TraesKARUn01G0178120"/>
</dbReference>
<dbReference type="Gramene" id="TraesKARUn01G0178190.1">
    <property type="protein sequence ID" value="cds.TraesKARUn01G0178190.1"/>
    <property type="gene ID" value="TraesKARUn01G0178190"/>
</dbReference>
<dbReference type="Gramene" id="TraesKARUn01G0178300.1">
    <property type="protein sequence ID" value="cds.TraesKARUn01G0178300.1"/>
    <property type="gene ID" value="TraesKARUn01G0178300"/>
</dbReference>
<dbReference type="Gramene" id="TraesKARUn01G0178520.1">
    <property type="protein sequence ID" value="cds.TraesKARUn01G0178520.1"/>
    <property type="gene ID" value="TraesKARUn01G0178520"/>
</dbReference>
<dbReference type="Gramene" id="TraesKARUn01G0178580.1">
    <property type="protein sequence ID" value="cds.TraesKARUn01G0178580.1"/>
    <property type="gene ID" value="TraesKARUn01G0178580"/>
</dbReference>
<dbReference type="Gramene" id="TraesKARUn01G0178720.1">
    <property type="protein sequence ID" value="cds.TraesKARUn01G0178720.1"/>
    <property type="gene ID" value="TraesKARUn01G0178720"/>
</dbReference>
<dbReference type="Gramene" id="TraesKARUn01G0178850.1">
    <property type="protein sequence ID" value="cds.TraesKARUn01G0178850.1"/>
    <property type="gene ID" value="TraesKARUn01G0178850"/>
</dbReference>
<dbReference type="Gramene" id="TraesKARUn01G0178940.1">
    <property type="protein sequence ID" value="cds.TraesKARUn01G0178940.1"/>
    <property type="gene ID" value="TraesKARUn01G0178940"/>
</dbReference>
<dbReference type="Gramene" id="TraesKARUn01G0179190.1">
    <property type="protein sequence ID" value="cds.TraesKARUn01G0179190.1"/>
    <property type="gene ID" value="TraesKARUn01G0179190"/>
</dbReference>
<dbReference type="Gramene" id="TraesKARUn01G0179310.1">
    <property type="protein sequence ID" value="cds.TraesKARUn01G0179310.1"/>
    <property type="gene ID" value="TraesKARUn01G0179310"/>
</dbReference>
<dbReference type="Gramene" id="TraesKARUn01G0179530.1">
    <property type="protein sequence ID" value="cds.TraesKARUn01G0179530.1"/>
    <property type="gene ID" value="TraesKARUn01G0179530"/>
</dbReference>
<dbReference type="Gramene" id="TraesKARUn01G0179690.1">
    <property type="protein sequence ID" value="cds.TraesKARUn01G0179690.1"/>
    <property type="gene ID" value="TraesKARUn01G0179690"/>
</dbReference>
<dbReference type="Gramene" id="TraesKARUn01G0179850.1">
    <property type="protein sequence ID" value="cds.TraesKARUn01G0179850.1"/>
    <property type="gene ID" value="TraesKARUn01G0179850"/>
</dbReference>
<dbReference type="Gramene" id="TraesKARUn01G0180130.1">
    <property type="protein sequence ID" value="cds.TraesKARUn01G0180130.1"/>
    <property type="gene ID" value="TraesKARUn01G0180130"/>
</dbReference>
<dbReference type="Gramene" id="TraesKARUn01G0180260.1">
    <property type="protein sequence ID" value="cds.TraesKARUn01G0180260.1"/>
    <property type="gene ID" value="TraesKARUn01G0180260"/>
</dbReference>
<dbReference type="Gramene" id="TraesKARUn01G0180460.1">
    <property type="protein sequence ID" value="cds.TraesKARUn01G0180460.1"/>
    <property type="gene ID" value="TraesKARUn01G0180460"/>
</dbReference>
<dbReference type="Gramene" id="TraesKARUn01G0180510.1">
    <property type="protein sequence ID" value="cds.TraesKARUn01G0180510.1"/>
    <property type="gene ID" value="TraesKARUn01G0180510"/>
</dbReference>
<dbReference type="Gramene" id="TraesKARUn01G0180770.1">
    <property type="protein sequence ID" value="cds.TraesKARUn01G0180770.1"/>
    <property type="gene ID" value="TraesKARUn01G0180770"/>
</dbReference>
<dbReference type="Gramene" id="TraesKARUn01G0181000.1">
    <property type="protein sequence ID" value="cds.TraesKARUn01G0181000.1"/>
    <property type="gene ID" value="TraesKARUn01G0181000"/>
</dbReference>
<dbReference type="Gramene" id="TraesKARUn01G0181180.1">
    <property type="protein sequence ID" value="cds.TraesKARUn01G0181180.1"/>
    <property type="gene ID" value="TraesKARUn01G0181180"/>
</dbReference>
<dbReference type="Gramene" id="TraesKARUn01G0181680.1">
    <property type="protein sequence ID" value="cds.TraesKARUn01G0181680.1"/>
    <property type="gene ID" value="TraesKARUn01G0181680"/>
</dbReference>
<dbReference type="Gramene" id="TraesKARUn01G0182340.1">
    <property type="protein sequence ID" value="cds.TraesKARUn01G0182340.1"/>
    <property type="gene ID" value="TraesKARUn01G0182340"/>
</dbReference>
<dbReference type="Gramene" id="TraesKARUn01G0183520.1">
    <property type="protein sequence ID" value="cds.TraesKARUn01G0183520.1"/>
    <property type="gene ID" value="TraesKARUn01G0183520"/>
</dbReference>
<dbReference type="Gramene" id="TraesKARUn01G0183640.1">
    <property type="protein sequence ID" value="cds.TraesKARUn01G0183640.1"/>
    <property type="gene ID" value="TraesKARUn01G0183640"/>
</dbReference>
<dbReference type="Gramene" id="TraesKARUn01G0183710.1">
    <property type="protein sequence ID" value="cds.TraesKARUn01G0183710.1"/>
    <property type="gene ID" value="TraesKARUn01G0183710"/>
</dbReference>
<dbReference type="Gramene" id="TraesKARUn01G0183870.1">
    <property type="protein sequence ID" value="cds.TraesKARUn01G0183870.1"/>
    <property type="gene ID" value="TraesKARUn01G0183870"/>
</dbReference>
<dbReference type="Gramene" id="TraesKARUn01G0183890.1">
    <property type="protein sequence ID" value="cds.TraesKARUn01G0183890.1"/>
    <property type="gene ID" value="TraesKARUn01G0183890"/>
</dbReference>
<dbReference type="Gramene" id="TraesKARUn01G0184260.1">
    <property type="protein sequence ID" value="cds.TraesKARUn01G0184260.1"/>
    <property type="gene ID" value="TraesKARUn01G0184260"/>
</dbReference>
<dbReference type="Gramene" id="TraesKARUn01G0184310.1">
    <property type="protein sequence ID" value="cds.TraesKARUn01G0184310.1"/>
    <property type="gene ID" value="TraesKARUn01G0184310"/>
</dbReference>
<dbReference type="Gramene" id="TraesKARUn01G0184420.1">
    <property type="protein sequence ID" value="cds.TraesKARUn01G0184420.1"/>
    <property type="gene ID" value="TraesKARUn01G0184420"/>
</dbReference>
<dbReference type="Gramene" id="TraesKARUn01G0184560.1">
    <property type="protein sequence ID" value="cds.TraesKARUn01G0184560.1"/>
    <property type="gene ID" value="TraesKARUn01G0184560"/>
</dbReference>
<dbReference type="Gramene" id="TraesKARUn01G0184830.1">
    <property type="protein sequence ID" value="cds.TraesKARUn01G0184830.1"/>
    <property type="gene ID" value="TraesKARUn01G0184830"/>
</dbReference>
<dbReference type="Gramene" id="TraesKARUn01G0185670.1">
    <property type="protein sequence ID" value="cds.TraesKARUn01G0185670.1"/>
    <property type="gene ID" value="TraesKARUn01G0185670"/>
</dbReference>
<dbReference type="Gramene" id="TraesKARUn01G0186150.1">
    <property type="protein sequence ID" value="cds.TraesKARUn01G0186150.1"/>
    <property type="gene ID" value="TraesKARUn01G0186150"/>
</dbReference>
<dbReference type="Gramene" id="TraesKARUn01G0186280.1">
    <property type="protein sequence ID" value="cds.TraesKARUn01G0186280.1"/>
    <property type="gene ID" value="TraesKARUn01G0186280"/>
</dbReference>
<dbReference type="Gramene" id="TraesKARUn01G0186410.1">
    <property type="protein sequence ID" value="cds.TraesKARUn01G0186410.1"/>
    <property type="gene ID" value="TraesKARUn01G0186410"/>
</dbReference>
<dbReference type="Gramene" id="TraesKARUn01G0186650.1">
    <property type="protein sequence ID" value="cds.TraesKARUn01G0186650.1"/>
    <property type="gene ID" value="TraesKARUn01G0186650"/>
</dbReference>
<dbReference type="Gramene" id="TraesKARUn01G0186840.1">
    <property type="protein sequence ID" value="cds.TraesKARUn01G0186840.1"/>
    <property type="gene ID" value="TraesKARUn01G0186840"/>
</dbReference>
<dbReference type="Gramene" id="TraesKARUn01G0186910.1">
    <property type="protein sequence ID" value="cds.TraesKARUn01G0186910.1"/>
    <property type="gene ID" value="TraesKARUn01G0186910"/>
</dbReference>
<dbReference type="Gramene" id="TraesKARUn01G0187340.1">
    <property type="protein sequence ID" value="cds.TraesKARUn01G0187340.1"/>
    <property type="gene ID" value="TraesKARUn01G0187340"/>
</dbReference>
<dbReference type="Gramene" id="TraesKARUn01G0187410.1">
    <property type="protein sequence ID" value="cds.TraesKARUn01G0187410.1"/>
    <property type="gene ID" value="TraesKARUn01G0187410"/>
</dbReference>
<dbReference type="Gramene" id="TraesKARUn01G0187580.1">
    <property type="protein sequence ID" value="cds.TraesKARUn01G0187580.1"/>
    <property type="gene ID" value="TraesKARUn01G0187580"/>
</dbReference>
<dbReference type="Gramene" id="TraesKARUn01G0187760.1">
    <property type="protein sequence ID" value="cds.TraesKARUn01G0187760.1"/>
    <property type="gene ID" value="TraesKARUn01G0187760"/>
</dbReference>
<dbReference type="Gramene" id="TraesKARUn01G0187850.1">
    <property type="protein sequence ID" value="cds.TraesKARUn01G0187850.1"/>
    <property type="gene ID" value="TraesKARUn01G0187850"/>
</dbReference>
<dbReference type="Gramene" id="TraesKARUn01G0187870.1">
    <property type="protein sequence ID" value="cds.TraesKARUn01G0187870.1"/>
    <property type="gene ID" value="TraesKARUn01G0187870"/>
</dbReference>
<dbReference type="Gramene" id="TraesKARUn01G0188090.1">
    <property type="protein sequence ID" value="cds.TraesKARUn01G0188090.1"/>
    <property type="gene ID" value="TraesKARUn01G0188090"/>
</dbReference>
<dbReference type="Gramene" id="TraesKARUn01G0188420.1">
    <property type="protein sequence ID" value="cds.TraesKARUn01G0188420.1"/>
    <property type="gene ID" value="TraesKARUn01G0188420"/>
</dbReference>
<dbReference type="Gramene" id="TraesKARUn01G0189100.1">
    <property type="protein sequence ID" value="cds.TraesKARUn01G0189100.1"/>
    <property type="gene ID" value="TraesKARUn01G0189100"/>
</dbReference>
<dbReference type="Gramene" id="TraesKARUn01G0189270.1">
    <property type="protein sequence ID" value="cds.TraesKARUn01G0189270.1"/>
    <property type="gene ID" value="TraesKARUn01G0189270"/>
</dbReference>
<dbReference type="Gramene" id="TraesKARUn01G0189300.1">
    <property type="protein sequence ID" value="cds.TraesKARUn01G0189300.1"/>
    <property type="gene ID" value="TraesKARUn01G0189300"/>
</dbReference>
<dbReference type="Gramene" id="TraesKARUn01G0189460.1">
    <property type="protein sequence ID" value="cds.TraesKARUn01G0189460.1"/>
    <property type="gene ID" value="TraesKARUn01G0189460"/>
</dbReference>
<dbReference type="Gramene" id="TraesKARUn01G0189780.1">
    <property type="protein sequence ID" value="cds.TraesKARUn01G0189780.1"/>
    <property type="gene ID" value="TraesKARUn01G0189780"/>
</dbReference>
<dbReference type="Gramene" id="TraesKARUn01G0189840.1">
    <property type="protein sequence ID" value="cds.TraesKARUn01G0189840.1"/>
    <property type="gene ID" value="TraesKARUn01G0189840"/>
</dbReference>
<dbReference type="Gramene" id="TraesKARUn01G0190100.1">
    <property type="protein sequence ID" value="cds.TraesKARUn01G0190100.1"/>
    <property type="gene ID" value="TraesKARUn01G0190100"/>
</dbReference>
<dbReference type="Gramene" id="TraesKARUn01G0190220.1">
    <property type="protein sequence ID" value="cds.TraesKARUn01G0190220.1"/>
    <property type="gene ID" value="TraesKARUn01G0190220"/>
</dbReference>
<dbReference type="Gramene" id="TraesKARUn01G0190320.1">
    <property type="protein sequence ID" value="cds.TraesKARUn01G0190320.1"/>
    <property type="gene ID" value="TraesKARUn01G0190320"/>
</dbReference>
<dbReference type="Gramene" id="TraesKARUn01G0190440.1">
    <property type="protein sequence ID" value="cds.TraesKARUn01G0190440.1"/>
    <property type="gene ID" value="TraesKARUn01G0190440"/>
</dbReference>
<dbReference type="Gramene" id="TraesKARUn01G0190620.1">
    <property type="protein sequence ID" value="cds.TraesKARUn01G0190620.1"/>
    <property type="gene ID" value="TraesKARUn01G0190620"/>
</dbReference>
<dbReference type="Gramene" id="TraesKARUn01G0190810.1">
    <property type="protein sequence ID" value="cds.TraesKARUn01G0190810.1"/>
    <property type="gene ID" value="TraesKARUn01G0190810"/>
</dbReference>
<dbReference type="Gramene" id="TraesKARUn01G0191100.1">
    <property type="protein sequence ID" value="cds.TraesKARUn01G0191100.1"/>
    <property type="gene ID" value="TraesKARUn01G0191100"/>
</dbReference>
<dbReference type="Gramene" id="TraesKARUn01G0191220.1">
    <property type="protein sequence ID" value="cds.TraesKARUn01G0191220.1"/>
    <property type="gene ID" value="TraesKARUn01G0191220"/>
</dbReference>
<dbReference type="Gramene" id="TraesKARUn01G0191350.1">
    <property type="protein sequence ID" value="cds.TraesKARUn01G0191350.1"/>
    <property type="gene ID" value="TraesKARUn01G0191350"/>
</dbReference>
<dbReference type="Gramene" id="TraesKARUn01G0191670.1">
    <property type="protein sequence ID" value="cds.TraesKARUn01G0191670.1"/>
    <property type="gene ID" value="TraesKARUn01G0191670"/>
</dbReference>
<dbReference type="Gramene" id="TraesKARUn01G0192130.1">
    <property type="protein sequence ID" value="cds.TraesKARUn01G0192130.1"/>
    <property type="gene ID" value="TraesKARUn01G0192130"/>
</dbReference>
<dbReference type="Gramene" id="TraesKARUn01G0192240.1">
    <property type="protein sequence ID" value="cds.TraesKARUn01G0192240.1"/>
    <property type="gene ID" value="TraesKARUn01G0192240"/>
</dbReference>
<dbReference type="Gramene" id="TraesKARUn01G0193860.1">
    <property type="protein sequence ID" value="cds.TraesKARUn01G0193860.1"/>
    <property type="gene ID" value="TraesKARUn01G0193860"/>
</dbReference>
<dbReference type="Gramene" id="TraesKARUn01G0194130.1">
    <property type="protein sequence ID" value="cds.TraesKARUn01G0194130.1"/>
    <property type="gene ID" value="TraesKARUn01G0194130"/>
</dbReference>
<dbReference type="Gramene" id="TraesKARUn01G0194610.1">
    <property type="protein sequence ID" value="cds.TraesKARUn01G0194610.1"/>
    <property type="gene ID" value="TraesKARUn01G0194610"/>
</dbReference>
<dbReference type="Gramene" id="TraesKARUn01G0195720.1">
    <property type="protein sequence ID" value="cds.TraesKARUn01G0195720.1"/>
    <property type="gene ID" value="TraesKARUn01G0195720"/>
</dbReference>
<dbReference type="Gramene" id="TraesKARUn01G0195730.1">
    <property type="protein sequence ID" value="cds.TraesKARUn01G0195730.1"/>
    <property type="gene ID" value="TraesKARUn01G0195730"/>
</dbReference>
<dbReference type="Gramene" id="TraesLAC2B03G00883610.1">
    <property type="protein sequence ID" value="TraesLAC2B03G00883610.1.CDS1"/>
    <property type="gene ID" value="TraesLAC2B03G00883610"/>
</dbReference>
<dbReference type="Gramene" id="TraesLAC3B03G01550040.1">
    <property type="protein sequence ID" value="TraesLAC3B03G01550040.1.CDS1"/>
    <property type="gene ID" value="TraesLAC3B03G01550040"/>
</dbReference>
<dbReference type="Gramene" id="TraesLDM3B03G01608600.1">
    <property type="protein sequence ID" value="TraesLDM3B03G01608600.1.CDS1"/>
    <property type="gene ID" value="TraesLDM3B03G01608600"/>
</dbReference>
<dbReference type="Gramene" id="TraesLDM7B03G04275480.1">
    <property type="protein sequence ID" value="TraesLDM7B03G04275480.1.CDS1"/>
    <property type="gene ID" value="TraesLDM7B03G04275480"/>
</dbReference>
<dbReference type="Gramene" id="TraesMAC3D03G01987460.1">
    <property type="protein sequence ID" value="TraesMAC3D03G01987460.1.CDS1"/>
    <property type="gene ID" value="TraesMAC3D03G01987460"/>
</dbReference>
<dbReference type="Gramene" id="TraesNOR3B03G01628770.1">
    <property type="protein sequence ID" value="TraesNOR3B03G01628770.1.CDS1"/>
    <property type="gene ID" value="TraesNOR3B03G01628770"/>
</dbReference>
<dbReference type="Gramene" id="TraesNOR5A03G02711220.1">
    <property type="protein sequence ID" value="TraesNOR5A03G02711220.1.CDS1"/>
    <property type="gene ID" value="TraesNOR5A03G02711220"/>
</dbReference>
<dbReference type="Gramene" id="TraesNOR7B03G04137400.1">
    <property type="protein sequence ID" value="TraesNOR7B03G04137400.1.CDS1"/>
    <property type="gene ID" value="TraesNOR7B03G04137400"/>
</dbReference>
<dbReference type="Gramene" id="TraesPARA_EIv1.0_2054670.1">
    <property type="protein sequence ID" value="TraesPARA_EIv1.0_2054670.1.CDS1"/>
    <property type="gene ID" value="TraesPARA_EIv1.0_2054670"/>
</dbReference>
<dbReference type="Gramene" id="TraesPARA_EIv1.0_2644740.1">
    <property type="protein sequence ID" value="TraesPARA_EIv1.0_2644740.1.CDS1"/>
    <property type="gene ID" value="TraesPARA_EIv1.0_2644740"/>
</dbReference>
<dbReference type="Gramene" id="TraesPARA_EIv1.0_2648400.1">
    <property type="protein sequence ID" value="TraesPARA_EIv1.0_2648400.1.CDS1"/>
    <property type="gene ID" value="TraesPARA_EIv1.0_2648400"/>
</dbReference>
<dbReference type="Gramene" id="TraesPARA_EIv1.0_2666530.1">
    <property type="protein sequence ID" value="TraesPARA_EIv1.0_2666530.1.CDS1"/>
    <property type="gene ID" value="TraesPARA_EIv1.0_2666530"/>
</dbReference>
<dbReference type="Gramene" id="TraesRN3B0100444700.1">
    <property type="protein sequence ID" value="TraesRN3B0100444700.1"/>
    <property type="gene ID" value="TraesRN3B0100444700"/>
</dbReference>
<dbReference type="Gramene" id="TraesRN3D0101151100.1">
    <property type="protein sequence ID" value="TraesRN3D0101151100.1"/>
    <property type="gene ID" value="TraesRN3D0101151100"/>
</dbReference>
<dbReference type="Gramene" id="TraesRN5B0100647500.1">
    <property type="protein sequence ID" value="TraesRN5B0100647500.1"/>
    <property type="gene ID" value="TraesRN5B0100647500"/>
</dbReference>
<dbReference type="Gramene" id="TraesRN5D0101109300.1">
    <property type="protein sequence ID" value="TraesRN5D0101109300.1"/>
    <property type="gene ID" value="TraesRN5D0101109300"/>
</dbReference>
<dbReference type="Gramene" id="TraesSTA3D03G01984340.1">
    <property type="protein sequence ID" value="TraesSTA3D03G01984340.1.CDS1"/>
    <property type="gene ID" value="TraesSTA3D03G01984340"/>
</dbReference>
<dbReference type="Gramene" id="TraesSYM5B03G02910000.1">
    <property type="protein sequence ID" value="TraesSYM5B03G02910000.1.CDS1"/>
    <property type="gene ID" value="TraesSYM5B03G02910000"/>
</dbReference>
<dbReference type="KEGG" id="taes:803150"/>
<dbReference type="HOGENOM" id="CLU_199882_1_0_1"/>
<dbReference type="OMA" id="IHKSLWK"/>
<dbReference type="OrthoDB" id="671523at2759"/>
<dbReference type="Proteomes" id="UP000019116">
    <property type="component" value="Chloroplast"/>
</dbReference>
<dbReference type="GO" id="GO:0009507">
    <property type="term" value="C:chloroplast"/>
    <property type="evidence" value="ECO:0007669"/>
    <property type="project" value="UniProtKB-SubCell"/>
</dbReference>
<dbReference type="GO" id="GO:0015934">
    <property type="term" value="C:large ribosomal subunit"/>
    <property type="evidence" value="ECO:0007669"/>
    <property type="project" value="InterPro"/>
</dbReference>
<dbReference type="GO" id="GO:0003735">
    <property type="term" value="F:structural constituent of ribosome"/>
    <property type="evidence" value="ECO:0007669"/>
    <property type="project" value="InterPro"/>
</dbReference>
<dbReference type="GO" id="GO:0006412">
    <property type="term" value="P:translation"/>
    <property type="evidence" value="ECO:0007669"/>
    <property type="project" value="UniProtKB-UniRule"/>
</dbReference>
<dbReference type="HAMAP" id="MF_00340">
    <property type="entry name" value="Ribosomal_bL32"/>
    <property type="match status" value="1"/>
</dbReference>
<dbReference type="InterPro" id="IPR002677">
    <property type="entry name" value="Ribosomal_bL32"/>
</dbReference>
<dbReference type="InterPro" id="IPR044958">
    <property type="entry name" value="Ribosomal_bL32_plant/cyanobact"/>
</dbReference>
<dbReference type="InterPro" id="IPR011332">
    <property type="entry name" value="Ribosomal_zn-bd"/>
</dbReference>
<dbReference type="PANTHER" id="PTHR36083">
    <property type="entry name" value="50S RIBOSOMAL PROTEIN L32, CHLOROPLASTIC"/>
    <property type="match status" value="1"/>
</dbReference>
<dbReference type="PANTHER" id="PTHR36083:SF1">
    <property type="entry name" value="LARGE RIBOSOMAL SUBUNIT PROTEIN BL32C"/>
    <property type="match status" value="1"/>
</dbReference>
<dbReference type="Pfam" id="PF01783">
    <property type="entry name" value="Ribosomal_L32p"/>
    <property type="match status" value="1"/>
</dbReference>
<dbReference type="SUPFAM" id="SSF57829">
    <property type="entry name" value="Zn-binding ribosomal proteins"/>
    <property type="match status" value="1"/>
</dbReference>
<geneLocation type="chloroplast"/>
<sequence length="63" mass="7352">MAVPKKRTSMSKKRIRKNIWKKKTYFSIVQSYSLVKSRSFSSGNEHPKPKGFSGQQTNNKIFE</sequence>
<reference key="1">
    <citation type="journal article" date="2000" name="Plant Mol. Biol. Rep.">
        <title>Chinese spring wheat (Triticum aestivum L.) chloroplast genome: complete sequence and contig clones.</title>
        <authorList>
            <person name="Ogihara Y."/>
            <person name="Isono K."/>
            <person name="Kojima T."/>
            <person name="Endo A."/>
            <person name="Hanaoka M."/>
            <person name="Shiina T."/>
            <person name="Terachi T."/>
            <person name="Utsugi S."/>
            <person name="Murata M."/>
            <person name="Mori N."/>
            <person name="Takumi S."/>
            <person name="Ikeo K."/>
            <person name="Gojobori T."/>
            <person name="Murai R."/>
            <person name="Murai K."/>
            <person name="Matsuoka Y."/>
            <person name="Ohnishi Y."/>
            <person name="Tajiri H."/>
            <person name="Tsunewaki K."/>
        </authorList>
    </citation>
    <scope>NUCLEOTIDE SEQUENCE [LARGE SCALE GENOMIC DNA]</scope>
    <source>
        <strain>cv. Chinese Spring</strain>
    </source>
</reference>
<protein>
    <recommendedName>
        <fullName evidence="1">Large ribosomal subunit protein bL32c</fullName>
    </recommendedName>
    <alternativeName>
        <fullName evidence="3">50S ribosomal protein L32, chloroplastic</fullName>
    </alternativeName>
</protein>
<proteinExistence type="inferred from homology"/>